<name>SQSTM_HUMAN</name>
<comment type="function">
    <text evidence="2 7 9 10 16 27 28 30 31 32 33 35 36 37 39 44 48 54 59 64 65 70 71 74 75 76 80 82 83 84 86 87 88 89 90">Molecular adapter required for selective macroautophagy (aggrephagy) by acting as a bridge between polyubiquitinated proteins and autophagosomes (PubMed:15340068, PubMed:15953362, PubMed:16286508, PubMed:17580304, PubMed:20168092, PubMed:22017874, PubMed:22622177, PubMed:24128730, PubMed:28404643, PubMed:29343546, PubMed:29507397, PubMed:31857589, PubMed:33509017, PubMed:34471133, PubMed:34893540, PubMed:35831301, PubMed:37306101, PubMed:37802024). Promotes the recruitment of ubiquitinated cargo proteins to autophagosomes via multiple domains that bridge proteins and organelles in different steps (PubMed:16286508, PubMed:20168092, PubMed:22622177, PubMed:24128730, PubMed:28404643, PubMed:29343546, PubMed:29507397, PubMed:34893540, PubMed:37802024). SQSTM1 first mediates the assembly and removal of ubiquitinated proteins by undergoing liquid-liquid phase separation upon binding to ubiquitinated proteins via its UBA domain, leading to the formation of insoluble cytoplasmic inclusions, known as p62 bodies (PubMed:15911346, PubMed:20168092, PubMed:22017874, PubMed:24128730, PubMed:29343546, PubMed:29507397, PubMed:31857589, PubMed:37802024). SQSTM1 then interacts with ATG8 family proteins on autophagosomes via its LIR motif, leading to p62 body recruitment to autophagosomes, followed by autophagic clearance of ubiquitinated proteins (PubMed:16286508, PubMed:17580304, PubMed:20168092, PubMed:22622177, PubMed:24128730, PubMed:28404643, PubMed:37802024). SQSTM1 is itself degraded along with its ubiquitinated cargos (PubMed:16286508, PubMed:17580304, PubMed:37802024). Also required to recruit ubiquitinated proteins to PML bodies in the nucleus (PubMed:20168092). Also involved in autophagy of peroxisomes (pexophagy) in response to reactive oxygen species (ROS) by acting as a bridge between ubiquitinated PEX5 receptor and autophagosomes (PubMed:26344566). Acts as an activator of the NFE2L2/NRF2 pathway via interaction with KEAP1: interaction inactivates the BCR(KEAP1) complex by sequestering the complex in inclusion bodies, promoting nuclear accumulation of NFE2L2/NRF2 and subsequent expression of cytoprotective genes (PubMed:20452972, PubMed:28380357, PubMed:33393215, PubMed:37306101). Promotes relocalization of 'Lys-63'-linked ubiquitinated STING1 to autophagosomes (PubMed:29496741). Involved in endosome organization by retaining vesicles in the perinuclear cloud: following ubiquitination by RNF26, attracts specific vesicle-associated adapters, forming a molecular bridge that restrains cognate vesicles in the perinuclear region and organizes the endosomal pathway for efficient cargo transport (PubMed:27368102, PubMed:33472082). Sequesters tensin TNS2 into cytoplasmic puncta, promoting TNS2 ubiquitination and proteasomal degradation (PubMed:25101860). May regulate the activation of NFKB1 by TNF-alpha, nerve growth factor (NGF) and interleukin-1 (PubMed:10356400, PubMed:10747026, PubMed:11244088, PubMed:12471037, PubMed:16079148, PubMed:19931284). May play a role in titin/TTN downstream signaling in muscle cells (PubMed:15802564). Adapter that mediates the interaction between TRAF6 and CYLD (By similarity).</text>
</comment>
<comment type="subunit">
    <text evidence="1 2 7 8 9 10 11 16 18 20 27 28 29 31 33 35 36 37 38 39 40 42 43 46 47 49 50 53 56 58 59 61 62 64 66 71 72 73 75 77 78 79 81 82 85 86 88 89 91 92 93 94 95 96">Homooligomer or heterooligomer; may form homotypic arrays (PubMed:12887891, PubMed:19931284). Dimerization interferes with ubiquitin binding (PubMed:19931284). Component of a ternary complex with PAWR and PRKCZ (PubMed:11755531). Forms a complex with JUB/Ajuba, PRKCZ and TRAF6 (PubMed:15870274). Identified in a complex with TRAF6 and CYLD (By similarity). Identified in a heterotrimeric complex with ubiquitin and ZFAND5, where ZFAND5 and SQSTM1 both interact with the same ubiquitin molecule (PubMed:21923101). Interacts (via LIR motif) with MAP1LC3A and MAP1LC3B, as well as with other ATG8 family members, including GABARAP, GABARAPL1 and GABARAPL2; these interactions are necessary for the recruitment MAP1 LC3 family members to inclusion bodies containing polyubiquitinated protein aggregates and for their degradation by autophagy (PubMed:16286508, PubMed:17580304, PubMed:22421968, PubMed:24089205, PubMed:24668264). Interacts directly with PRKCI and PRKCZ (PubMed:10356400, PubMed:12813044, PubMed:12887891, PubMed:9566925). Interacts with EBI3, LCK, RASA1, NR2F2, NTRK1, NTRK2, NTRK3, NBR1, MAP2K5 and MAPKAPK5 (PubMed:10708586, PubMed:11244088, PubMed:12471037, PubMed:8551575, PubMed:8618896, PubMed:8650207, PubMed:8910285). Upon TNF-alpha stimulation, interacts with RIPK1 probably bridging IKBKB to the TNF-R1 complex composed of TNF-R1/TNFRSF1A, TRADD and RIPK1 (PubMed:10747026). Interacts with the proteasome subunits PSMD4 and PSMC2 (PubMed:15340068). Interacts with TRAF6 (PubMed:10747026). Interacts with 'Lys-63'-linked polyubiquitinated MAPT/TAU (PubMed:15953362). Interacts with FHOD3 (PubMed:21149568). Interacts with CYLD (PubMed:32185393). Interacts with SESN1 (PubMed:23274085). Interacts with SESN2 (PubMed:23274085, PubMed:25040165). Interacts with ULK1 (PubMed:25040165). Interacts with UBD (PubMed:25422469). Interacts with WDR81; the interaction is direct and regulates the interaction of SQSTM1 with ubiquitinated proteins (PubMed:28404643). Interacts with WDFY3; this interaction is required to recruit WDFY3 to cytoplasmic bodies and to PML bodies (PubMed:20168092). Interacts with LRRC25 (PubMed:29288164). Interacts with STING1; leading to relocalization of STING1 to autophagosomes (PubMed:29496741). Interacts (when phosphorylated at Ser-349) with KEAP1; the interaction is direct and inactivates the BCR(KEAP1) complex by sequestering KEAP1 in inclusion bodies, promoting its degradation (PubMed:20452972, PubMed:20495340, PubMed:37306101). Interacts with MOAP1; promoting dissociation of SQSTM1 inclusion bodies that sequester KEAP1 (PubMed:33393215). Interacts with GBP1 (By similarity). Interacts with TAX1BP1 (PubMed:34471133). Interacts with (ubiquitinated) PEX5; specifically binds PEX5 ubiquitinated at 'Lys-209' in response to reactive oxygen species (ROS) (PubMed:26344566). Interacts (via PB1 domain) with TNS2; the interaction leads to sequestration of TNS2 in cytoplasmic aggregates with SQSTM1 and promotes TNS2 ubiquitination and proteasomal degradation (PubMed:25101860). Interacts with IRS1; the interaction is disrupted by the presence of tensin TNS2 (PubMed:25101860). Interacts with TRIM5 (PubMed:20357094, PubMed:25127057). Interacts with TRIM11 (when ubiquitinated); promoting AIM2 recruitment to autophagosomes and autophagy-dependent degradation of AIM2 (PubMed:27498865). Interacts with TRIM13 (PubMed:22178386). Interacts with TRIM16 (PubMed:30143514). Interacts with TRIM23 (PubMed:28871090). Interacts with TRIM50 (PubMed:22792322). Interacts with TRIM55 (PubMed:15802564). Interacts with ECSIT; this interaction inhibits TLR4 signaling via functional regulation of the TRAF6-ECSIT complex (PubMed:31281713). Interacts with GABRR1, GABRR2 and GABRR3 (By similarity). Interacts with WDR83 (PubMed:38103557). Interacts with GRB2 (PubMed:35831301). Interacts with USP12; the interaction is independent of USP12 deubiquitinase activity and may be involved in regulation of autophagic flux (PubMed:30266909). Interacts with ASB6 (PubMed:34164402).</text>
</comment>
<comment type="interaction">
    <interactant intactId="EBI-307104">
        <id>Q13501</id>
    </interactant>
    <interactant intactId="EBI-77613">
        <id>P05067</id>
        <label>APP</label>
    </interactant>
    <organismsDiffer>false</organismsDiffer>
    <experiments>6</experiments>
</comment>
<comment type="interaction">
    <interactant intactId="EBI-307104">
        <id>Q13501</id>
    </interactant>
    <interactant intactId="EBI-930964">
        <id>P54253</id>
        <label>ATXN1</label>
    </interactant>
    <organismsDiffer>false</organismsDiffer>
    <experiments>4</experiments>
</comment>
<comment type="interaction">
    <interactant intactId="EBI-307104">
        <id>Q13501</id>
    </interactant>
    <interactant intactId="EBI-747185">
        <id>O95817</id>
        <label>BAG3</label>
    </interactant>
    <organismsDiffer>false</organismsDiffer>
    <experiments>3</experiments>
</comment>
<comment type="interaction">
    <interactant intactId="EBI-307104">
        <id>Q13501</id>
    </interactant>
    <interactant intactId="EBI-295634">
        <id>Q16543</id>
        <label>CDC37</label>
    </interactant>
    <organismsDiffer>false</organismsDiffer>
    <experiments>8</experiments>
</comment>
<comment type="interaction">
    <interactant intactId="EBI-307104">
        <id>Q13501</id>
    </interactant>
    <interactant intactId="EBI-751440">
        <id>P57739</id>
        <label>CLDN2</label>
    </interactant>
    <organismsDiffer>false</organismsDiffer>
    <experiments>4</experiments>
</comment>
<comment type="interaction">
    <interactant intactId="EBI-307104">
        <id>Q13501</id>
    </interactant>
    <interactant intactId="EBI-2835940">
        <id>P34972</id>
        <label>CNR2</label>
    </interactant>
    <organismsDiffer>false</organismsDiffer>
    <experiments>5</experiments>
</comment>
<comment type="interaction">
    <interactant intactId="EBI-307104">
        <id>Q13501</id>
    </interactant>
    <interactant intactId="EBI-724310">
        <id>Q15038</id>
        <label>DAZAP2</label>
    </interactant>
    <organismsDiffer>false</organismsDiffer>
    <experiments>4</experiments>
</comment>
<comment type="interaction">
    <interactant intactId="EBI-307104">
        <id>Q13501</id>
    </interactant>
    <interactant intactId="EBI-25840445">
        <id>O14576-2</id>
        <label>DYNC1I1</label>
    </interactant>
    <organismsDiffer>false</organismsDiffer>
    <experiments>3</experiments>
</comment>
<comment type="interaction">
    <interactant intactId="EBI-307104">
        <id>Q13501</id>
    </interactant>
    <interactant intactId="EBI-6425462">
        <id>O14682</id>
        <label>ENC1</label>
    </interactant>
    <organismsDiffer>false</organismsDiffer>
    <experiments>7</experiments>
</comment>
<comment type="interaction">
    <interactant intactId="EBI-307104">
        <id>Q13501</id>
    </interactant>
    <interactant intactId="EBI-6395541">
        <id>Q2V2M9</id>
        <label>FHOD3</label>
    </interactant>
    <organismsDiffer>false</organismsDiffer>
    <experiments>6</experiments>
</comment>
<comment type="interaction">
    <interactant intactId="EBI-307104">
        <id>Q13501</id>
    </interactant>
    <interactant intactId="EBI-6395505">
        <id>Q2V2M9-4</id>
        <label>FHOD3</label>
    </interactant>
    <organismsDiffer>false</organismsDiffer>
    <experiments>4</experiments>
</comment>
<comment type="interaction">
    <interactant intactId="EBI-307104">
        <id>Q13501</id>
    </interactant>
    <interactant intactId="EBI-712001">
        <id>O95166</id>
        <label>GABARAP</label>
    </interactant>
    <organismsDiffer>false</organismsDiffer>
    <experiments>17</experiments>
</comment>
<comment type="interaction">
    <interactant intactId="EBI-307104">
        <id>Q13501</id>
    </interactant>
    <interactant intactId="EBI-746969">
        <id>Q9H0R8</id>
        <label>GABARAPL1</label>
    </interactant>
    <organismsDiffer>false</organismsDiffer>
    <experiments>18</experiments>
</comment>
<comment type="interaction">
    <interactant intactId="EBI-307104">
        <id>Q13501</id>
    </interactant>
    <interactant intactId="EBI-720116">
        <id>P60520</id>
        <label>GABARAPL2</label>
    </interactant>
    <organismsDiffer>false</organismsDiffer>
    <experiments>24</experiments>
</comment>
<comment type="interaction">
    <interactant intactId="EBI-307104">
        <id>Q13501</id>
    </interactant>
    <interactant intactId="EBI-11052499">
        <id>P0DMV8</id>
        <label>HSPA1A</label>
    </interactant>
    <organismsDiffer>false</organismsDiffer>
    <experiments>3</experiments>
</comment>
<comment type="interaction">
    <interactant intactId="EBI-307104">
        <id>Q13501</id>
    </interactant>
    <interactant intactId="EBI-466029">
        <id>P42858</id>
        <label>HTT</label>
    </interactant>
    <organismsDiffer>false</organismsDiffer>
    <experiments>11</experiments>
</comment>
<comment type="interaction">
    <interactant intactId="EBI-307104">
        <id>Q13501</id>
    </interactant>
    <interactant intactId="EBI-81279">
        <id>Q9Y6K9</id>
        <label>IKBKG</label>
    </interactant>
    <organismsDiffer>false</organismsDiffer>
    <experiments>2</experiments>
</comment>
<comment type="interaction">
    <interactant intactId="EBI-307104">
        <id>Q13501</id>
    </interactant>
    <interactant intactId="EBI-751001">
        <id>Q14145</id>
        <label>KEAP1</label>
    </interactant>
    <organismsDiffer>false</organismsDiffer>
    <experiments>21</experiments>
</comment>
<comment type="interaction">
    <interactant intactId="EBI-307104">
        <id>Q13501</id>
    </interactant>
    <interactant intactId="EBI-5323863">
        <id>Q5S007</id>
        <label>LRRK2</label>
    </interactant>
    <organismsDiffer>false</organismsDiffer>
    <experiments>18</experiments>
</comment>
<comment type="interaction">
    <interactant intactId="EBI-307104">
        <id>Q13501</id>
    </interactant>
    <interactant intactId="EBI-1047372">
        <id>Q9UDY8</id>
        <label>MALT1</label>
    </interactant>
    <organismsDiffer>false</organismsDiffer>
    <experiments>2</experiments>
</comment>
<comment type="interaction">
    <interactant intactId="EBI-307104">
        <id>Q13501</id>
    </interactant>
    <interactant intactId="EBI-720768">
        <id>Q9H492</id>
        <label>MAP1LC3A</label>
    </interactant>
    <organismsDiffer>false</organismsDiffer>
    <experiments>16</experiments>
</comment>
<comment type="interaction">
    <interactant intactId="EBI-307104">
        <id>Q13501</id>
    </interactant>
    <interactant intactId="EBI-373144">
        <id>Q9GZQ8</id>
        <label>MAP1LC3B</label>
    </interactant>
    <organismsDiffer>false</organismsDiffer>
    <experiments>31</experiments>
</comment>
<comment type="interaction">
    <interactant intactId="EBI-307104">
        <id>Q13501</id>
    </interactant>
    <interactant intactId="EBI-2603996">
        <id>Q9BXW4</id>
        <label>MAP1LC3C</label>
    </interactant>
    <organismsDiffer>false</organismsDiffer>
    <experiments>8</experiments>
</comment>
<comment type="interaction">
    <interactant intactId="EBI-307104">
        <id>Q13501</id>
    </interactant>
    <interactant intactId="EBI-307294">
        <id>Q13163</id>
        <label>MAP2K5</label>
    </interactant>
    <organismsDiffer>false</organismsDiffer>
    <experiments>5</experiments>
</comment>
<comment type="interaction">
    <interactant intactId="EBI-307104">
        <id>Q13501</id>
    </interactant>
    <interactant intactId="EBI-742698">
        <id>Q14596</id>
        <label>NBR1</label>
    </interactant>
    <organismsDiffer>false</organismsDiffer>
    <experiments>7</experiments>
</comment>
<comment type="interaction">
    <interactant intactId="EBI-307104">
        <id>Q13501</id>
    </interactant>
    <interactant intactId="EBI-307125">
        <id>Q9BPW8</id>
        <label>NIPSNAP1</label>
    </interactant>
    <organismsDiffer>false</organismsDiffer>
    <experiments>3</experiments>
</comment>
<comment type="interaction">
    <interactant intactId="EBI-307104">
        <id>Q13501</id>
    </interactant>
    <interactant intactId="EBI-1028226">
        <id>P04629</id>
        <label>NTRK1</label>
    </interactant>
    <organismsDiffer>false</organismsDiffer>
    <experiments>2</experiments>
</comment>
<comment type="interaction">
    <interactant intactId="EBI-307104">
        <id>Q13501</id>
    </interactant>
    <interactant intactId="EBI-748974">
        <id>Q96CV9</id>
        <label>OPTN</label>
    </interactant>
    <organismsDiffer>false</organismsDiffer>
    <experiments>7</experiments>
</comment>
<comment type="interaction">
    <interactant intactId="EBI-307104">
        <id>Q13501</id>
    </interactant>
    <interactant intactId="EBI-12181987">
        <id>P50542-3</id>
        <label>PEX5</label>
    </interactant>
    <organismsDiffer>false</organismsDiffer>
    <experiments>2</experiments>
</comment>
<comment type="interaction">
    <interactant intactId="EBI-307104">
        <id>Q13501</id>
    </interactant>
    <interactant intactId="EBI-2959705">
        <id>Q9UGJ0</id>
        <label>PRKAG2</label>
    </interactant>
    <organismsDiffer>false</organismsDiffer>
    <experiments>3</experiments>
</comment>
<comment type="interaction">
    <interactant intactId="EBI-307104">
        <id>Q13501</id>
    </interactant>
    <interactant intactId="EBI-286199">
        <id>P41743</id>
        <label>PRKCI</label>
    </interactant>
    <organismsDiffer>false</organismsDiffer>
    <experiments>11</experiments>
</comment>
<comment type="interaction">
    <interactant intactId="EBI-307104">
        <id>Q13501</id>
    </interactant>
    <interactant intactId="EBI-355227">
        <id>Q12923</id>
        <label>PTPN13</label>
    </interactant>
    <organismsDiffer>false</organismsDiffer>
    <experiments>2</experiments>
</comment>
<comment type="interaction">
    <interactant intactId="EBI-307104">
        <id>Q13501</id>
    </interactant>
    <interactant intactId="EBI-746453">
        <id>P54725</id>
        <label>RAD23A</label>
    </interactant>
    <organismsDiffer>false</organismsDiffer>
    <experiments>3</experiments>
</comment>
<comment type="interaction">
    <interactant intactId="EBI-307104">
        <id>Q13501</id>
    </interactant>
    <interactant intactId="EBI-3939642">
        <id>P58004</id>
        <label>SESN2</label>
    </interactant>
    <organismsDiffer>false</organismsDiffer>
    <experiments>9</experiments>
</comment>
<comment type="interaction">
    <interactant intactId="EBI-307104">
        <id>Q13501</id>
    </interactant>
    <interactant intactId="EBI-346595">
        <id>Q96B97</id>
        <label>SH3KBP1</label>
    </interactant>
    <organismsDiffer>false</organismsDiffer>
    <experiments>4</experiments>
</comment>
<comment type="interaction">
    <interactant intactId="EBI-307104">
        <id>Q13501</id>
    </interactant>
    <interactant intactId="EBI-347161">
        <id>P84022</id>
        <label>SMAD3</label>
    </interactant>
    <organismsDiffer>false</organismsDiffer>
    <experiments>3</experiments>
</comment>
<comment type="interaction">
    <interactant intactId="EBI-307104">
        <id>Q13501</id>
    </interactant>
    <interactant intactId="EBI-985879">
        <id>P37840</id>
        <label>SNCA</label>
    </interactant>
    <organismsDiffer>false</organismsDiffer>
    <experiments>3</experiments>
</comment>
<comment type="interaction">
    <interactant intactId="EBI-307104">
        <id>Q13501</id>
    </interactant>
    <interactant intactId="EBI-307104">
        <id>Q13501</id>
        <label>SQSTM1</label>
    </interactant>
    <organismsDiffer>false</organismsDiffer>
    <experiments>10</experiments>
</comment>
<comment type="interaction">
    <interactant intactId="EBI-307104">
        <id>Q13501</id>
    </interactant>
    <interactant intactId="EBI-357085">
        <id>Q9UNE7</id>
        <label>STUB1</label>
    </interactant>
    <organismsDiffer>false</organismsDiffer>
    <experiments>3</experiments>
</comment>
<comment type="interaction">
    <interactant intactId="EBI-307104">
        <id>Q13501</id>
    </interactant>
    <interactant intactId="EBI-359276">
        <id>Q9Y4K3</id>
        <label>TRAF6</label>
    </interactant>
    <organismsDiffer>false</organismsDiffer>
    <experiments>4</experiments>
</comment>
<comment type="interaction">
    <interactant intactId="EBI-307104">
        <id>Q13501</id>
    </interactant>
    <interactant intactId="EBI-350864">
        <id>P07437</id>
        <label>TUBB</label>
    </interactant>
    <organismsDiffer>false</organismsDiffer>
    <experiments>4</experiments>
</comment>
<comment type="interaction">
    <interactant intactId="EBI-307104">
        <id>Q13501</id>
    </interactant>
    <interactant intactId="EBI-3390054">
        <id>P0CG48</id>
        <label>UBC</label>
    </interactant>
    <organismsDiffer>false</organismsDiffer>
    <experiments>3</experiments>
</comment>
<comment type="interaction">
    <interactant intactId="EBI-307104">
        <id>Q13501</id>
    </interactant>
    <interactant intactId="EBI-286357">
        <id>P11473</id>
        <label>VDR</label>
    </interactant>
    <organismsDiffer>false</organismsDiffer>
    <experiments>4</experiments>
</comment>
<comment type="interaction">
    <interactant intactId="EBI-307104">
        <id>Q13501</id>
    </interactant>
    <interactant intactId="EBI-11141397">
        <id>Q9UBQ0-2</id>
        <label>VPS29</label>
    </interactant>
    <organismsDiffer>false</organismsDiffer>
    <experiments>3</experiments>
</comment>
<comment type="interaction">
    <interactant intactId="EBI-307104">
        <id>Q13501</id>
    </interactant>
    <interactant intactId="EBI-1569256">
        <id>Q8IZQ1</id>
        <label>WDFY3</label>
    </interactant>
    <organismsDiffer>false</organismsDiffer>
    <experiments>7</experiments>
</comment>
<comment type="interaction">
    <interactant intactId="EBI-307104">
        <id>Q13501</id>
    </interactant>
    <interactant intactId="EBI-11745701">
        <id>P19544-6</id>
        <label>WT1</label>
    </interactant>
    <organismsDiffer>false</organismsDiffer>
    <experiments>3</experiments>
</comment>
<comment type="interaction">
    <interactant intactId="EBI-307104">
        <id>Q13501</id>
    </interactant>
    <interactant intactId="EBI-707773">
        <id>P17028</id>
        <label>ZNF24</label>
    </interactant>
    <organismsDiffer>false</organismsDiffer>
    <experiments>3</experiments>
</comment>
<comment type="interaction">
    <interactant intactId="EBI-307104">
        <id>Q13501</id>
    </interactant>
    <interactant intactId="EBI-25877771">
        <id>A8K2U6</id>
    </interactant>
    <organismsDiffer>false</organismsDiffer>
    <experiments>3</experiments>
</comment>
<comment type="interaction">
    <interactant intactId="EBI-307104">
        <id>Q13501</id>
    </interactant>
    <interactant intactId="EBI-2684">
        <id>P38182</id>
        <label>ATG8</label>
    </interactant>
    <organismsDiffer>true</organismsDiffer>
    <experiments>3</experiments>
</comment>
<comment type="interaction">
    <interactant intactId="EBI-307104">
        <id>Q13501</id>
    </interactant>
    <interactant intactId="EBI-647110">
        <id>Q9Z2X8</id>
        <label>Keap1</label>
    </interactant>
    <organismsDiffer>true</organismsDiffer>
    <experiments>2</experiments>
</comment>
<comment type="interaction">
    <interactant intactId="EBI-307104">
        <id>Q13501</id>
    </interactant>
    <interactant intactId="EBI-346715">
        <id>P28700</id>
        <label>Rxra</label>
    </interactant>
    <organismsDiffer>true</organismsDiffer>
    <experiments>3</experiments>
</comment>
<comment type="interaction">
    <interactant intactId="EBI-307104">
        <id>Q13501</id>
    </interactant>
    <interactant intactId="EBI-8390771">
        <id>O70405</id>
        <label>Ulk1</label>
    </interactant>
    <organismsDiffer>true</organismsDiffer>
    <experiments>2</experiments>
</comment>
<comment type="interaction">
    <interactant intactId="EBI-307104">
        <id>Q13501</id>
    </interactant>
    <interactant intactId="EBI-779991">
        <id>P12504</id>
        <label>vif</label>
    </interactant>
    <organismsDiffer>true</organismsDiffer>
    <experiments>2</experiments>
</comment>
<comment type="subcellular location">
    <subcellularLocation>
        <location evidence="31 33 35 37 90">Cytoplasmic vesicle</location>
        <location evidence="31 33 35 37 90">Autophagosome</location>
    </subcellularLocation>
    <subcellularLocation>
        <location evidence="86">Preautophagosomal structure</location>
    </subcellularLocation>
    <subcellularLocation>
        <location evidence="12 13 37 38 43 44 49 74 76 80 89 90">Cytoplasm</location>
        <location evidence="12 13 37 38 43 44 49 74 76 80 89 90">Cytosol</location>
    </subcellularLocation>
    <subcellularLocation>
        <location evidence="37">Nucleus</location>
        <location evidence="37">PML body</location>
    </subcellularLocation>
    <subcellularLocation>
        <location evidence="16 96">Late endosome</location>
    </subcellularLocation>
    <subcellularLocation>
        <location evidence="96">Lysosome</location>
    </subcellularLocation>
    <subcellularLocation>
        <location evidence="8">Nucleus</location>
    </subcellularLocation>
    <subcellularLocation>
        <location evidence="46">Endoplasmic reticulum</location>
    </subcellularLocation>
    <subcellularLocation>
        <location evidence="1">Cytoplasm</location>
        <location evidence="1">Myofibril</location>
        <location evidence="1">Sarcomere</location>
    </subcellularLocation>
    <text evidence="1 12 13 24 31 35 37 38 44 46 74 76 80 89 90">In cardiac muscle, localizes to the sarcomeric band (By similarity). Localizes to cytoplasmic membraneless inclusion bodies, known as p62 bodies, containing polyubiquitinated protein aggregates (PubMed:11786419, PubMed:20357094, PubMed:22017874, PubMed:29343546, PubMed:29507397, PubMed:31857589, PubMed:37306101, PubMed:37802024). In neurodegenerative diseases, detected in Lewy bodies in Parkinson disease, neurofibrillary tangles in Alzheimer disease, and HTT aggregates in Huntington disease (PubMed:15158159). In protein aggregate diseases of the liver, found in large amounts in Mallory bodies of alcoholic and nonalcoholic steatohepatitis, hyaline bodies in hepatocellular carcinoma, and in SERPINA1 aggregates (PubMed:11981755). Enriched in Rosenthal fibers of pilocytic astrocytoma (PubMed:11786419). In the cytoplasm, observed in both membrane-free ubiquitin-containing protein aggregates (sequestosomes) and membrane-surrounded autophagosomes (PubMed:15953362, PubMed:17580304). Colocalizes with TRIM13 in the perinuclear endoplasmic reticulum (PubMed:22178386). Co-localizes with TRIM5 in cytoplasmic bodies (PubMed:20357094). When nuclear export is blocked by treatment with leptomycin B, accumulates in PML bodies (PubMed:20168092).</text>
</comment>
<comment type="alternative products">
    <event type="alternative splicing"/>
    <isoform>
        <id>Q13501-1</id>
        <name>1</name>
        <sequence type="displayed"/>
    </isoform>
    <isoform>
        <id>Q13501-2</id>
        <name>2</name>
        <sequence type="described" ref="VSP_015841"/>
    </isoform>
</comment>
<comment type="tissue specificity">
    <text evidence="94">Ubiquitously expressed.</text>
</comment>
<comment type="developmental stage">
    <text evidence="59">During myogenesis, there is a marked increase in levels in fully differentiated myotubes compared to undifferentiated myoblasts.</text>
</comment>
<comment type="induction">
    <text evidence="17 30 39 97">By proteasomal inhibitor PSI and prostaglandin J2 (PGJ2) (at protein level). By phorbol 12-myristate 13-acetate (PMA). Expression is directly activated by NFE2L2/NRF2; creating a positive feedback loop (PubMed:20452972).</text>
</comment>
<comment type="domain">
    <text evidence="19 27 28 69 80">The UBA domain binds specifically 'Lys-63'-linked polyubiquitin chains of polyubiquitinated substrates (PubMed:12857745, PubMed:15340068, PubMed:28322253, PubMed:31857589). Mediates the interaction with TRIM55 (PubMed:15802564). Both the UBA and PB1 domains are necessary and sufficient for the localization into the ubiquitin-containing inclusion bodies (PubMed:15802564).</text>
</comment>
<comment type="domain">
    <text evidence="18 20 28 71">The PB1 domain mediates homooligomerization and interactions with FHOD3, MAP2K5, NBR1, PRKCI, PRKCZ and WDR81 (PubMed:12813044, PubMed:12887891, PubMed:15802564, PubMed:28404643). Both the PB1 and UBA domains are necessary and sufficient for the localization into the ubiquitin-containing inclusion bodies (PubMed:15802564).</text>
</comment>
<comment type="domain">
    <text evidence="9">The ZZ-type zinc finger mediates the interaction with RIPK1.</text>
</comment>
<comment type="domain">
    <text evidence="51">The LIR (LC3-interacting region) motif mediates the interaction with ATG8 family proteins.</text>
</comment>
<comment type="PTM">
    <text evidence="2 28 44 58 75 89">Phosphorylation at Ser-407 by ULK1 destabilizes the UBA dimer interface and increases binding affinity to ubiquitinated proteins (By similarity). Phosphorylation at Ser-407 also primes for subsequent phosphorylation at Ser-403 (By similarity). Phosphorylation at Ser-403 by CK2 or ULK1 promotes binding to ubiquitinated proteins by increasing the affinity between the UBA domain and polyubiquitin chains (PubMed:22017874, PubMed:25040165). Phosphorylation at Ser-403 by ULK1 is stimulated by SESN2 (PubMed:25040165). Phosphorylated at Ser-403 by TBK1, leading to promote relocalization of 'Lys-63'-linked ubiquitinated STING1 to autophagosomes (PubMed:29496741). Phosphorylation at Ser-349 by ULK1 promotes interaction with KEAP1 and inactivation of the BCR(KEAP1) complex, promoting NFE2L2/NRF2 nuclear accumulation and expression of phase II detoxifying enzymes (PubMed:37306101). Phosphorylated in vitro by TTN (PubMed:15802564).</text>
</comment>
<comment type="PTM">
    <text evidence="65 68 69 70 83">Ubiquitinated by UBE2J1 and RNF26 at Lys-435: ubiquitinated SQSTM1 attracts specific vesicle-associated adapters, forming a molecular bridge that restrains cognate vesicles in the perinuclear region and organizes the endosomal pathway for efficient cargo transport (PubMed:27368102, PubMed:33472082). Ubiquitination by UBE2D2 and UBE2D3 increases its ability to bind polyubiquitin chains by destabilizing the UBA dimer interface (PubMed:28322253). Deubiquitination by USP15 releases target vesicles for fast transport into the cell periphery (PubMed:27368102). Ubiquitinated by the BCR(KEAP1) complex at Lys-420, increasing SQSTM1 sequestering activity and promoting its degradation (PubMed:28380357). Ubiquitinated via 'Lys-29' and 'Lys-33'-linked polyubiquitination leading to xenophagic targeting of bacteria and inhibition of their replication (PubMed:27880896).</text>
</comment>
<comment type="PTM">
    <text evidence="80">Acetylated at Lys-420 and Lys-435 by KAT5/TIP60, promotes activity by destabilizing the UBA dimer interface and increases binding affinity to ubiquitinated proteins (PubMed:31857589). Deacetylated by HDAC6 (PubMed:31857589).</text>
</comment>
<comment type="PTM">
    <text evidence="90">Palmitoylation at Cys-289 and Cys-290 by ZDHHC19 is required for efficient autophagic degradation of SQSTM1-cargo complexes by promoting affinity for ATG8 proteins and recruitment of p62 bodies to autophagosomes (PubMed:37802024). Dealmitoylated at Cys-289 and Cys-290 by LYPLA1 (PubMed:37802024).</text>
</comment>
<comment type="PTM">
    <text evidence="55">(Microbial infection) Cleaved by S.pyogenes SpeB protease; leading to its degradation (PubMed:24331465). Degradation by SpeB prevents autophagy, promoting to S.pyogenes intracellular replication (PubMed:24331465).</text>
</comment>
<comment type="PTM">
    <text evidence="84">(Microbial infection) Deubiquitinated by Epstein-Barr virus BPLF1; leading to inhibition of the recruitment of MAP1LC3A/LC3 to SQSTM1-positive structures.</text>
</comment>
<comment type="disease" evidence="14 15 21 22 23 25 26 36 76">
    <disease id="DI-04539">
        <name>Paget disease of bone 3</name>
        <acronym>PDB3</acronym>
        <description>A disorder of bone remodeling characterized by increased bone turnover affecting one or more sites throughout the skeleton, primarily the axial skeleton. Osteoclastic overactivity followed by compensatory osteoblastic activity leads to a structurally disorganized mosaic of bone (woven bone), which is mechanically weaker, larger, less compact, more vascular, and more susceptible to fracture than normal adult lamellar bone.</description>
        <dbReference type="MIM" id="167250"/>
    </disease>
    <text>The disease is caused by variants affecting the gene represented in this entry.</text>
</comment>
<comment type="disease">
    <text evidence="33">In a cell model for Huntington disease (HD), appears to form a shell surrounding aggregates of mutant HTT that may protect cells from apoptosis, possibly by recruiting autophagosomal components to the polyubiquitinated protein aggregates.</text>
</comment>
<comment type="disease" evidence="45 52 57 60">
    <disease id="DI-04471">
        <name>Frontotemporal dementia and/or amyotrophic lateral sclerosis 3</name>
        <acronym>FTDALS3</acronym>
        <description>A neurodegenerative disorder characterized by frontotemporal dementia and/or amyotrophic lateral sclerosis in affected individuals. There is high intrafamilial variation. Frontotemporal dementia is characterized by frontal and temporal lobe atrophy associated with neuronal loss, gliosis, and dementia. Patients exhibit progressive changes in social, behavioral, and/or language function. Amyotrophic lateral sclerosis is characterized by the death of motor neurons in the brain, brainstem, and spinal cord, resulting in fatal paralysis. Some FTDALS3 patients may also develop Paget disease of bone.</description>
        <dbReference type="MIM" id="616437"/>
    </disease>
    <text>The disease is caused by variants affecting the gene represented in this entry.</text>
</comment>
<comment type="disease" evidence="67">
    <disease id="DI-04862">
        <name>Neurodegeneration with ataxia, dystonia, and gaze palsy, childhood-onset</name>
        <acronym>NADGP</acronym>
        <description>A neurodegenerative disorder characterized by gait abnormalities, ataxia, dysarthria, dystonia, vertical gaze palsy, and cognitive decline. Disease onset is in childhood or adolescence. NADGP transmission pattern is consistent with autosomal recessive inheritance.</description>
        <dbReference type="MIM" id="617145"/>
    </disease>
    <text>The disease is caused by variants affecting the gene represented in this entry.</text>
</comment>
<comment type="disease" evidence="63">
    <disease id="DI-04886">
        <name>Myopathy, distal, with rimmed vacuoles</name>
        <acronym>DMRV</acronym>
        <description>An autosomal dominant myopathy with adult onset, characterized by muscle weakness of the distal upper and lower limbs, walking difficulties, and proximal weakness of the shoulder girdle muscles. Muscle biopsy shows rimmed vacuoles.</description>
        <dbReference type="MIM" id="617158"/>
    </disease>
    <text>The disease is caused by variants affecting the gene represented in this entry.</text>
</comment>
<comment type="disease">
    <text evidence="41">A chromosomal aberration involving SQSTM1 is found in a form of acute lymphoblastic leukemia. Translocation t(5;9)(q35;q34) with NUP214.</text>
</comment>
<sequence length="440" mass="47687">MASLTVKAYLLGKEDAAREIRRFSFCCSPEPEAEAEAAAGPGPCERLLSRVAALFPALRPGGFQAHYRDEDGDLVAFSSDEELTMAMSYVKDDIFRIYIKEKKECRRDHRPPCAQEAPRNMVHPNVICDGCNGPVVGTRYKCSVCPDYDLCSVCEGKGLHRGHTKLAFPSPFGHLSEGFSHSRWLRKVKHGHFGWPGWEMGPPGNWSPRPPRAGEARPGPTAESASGPSEDPSVNFLKNVGESVAAALSPLGIEVDIDVEHGGKRSRLTPVSPESSSTEEKSSSQPSSCCSDPSKPGGNVEGATQSLAEQMRKIALESEGRPEEQMESDNCSGGDDDWTHLSSKEVDPSTGELQSLQMPESEGPSSLDPSQEGPTGLKEAALYPHLPPEADPRLIESLSQMLSMGFSDEGGWLTRLLQTKNYDIGAALDTIQYSKHPPPL</sequence>
<organism evidence="106">
    <name type="scientific">Homo sapiens</name>
    <name type="common">Human</name>
    <dbReference type="NCBI Taxonomy" id="9606"/>
    <lineage>
        <taxon>Eukaryota</taxon>
        <taxon>Metazoa</taxon>
        <taxon>Chordata</taxon>
        <taxon>Craniata</taxon>
        <taxon>Vertebrata</taxon>
        <taxon>Euteleostomi</taxon>
        <taxon>Mammalia</taxon>
        <taxon>Eutheria</taxon>
        <taxon>Euarchontoglires</taxon>
        <taxon>Primates</taxon>
        <taxon>Haplorrhini</taxon>
        <taxon>Catarrhini</taxon>
        <taxon>Hominidae</taxon>
        <taxon>Homo</taxon>
    </lineage>
</organism>
<protein>
    <recommendedName>
        <fullName evidence="104">Sequestosome-1</fullName>
    </recommendedName>
    <alternativeName>
        <fullName evidence="102">EBI3-associated protein of 60 kDa</fullName>
        <shortName>EBIAP</shortName>
        <shortName evidence="102">p60</shortName>
    </alternativeName>
    <alternativeName>
        <fullName evidence="103">Phosphotyrosine-independent ligand for the Lck SH2 domain of 62 kDa</fullName>
    </alternativeName>
    <alternativeName>
        <fullName evidence="103">Ubiquitin-binding protein p62</fullName>
        <shortName evidence="101">p62</shortName>
    </alternativeName>
</protein>
<gene>
    <name evidence="100 105" type="primary">SQSTM1</name>
    <name type="synonym">ORCA</name>
    <name type="synonym">OSIL</name>
</gene>
<feature type="initiator methionine" description="Removed" evidence="115">
    <location>
        <position position="1"/>
    </location>
</feature>
<feature type="chain" id="PRO_0000072176" description="Sequestosome-1">
    <location>
        <begin position="2"/>
        <end position="440"/>
    </location>
</feature>
<feature type="domain" description="PB1" evidence="5">
    <location>
        <begin position="3"/>
        <end position="102"/>
    </location>
</feature>
<feature type="domain" description="UBA" evidence="3">
    <location>
        <begin position="389"/>
        <end position="434"/>
    </location>
</feature>
<feature type="zinc finger region" description="ZZ-type" evidence="4">
    <location>
        <begin position="123"/>
        <end position="173"/>
    </location>
</feature>
<feature type="region of interest" description="Interaction with LCK" evidence="94">
    <location>
        <begin position="2"/>
        <end position="50"/>
    </location>
</feature>
<feature type="region of interest" description="Interaction with PRKCZ and dimerization" evidence="1">
    <location>
        <begin position="43"/>
        <end position="107"/>
    </location>
</feature>
<feature type="region of interest" description="Interaction with PAWR" evidence="11">
    <location>
        <begin position="50"/>
        <end position="80"/>
    </location>
</feature>
<feature type="region of interest" description="Interaction with GABRR3" evidence="1">
    <location>
        <begin position="122"/>
        <end position="224"/>
    </location>
</feature>
<feature type="region of interest" description="LIM protein-binding (LB)">
    <location>
        <begin position="170"/>
        <end position="220"/>
    </location>
</feature>
<feature type="region of interest" description="Disordered" evidence="6">
    <location>
        <begin position="196"/>
        <end position="235"/>
    </location>
</feature>
<feature type="region of interest" description="Disordered" evidence="6">
    <location>
        <begin position="264"/>
        <end position="390"/>
    </location>
</feature>
<feature type="region of interest" description="Interaction with NTRK1" evidence="1">
    <location>
        <begin position="269"/>
        <end position="440"/>
    </location>
</feature>
<feature type="region of interest" description="MAP1LC3B-binding" evidence="35">
    <location>
        <begin position="321"/>
        <end position="342"/>
    </location>
</feature>
<feature type="region of interest" description="Interaction with KEAP1" evidence="39">
    <location>
        <begin position="347"/>
        <end position="352"/>
    </location>
</feature>
<feature type="short sequence motif" description="TRAF6-binding">
    <location>
        <begin position="228"/>
        <end position="233"/>
    </location>
</feature>
<feature type="short sequence motif" description="LIR">
    <location>
        <begin position="336"/>
        <end position="341"/>
    </location>
</feature>
<feature type="compositionally biased region" description="Low complexity" evidence="6">
    <location>
        <begin position="283"/>
        <end position="296"/>
    </location>
</feature>
<feature type="compositionally biased region" description="Basic and acidic residues" evidence="6">
    <location>
        <begin position="310"/>
        <end position="324"/>
    </location>
</feature>
<feature type="compositionally biased region" description="Basic and acidic residues" evidence="6">
    <location>
        <begin position="337"/>
        <end position="347"/>
    </location>
</feature>
<feature type="compositionally biased region" description="Polar residues" evidence="6">
    <location>
        <begin position="351"/>
        <end position="373"/>
    </location>
</feature>
<feature type="binding site" evidence="4">
    <location>
        <position position="128"/>
    </location>
    <ligand>
        <name>Zn(2+)</name>
        <dbReference type="ChEBI" id="CHEBI:29105"/>
        <label>1</label>
    </ligand>
</feature>
<feature type="binding site" evidence="4">
    <location>
        <position position="131"/>
    </location>
    <ligand>
        <name>Zn(2+)</name>
        <dbReference type="ChEBI" id="CHEBI:29105"/>
        <label>1</label>
    </ligand>
</feature>
<feature type="binding site" evidence="4">
    <location>
        <position position="142"/>
    </location>
    <ligand>
        <name>Zn(2+)</name>
        <dbReference type="ChEBI" id="CHEBI:29105"/>
        <label>2</label>
    </ligand>
</feature>
<feature type="binding site" evidence="4">
    <location>
        <position position="145"/>
    </location>
    <ligand>
        <name>Zn(2+)</name>
        <dbReference type="ChEBI" id="CHEBI:29105"/>
        <label>2</label>
    </ligand>
</feature>
<feature type="binding site" evidence="4">
    <location>
        <position position="151"/>
    </location>
    <ligand>
        <name>Zn(2+)</name>
        <dbReference type="ChEBI" id="CHEBI:29105"/>
        <label>1</label>
    </ligand>
</feature>
<feature type="binding site" evidence="4">
    <location>
        <position position="154"/>
    </location>
    <ligand>
        <name>Zn(2+)</name>
        <dbReference type="ChEBI" id="CHEBI:29105"/>
        <label>1</label>
    </ligand>
</feature>
<feature type="binding site" evidence="4">
    <location>
        <position position="160"/>
    </location>
    <ligand>
        <name>Zn(2+)</name>
        <dbReference type="ChEBI" id="CHEBI:29105"/>
        <label>2</label>
    </ligand>
</feature>
<feature type="binding site" evidence="4">
    <location>
        <position position="163"/>
    </location>
    <ligand>
        <name>Zn(2+)</name>
        <dbReference type="ChEBI" id="CHEBI:29105"/>
        <label>2</label>
    </ligand>
</feature>
<feature type="site" description="Breakpoint for translocation to form the NUP214-SQSTM1 fusion protein" evidence="41">
    <location>
        <begin position="252"/>
        <end position="253"/>
    </location>
</feature>
<feature type="modified residue" description="N-acetylalanine" evidence="115">
    <location>
        <position position="2"/>
    </location>
</feature>
<feature type="modified residue" description="Phosphoserine" evidence="44 117">
    <location>
        <position position="24"/>
    </location>
</feature>
<feature type="modified residue" description="Phosphotyrosine" evidence="107">
    <location>
        <position position="148"/>
    </location>
</feature>
<feature type="modified residue" description="Phosphoserine" evidence="110 113 116">
    <location>
        <position position="170"/>
    </location>
</feature>
<feature type="modified residue" description="Phosphoserine" evidence="117">
    <location>
        <position position="176"/>
    </location>
</feature>
<feature type="modified residue" description="Phosphoserine" evidence="44 113">
    <location>
        <position position="207"/>
    </location>
</feature>
<feature type="modified residue" description="Phosphoserine" evidence="117">
    <location>
        <position position="233"/>
    </location>
</feature>
<feature type="modified residue" description="Phosphoserine" evidence="113">
    <location>
        <position position="249"/>
    </location>
</feature>
<feature type="modified residue" description="Phosphoserine" evidence="113">
    <location>
        <position position="266"/>
    </location>
</feature>
<feature type="modified residue" description="Phosphothreonine" evidence="44 108 110 111 116">
    <location>
        <position position="269"/>
    </location>
</feature>
<feature type="modified residue" description="Phosphoserine" evidence="44 108 110 111 113 114 116">
    <location>
        <position position="272"/>
    </location>
</feature>
<feature type="modified residue" description="Phosphoserine" evidence="44">
    <location>
        <position position="282"/>
    </location>
</feature>
<feature type="modified residue" description="Phosphoserine" evidence="117">
    <location>
        <position position="306"/>
    </location>
</feature>
<feature type="modified residue" description="Phosphoserine" evidence="110">
    <location>
        <position position="328"/>
    </location>
</feature>
<feature type="modified residue" description="Phosphoserine" evidence="44 109 110 113 116">
    <location>
        <position position="332"/>
    </location>
</feature>
<feature type="modified residue" description="Phosphoserine; by ULK1" evidence="89">
    <location>
        <position position="349"/>
    </location>
</feature>
<feature type="modified residue" description="Phosphoserine" evidence="112">
    <location>
        <position position="355"/>
    </location>
</feature>
<feature type="modified residue" description="Phosphoserine" evidence="112">
    <location>
        <position position="361"/>
    </location>
</feature>
<feature type="modified residue" description="Phosphoserine" evidence="2">
    <location>
        <position position="365"/>
    </location>
</feature>
<feature type="modified residue" description="Phosphoserine" evidence="44 110 116 117">
    <location>
        <position position="366"/>
    </location>
</feature>
<feature type="modified residue" description="Phosphoserine; by CK2, ULK1 and TBK1" evidence="44 58 75 76 89">
    <location>
        <position position="403"/>
    </location>
</feature>
<feature type="modified residue" description="Phosphoserine; by ULK1" evidence="89">
    <location>
        <position position="407"/>
    </location>
</feature>
<feature type="modified residue" description="N6-acetyllysine; alternate" evidence="80">
    <location>
        <position position="420"/>
    </location>
</feature>
<feature type="modified residue" description="N6-acetyllysine; alternate" evidence="80">
    <location>
        <position position="435"/>
    </location>
</feature>
<feature type="lipid moiety-binding region" description="S-palmitoyl cysteine" evidence="90">
    <location>
        <position position="289"/>
    </location>
</feature>
<feature type="lipid moiety-binding region" description="S-palmitoyl cysteine" evidence="90">
    <location>
        <position position="290"/>
    </location>
</feature>
<feature type="cross-link" description="Glycyl lysine isopeptide (Lys-Gly) (interchain with G-Cter in ubiquitin)" evidence="68">
    <location>
        <position position="91"/>
    </location>
</feature>
<feature type="cross-link" description="Glycyl lysine isopeptide (Lys-Gly) (interchain with G-Cter in ubiquitin)" evidence="68">
    <location>
        <position position="189"/>
    </location>
</feature>
<feature type="cross-link" description="Glycyl lysine isopeptide (Lys-Gly) (interchain with G-Cter in ubiquitin); alternate" evidence="70">
    <location>
        <position position="420"/>
    </location>
</feature>
<feature type="cross-link" description="Glycyl lysine isopeptide (Lys-Gly) (interchain with G-Cter in SUMO2); alternate" evidence="83 118">
    <location>
        <position position="435"/>
    </location>
</feature>
<feature type="splice variant" id="VSP_015841" description="In isoform 2." evidence="98 99">
    <location>
        <begin position="1"/>
        <end position="84"/>
    </location>
</feature>
<feature type="sequence variant" id="VAR_073899" description="In FTDALS3; dbSNP:rs1554162295." evidence="57">
    <original>A</original>
    <variation>V</variation>
    <location>
        <position position="16"/>
    </location>
</feature>
<feature type="sequence variant" id="VAR_073900" description="In dbSNP:rs141502868." evidence="57">
    <original>A</original>
    <variation>V</variation>
    <location>
        <position position="17"/>
    </location>
</feature>
<feature type="sequence variant" id="VAR_073901" description="In FTDALS3; dbSNP:rs200396166." evidence="45 52 57">
    <original>A</original>
    <variation>V</variation>
    <location>
        <position position="33"/>
    </location>
</feature>
<feature type="sequence variant" id="VAR_073902" description="In FTDALS3; dbSNP:rs148366738." evidence="57">
    <original>D</original>
    <variation>E</variation>
    <location>
        <position position="80"/>
    </location>
</feature>
<feature type="sequence variant" id="VAR_073903" description="In FTDALS3; dbSNP:rs181263868." evidence="57">
    <original>V</original>
    <variation>M</variation>
    <location>
        <position position="90"/>
    </location>
</feature>
<feature type="sequence variant" id="VAR_073904" description="In dbSNP:rs748170760." evidence="57">
    <original>K</original>
    <variation>R</variation>
    <location>
        <position position="103"/>
    </location>
</feature>
<feature type="sequence variant" id="VAR_073905" evidence="57">
    <original>R</original>
    <variation>Q</variation>
    <location>
        <position position="107"/>
    </location>
</feature>
<feature type="sequence variant" id="VAR_073906" description="In FTDALS3; dbSNP:rs771903158." evidence="57">
    <original>R</original>
    <variation>W</variation>
    <location>
        <position position="107"/>
    </location>
</feature>
<feature type="sequence variant" id="VAR_073907" evidence="57">
    <original>D</original>
    <variation>Y</variation>
    <location>
        <position position="108"/>
    </location>
</feature>
<feature type="sequence variant" id="VAR_073908" description="In dbSNP:rs1267306593." evidence="57">
    <original>R</original>
    <variation>H</variation>
    <location>
        <position position="110"/>
    </location>
</feature>
<feature type="sequence variant" id="VAR_023590" description="In dbSNP:rs147810437." evidence="14 57">
    <original>A</original>
    <variation>V</variation>
    <location>
        <position position="117"/>
    </location>
</feature>
<feature type="sequence variant" id="VAR_073909" description="In dbSNP:rs200152247." evidence="57">
    <original>P</original>
    <variation>S</variation>
    <location>
        <position position="118"/>
    </location>
</feature>
<feature type="sequence variant" id="VAR_073910" description="In dbSNP:rs548787835." evidence="57">
    <original>R</original>
    <variation>G</variation>
    <location>
        <position position="119"/>
    </location>
</feature>
<feature type="sequence variant" id="VAR_073911" description="In dbSNP:rs769325755." evidence="57">
    <original>N</original>
    <variation>S</variation>
    <location>
        <position position="125"/>
    </location>
</feature>
<feature type="sequence variant" id="VAR_073912" description="In FTDALS3; dbSNP:rs753212399." evidence="57">
    <original>D</original>
    <variation>N</variation>
    <location>
        <position position="129"/>
    </location>
</feature>
<feature type="sequence variant" id="VAR_073913" description="In dbSNP:rs750256905." evidence="57">
    <original>R</original>
    <variation>C</variation>
    <location>
        <position position="139"/>
    </location>
</feature>
<feature type="sequence variant" id="VAR_073914" description="In FTDALS3; dbSNP:rs145056421." evidence="45 57">
    <original>V</original>
    <variation>I</variation>
    <location>
        <position position="153"/>
    </location>
</feature>
<feature type="sequence variant" id="VAR_073915" description="In dbSNP:rs1582008478." evidence="57">
    <original>S</original>
    <variation>L</variation>
    <location>
        <position position="180"/>
    </location>
</feature>
<feature type="sequence variant" id="VAR_073916" description="In FTDALS3; dbSNP:rs201263163." evidence="57">
    <original>R</original>
    <variation>C</variation>
    <location>
        <position position="212"/>
    </location>
</feature>
<feature type="sequence variant" id="VAR_073917" description="In dbSNP:rs761822261." evidence="57">
    <original>R</original>
    <variation>H</variation>
    <location>
        <position position="217"/>
    </location>
</feature>
<feature type="sequence variant" id="VAR_073918" description="In FTDALS3." evidence="57">
    <original>G</original>
    <variation>V</variation>
    <location>
        <position position="219"/>
    </location>
</feature>
<feature type="sequence variant" id="VAR_073919" description="In FTDALS3; dbSNP:rs765200636." evidence="57">
    <original>S</original>
    <variation>P</variation>
    <location>
        <position position="226"/>
    </location>
</feature>
<feature type="sequence variant" id="VAR_073920" description="In FTDALS3; dbSNP:rs151191977." evidence="45 57">
    <original>P</original>
    <variation>L</variation>
    <location>
        <position position="228"/>
    </location>
</feature>
<feature type="sequence variant" id="VAR_073921" description="In FTDALS3; dbSNP:rs1225746517." evidence="57">
    <original>P</original>
    <variation>T</variation>
    <location>
        <position position="232"/>
    </location>
</feature>
<feature type="sequence variant" id="VAR_068915" description="Confirmed at protein level; dbSNP:rs11548633." evidence="34 57">
    <original>K</original>
    <variation>E</variation>
    <location>
        <position position="238"/>
    </location>
</feature>
<feature type="sequence variant" id="VAR_073922" description="In FTDALS3." evidence="45 57 60">
    <location>
        <position position="238"/>
    </location>
</feature>
<feature type="sequence variant" id="VAR_073923" description="In FTDALS3; dbSNP:rs774986849." evidence="57">
    <original>D</original>
    <variation>N</variation>
    <location>
        <position position="258"/>
    </location>
</feature>
<feature type="sequence variant" id="VAR_073924" evidence="57">
    <original>RS</original>
    <variation>SR</variation>
    <location>
        <begin position="265"/>
        <end position="266"/>
    </location>
</feature>
<feature type="sequence variant" id="VAR_061707" description="In dbSNP:rs55793208." evidence="57">
    <original>E</original>
    <variation>D</variation>
    <location>
        <position position="274"/>
    </location>
</feature>
<feature type="sequence variant" id="VAR_023591" evidence="14">
    <original>E</original>
    <variation>Q</variation>
    <location>
        <position position="274"/>
    </location>
</feature>
<feature type="sequence variant" id="VAR_073925" description="In dbSNP:rs200445838." evidence="57">
    <original>T</original>
    <variation>I</variation>
    <location>
        <position position="278"/>
    </location>
</feature>
<feature type="sequence variant" id="VAR_073926" description="In dbSNP:rs541356917." evidence="57">
    <original>A</original>
    <variation>V</variation>
    <location>
        <position position="308"/>
    </location>
</feature>
<feature type="sequence variant" id="VAR_073927" description="In FTDALS3." evidence="45">
    <original>S</original>
    <variation>P</variation>
    <location>
        <position position="318"/>
    </location>
</feature>
<feature type="sequence variant" id="VAR_073928" description="In dbSNP:rs61748794." evidence="57">
    <original>E</original>
    <variation>K</variation>
    <location>
        <position position="319"/>
    </location>
</feature>
<feature type="sequence variant" id="VAR_073929" description="In FTDALS3; likely benign; dbSNP:rs140226523." evidence="45 57">
    <original>R</original>
    <variation>C</variation>
    <location>
        <position position="321"/>
    </location>
</feature>
<feature type="sequence variant" id="VAR_073930" description="In FTDALS3; dbSNP:rs148294622." evidence="57">
    <original>D</original>
    <variation>G</variation>
    <location>
        <position position="329"/>
    </location>
</feature>
<feature type="sequence variant" id="VAR_073931" evidence="57">
    <location>
        <position position="334"/>
    </location>
</feature>
<feature type="sequence variant" id="VAR_073932" description="In FTDALS3; dbSNP:rs772889843." evidence="57">
    <original>P</original>
    <variation>L</variation>
    <location>
        <position position="348"/>
    </location>
</feature>
<feature type="sequence variant" id="VAR_073933" description="In dbSNP:rs774512680." evidence="57">
    <original>S</original>
    <variation>T</variation>
    <location>
        <position position="349"/>
    </location>
</feature>
<feature type="sequence variant" id="VAR_073934" description="In FTDALS3; dbSNP:rs143956614." evidence="45">
    <original>S</original>
    <variation>P</variation>
    <location>
        <position position="370"/>
    </location>
</feature>
<feature type="sequence variant" id="VAR_073935" description="In FTDALS3; dbSNP:rs772122047." evidence="52">
    <original>A</original>
    <variation>V</variation>
    <location>
        <position position="381"/>
    </location>
</feature>
<feature type="sequence variant" id="VAR_023592" description="In PDB3 and FTDALS3; dbSNP:rs776749939." evidence="21 52 57">
    <original>P</original>
    <variation>L</variation>
    <location>
        <position position="387"/>
    </location>
</feature>
<feature type="sequence variant" id="VAR_023593" description="In PDB3 and FTDALS3; no effect on polyubiquitin-binding; dbSNP:rs104893941." evidence="14 15 19 22 23 26 45 52 57">
    <original>P</original>
    <variation>L</variation>
    <location>
        <position position="392"/>
    </location>
</feature>
<feature type="sequence variant" id="VAR_023594" description="In PDB3; dbSNP:rs1561609625." evidence="23">
    <original>S</original>
    <variation>P</variation>
    <location>
        <position position="399"/>
    </location>
</feature>
<feature type="sequence variant" id="VAR_023595" description="In PDB3; decreased ability to undergo liquid-liquid phase separation and formation of p62 body; dbSNP:rs1247551175." evidence="23 76">
    <original>M</original>
    <variation>T</variation>
    <location>
        <position position="404"/>
    </location>
</feature>
<feature type="sequence variant" id="VAR_023596" description="In PDB3; loss of polyubiquitin-binding; dbSNP:rs771966860." evidence="22 25">
    <original>M</original>
    <variation>V</variation>
    <location>
        <position position="404"/>
    </location>
</feature>
<feature type="sequence variant" id="VAR_023597" description="In PDB3 and FTDALS3; no effect on polyubiquitin-binding; decreased ability to undergo liquid-liquid phase separation and formation of p62 body; dbSNP:rs143511494." evidence="25 45 76">
    <original>G</original>
    <variation>S</variation>
    <location>
        <position position="411"/>
    </location>
</feature>
<feature type="sequence variant" id="VAR_023598" description="In PDB3 and FTDALS3; loss of polyubiquitin-binding and increased activation of NF-kappa-B; dbSNP:rs757212984." evidence="22 23 25 36 45">
    <original>G</original>
    <variation>R</variation>
    <location>
        <position position="425"/>
    </location>
</feature>
<feature type="sequence variant" id="VAR_073936" description="In FTDALS3; dbSNP:rs770118706." evidence="57">
    <original>T</original>
    <variation>P</variation>
    <location>
        <position position="430"/>
    </location>
</feature>
<feature type="sequence variant" id="VAR_073937" description="In dbSNP:rs199854262." evidence="57">
    <original>P</original>
    <variation>L</variation>
    <location>
        <position position="439"/>
    </location>
</feature>
<feature type="mutagenesis site" description="Loss of interactions with PRKCZ, PRCKI and NBR1. Loss of dimerization; when associated with A-69." evidence="18 20">
    <original>K</original>
    <variation>A</variation>
    <location>
        <position position="7"/>
    </location>
</feature>
<feature type="mutagenesis site" description="No effect on interaction with LCK." evidence="94">
    <original>Y</original>
    <variation>F</variation>
    <location>
        <position position="9"/>
    </location>
</feature>
<feature type="mutagenesis site" description="No effect on interaction with PRKCI." evidence="18">
    <original>K</original>
    <variation>A</variation>
    <location>
        <position position="13"/>
    </location>
</feature>
<feature type="mutagenesis site" description="Loss of interaction with PRKCI. Alters dimerization." evidence="18">
    <original>RR</original>
    <variation>AA</variation>
    <location>
        <begin position="21"/>
        <end position="22"/>
    </location>
</feature>
<feature type="mutagenesis site" description="No effect on interaction with PRKCZ." evidence="18">
    <original>Y</original>
    <variation>A</variation>
    <location>
        <position position="67"/>
    </location>
</feature>
<feature type="mutagenesis site" description="No effect on interactions with PRKCZ, PRKCI and NBR1. Loss of localization in cytoplasmic inclusion bodies. Loss of dimerization; when associated with A-7." evidence="18 20 33">
    <original>D</original>
    <variation>A</variation>
    <location>
        <position position="69"/>
    </location>
</feature>
<feature type="mutagenesis site" description="No effect on interaction with PRKCI." evidence="18">
    <original>D</original>
    <variation>A</variation>
    <location>
        <position position="71"/>
    </location>
</feature>
<feature type="mutagenesis site" description="No effect on interactions with PRKCZ and PRKCI." evidence="18 20">
    <original>D</original>
    <variation>A</variation>
    <location>
        <position position="73"/>
    </location>
</feature>
<feature type="mutagenesis site" description="No effect on interaction with PRKCI." evidence="18">
    <original>D</original>
    <variation>A</variation>
    <location>
        <position position="80"/>
    </location>
</feature>
<feature type="mutagenesis site" description="No effect on interaction with PRKCI." evidence="18">
    <original>E</original>
    <variation>A</variation>
    <location>
        <position position="82"/>
    </location>
</feature>
<feature type="mutagenesis site" description="Abolished palmitoylation." evidence="90">
    <original>CC</original>
    <variation>SS</variation>
    <location>
        <begin position="289"/>
        <end position="290"/>
    </location>
</feature>
<feature type="mutagenesis site" description="No effect on MAP1LC3B-binding." evidence="35">
    <original>EE</original>
    <variation>AA</variation>
    <location>
        <begin position="323"/>
        <end position="324"/>
    </location>
</feature>
<feature type="mutagenesis site" description="No effect on MAP1LC3B-binding." evidence="35">
    <original>S</original>
    <variation>A</variation>
    <location>
        <position position="332"/>
    </location>
</feature>
<feature type="mutagenesis site" description="75% decrease in MAP1LC3B-binding." evidence="35">
    <original>DDD</original>
    <variation>ADA</variation>
    <location>
        <begin position="335"/>
        <end position="337"/>
    </location>
</feature>
<feature type="mutagenesis site" description="Strong decrease in MAP1LC3B-binding, disrupts interaction with GABARAP." evidence="35 56">
    <original>W</original>
    <variation>A</variation>
    <location>
        <position position="338"/>
    </location>
</feature>
<feature type="mutagenesis site" description="No effect on MAP1LC3B-binding." evidence="35">
    <original>S</original>
    <variation>A</variation>
    <location>
        <position position="342"/>
    </location>
</feature>
<feature type="mutagenesis site" description="Strongly decreased interaction with KEAP1." evidence="39">
    <original>D</original>
    <variation>A</variation>
    <location>
        <position position="347"/>
    </location>
</feature>
<feature type="mutagenesis site" description="Impaired phosphorylation by ULK1, leading to decreased p62 body formation." evidence="89">
    <original>S</original>
    <variation>A</variation>
    <location>
        <position position="349"/>
    </location>
</feature>
<feature type="mutagenesis site" description="Strongly decreased interaction with KEAP1." evidence="39 89">
    <original>T</original>
    <variation>A</variation>
    <location>
        <position position="350"/>
    </location>
</feature>
<feature type="mutagenesis site" description="Strongly decreased interaction with KEAP1." evidence="39">
    <original>G</original>
    <variation>A</variation>
    <location>
        <position position="351"/>
    </location>
</feature>
<feature type="mutagenesis site" description="Strongly decreased interaction with KEAP1." evidence="39">
    <original>E</original>
    <variation>A</variation>
    <location>
        <position position="352"/>
    </location>
</feature>
<feature type="mutagenesis site" description="No effect on polyubiquitin-binding." evidence="27">
    <original>L</original>
    <variation>V</variation>
    <location>
        <position position="398"/>
    </location>
</feature>
<feature type="mutagenesis site" description="Mimics phosphorylation; increased phosphorylation at S-349." evidence="89">
    <original>SMGFS</original>
    <variation>EMGFE</variation>
    <location>
        <begin position="403"/>
        <end position="407"/>
    </location>
</feature>
<feature type="mutagenesis site" description="Abolished phosphorylation by CK2, leading to decreased affinity for ubiquitinated proteins. Abolished ability to promote relocalization of 'Lys-63'-linked ubiquitinated STING1 to autophagosomes." evidence="44 75">
    <original>S</original>
    <variation>A</variation>
    <location>
        <position position="403"/>
    </location>
</feature>
<feature type="mutagenesis site" description="Mimmics phosphorylation; increased affinity for ubiquitinated proteins, leading to increased p62 body formation and autophagic degradation." evidence="44 76">
    <original>S</original>
    <variation>E</variation>
    <location>
        <position position="403"/>
    </location>
</feature>
<feature type="mutagenesis site" description="Loss of polyubiquitin-binding." evidence="27">
    <original>F</original>
    <variation>V</variation>
    <location>
        <position position="406"/>
    </location>
</feature>
<feature type="mutagenesis site" description="Decreased activation of NF-kappa-B." evidence="36">
    <original>E</original>
    <variation>K</variation>
    <location>
        <position position="409"/>
    </location>
</feature>
<feature type="mutagenesis site" description="Decreased activation of NF-kappa-B." evidence="36">
    <original>G</original>
    <variation>K</variation>
    <location>
        <position position="410"/>
    </location>
</feature>
<feature type="mutagenesis site" description="No effect on polyubiquitin-binding." evidence="27">
    <original>L</original>
    <variation>V</variation>
    <location>
        <position position="413"/>
    </location>
</feature>
<feature type="mutagenesis site" description="Loss of polyubiquitin-binding." evidence="27">
    <original>L</original>
    <variation>V</variation>
    <location>
        <position position="417"/>
    </location>
</feature>
<feature type="mutagenesis site" description="Mimics acetylation; leading to increased ability to bind ubiquitinated proteins; when associated with Q-435." evidence="80">
    <original>K</original>
    <variation>Q</variation>
    <location>
        <position position="420"/>
    </location>
</feature>
<feature type="mutagenesis site" description="Decreased ubiquitination by the BCR(KEAP1) complex, leading to decreased sequestering activity. Strongly reduced acetylation; when associated with R-435." evidence="70 80">
    <original>K</original>
    <variation>R</variation>
    <location>
        <position position="420"/>
    </location>
</feature>
<feature type="mutagenesis site" description="Partial loss of polyubiquitin-binding. Loss of localization to cytoplasmic inclusion bodies." evidence="27 33">
    <original>I</original>
    <variation>V</variation>
    <location>
        <position position="431"/>
    </location>
</feature>
<feature type="mutagenesis site" description="Mimics acetylation; leading to increased ability to bind ubiquitinated proteins; when associated with Q-420." evidence="80">
    <original>K</original>
    <variation>Q</variation>
    <location>
        <position position="435"/>
    </location>
</feature>
<feature type="mutagenesis site" description="Strongly reduced acetylation; when associated with R-420." evidence="80">
    <original>K</original>
    <variation>R</variation>
    <location>
        <position position="435"/>
    </location>
</feature>
<feature type="sequence conflict" description="In Ref. 1; AAA93299." evidence="104" ref="1">
    <original>R</original>
    <variation>A</variation>
    <location>
        <position position="321"/>
    </location>
</feature>
<feature type="strand" evidence="122">
    <location>
        <begin position="5"/>
        <end position="10"/>
    </location>
</feature>
<feature type="strand" evidence="125">
    <location>
        <begin position="13"/>
        <end position="15"/>
    </location>
</feature>
<feature type="strand" evidence="122">
    <location>
        <begin position="19"/>
        <end position="24"/>
    </location>
</feature>
<feature type="strand" evidence="125">
    <location>
        <begin position="36"/>
        <end position="39"/>
    </location>
</feature>
<feature type="helix" evidence="122">
    <location>
        <begin position="43"/>
        <end position="54"/>
    </location>
</feature>
<feature type="strand" evidence="122">
    <location>
        <begin position="62"/>
        <end position="64"/>
    </location>
</feature>
<feature type="strand" evidence="122">
    <location>
        <begin position="66"/>
        <end position="68"/>
    </location>
</feature>
<feature type="strand" evidence="122">
    <location>
        <begin position="74"/>
        <end position="76"/>
    </location>
</feature>
<feature type="helix" evidence="122">
    <location>
        <begin position="80"/>
        <end position="88"/>
    </location>
</feature>
<feature type="strand" evidence="122">
    <location>
        <begin position="92"/>
        <end position="101"/>
    </location>
</feature>
<feature type="strand" evidence="124">
    <location>
        <begin position="120"/>
        <end position="122"/>
    </location>
</feature>
<feature type="turn" evidence="124">
    <location>
        <begin position="129"/>
        <end position="131"/>
    </location>
</feature>
<feature type="strand" evidence="123">
    <location>
        <begin position="132"/>
        <end position="134"/>
    </location>
</feature>
<feature type="strand" evidence="124">
    <location>
        <begin position="139"/>
        <end position="147"/>
    </location>
</feature>
<feature type="helix" evidence="124">
    <location>
        <begin position="152"/>
        <end position="156"/>
    </location>
</feature>
<feature type="turn" evidence="124">
    <location>
        <begin position="157"/>
        <end position="162"/>
    </location>
</feature>
<feature type="strand" evidence="124">
    <location>
        <begin position="165"/>
        <end position="168"/>
    </location>
</feature>
<feature type="strand" evidence="120">
    <location>
        <begin position="388"/>
        <end position="390"/>
    </location>
</feature>
<feature type="helix" evidence="119">
    <location>
        <begin position="392"/>
        <end position="402"/>
    </location>
</feature>
<feature type="turn" evidence="120">
    <location>
        <begin position="403"/>
        <end position="405"/>
    </location>
</feature>
<feature type="strand" evidence="120">
    <location>
        <begin position="409"/>
        <end position="411"/>
    </location>
</feature>
<feature type="helix" evidence="119">
    <location>
        <begin position="412"/>
        <end position="419"/>
    </location>
</feature>
<feature type="turn" evidence="119">
    <location>
        <begin position="420"/>
        <end position="422"/>
    </location>
</feature>
<feature type="helix" evidence="119">
    <location>
        <begin position="424"/>
        <end position="431"/>
    </location>
</feature>
<feature type="strand" evidence="121">
    <location>
        <begin position="432"/>
        <end position="434"/>
    </location>
</feature>
<feature type="initiator methionine" description="Removed" evidence="115">
    <location sequence="Q13501-2">
        <position position="1"/>
    </location>
</feature>
<feature type="modified residue" description="N-acetylalanine" evidence="115">
    <location sequence="Q13501-2">
        <position position="2"/>
    </location>
</feature>
<keyword id="KW-0002">3D-structure</keyword>
<keyword id="KW-0007">Acetylation</keyword>
<keyword id="KW-0025">Alternative splicing</keyword>
<keyword id="KW-0036">Amyotrophic lateral sclerosis</keyword>
<keyword id="KW-0053">Apoptosis</keyword>
<keyword id="KW-0072">Autophagy</keyword>
<keyword id="KW-0963">Cytoplasm</keyword>
<keyword id="KW-0968">Cytoplasmic vesicle</keyword>
<keyword id="KW-0221">Differentiation</keyword>
<keyword id="KW-0903">Direct protein sequencing</keyword>
<keyword id="KW-0225">Disease variant</keyword>
<keyword id="KW-0256">Endoplasmic reticulum</keyword>
<keyword id="KW-0967">Endosome</keyword>
<keyword id="KW-0391">Immunity</keyword>
<keyword id="KW-1017">Isopeptide bond</keyword>
<keyword id="KW-0449">Lipoprotein</keyword>
<keyword id="KW-0458">Lysosome</keyword>
<keyword id="KW-0479">Metal-binding</keyword>
<keyword id="KW-0523">Neurodegeneration</keyword>
<keyword id="KW-0539">Nucleus</keyword>
<keyword id="KW-0564">Palmitate</keyword>
<keyword id="KW-0597">Phosphoprotein</keyword>
<keyword id="KW-1267">Proteomics identification</keyword>
<keyword id="KW-1185">Reference proteome</keyword>
<keyword id="KW-0832">Ubl conjugation</keyword>
<keyword id="KW-0862">Zinc</keyword>
<keyword id="KW-0863">Zinc-finger</keyword>
<dbReference type="EMBL" id="U41806">
    <property type="protein sequence ID" value="AAA93299.1"/>
    <property type="molecule type" value="mRNA"/>
</dbReference>
<dbReference type="EMBL" id="U46751">
    <property type="protein sequence ID" value="AAC52070.1"/>
    <property type="molecule type" value="mRNA"/>
</dbReference>
<dbReference type="EMBL" id="AK098077">
    <property type="protein sequence ID" value="BAG53577.1"/>
    <property type="molecule type" value="mRNA"/>
</dbReference>
<dbReference type="EMBL" id="AK312451">
    <property type="protein sequence ID" value="BAG35358.1"/>
    <property type="molecule type" value="mRNA"/>
</dbReference>
<dbReference type="EMBL" id="AC008393">
    <property type="status" value="NOT_ANNOTATED_CDS"/>
    <property type="molecule type" value="Genomic_DNA"/>
</dbReference>
<dbReference type="EMBL" id="BC000951">
    <property type="protein sequence ID" value="AAH00951.1"/>
    <property type="molecule type" value="mRNA"/>
</dbReference>
<dbReference type="EMBL" id="BC001874">
    <property type="protein sequence ID" value="AAH01874.1"/>
    <property type="molecule type" value="mRNA"/>
</dbReference>
<dbReference type="EMBL" id="BC003139">
    <property type="protein sequence ID" value="AAH03139.1"/>
    <property type="molecule type" value="mRNA"/>
</dbReference>
<dbReference type="EMBL" id="BC017222">
    <property type="protein sequence ID" value="AAH17222.1"/>
    <property type="molecule type" value="mRNA"/>
</dbReference>
<dbReference type="EMBL" id="BC019111">
    <property type="protein sequence ID" value="AAH19111.1"/>
    <property type="molecule type" value="mRNA"/>
</dbReference>
<dbReference type="EMBL" id="AF060494">
    <property type="protein sequence ID" value="AAC64516.1"/>
    <property type="molecule type" value="Genomic_DNA"/>
</dbReference>
<dbReference type="CCDS" id="CCDS34317.1">
    <molecule id="Q13501-1"/>
</dbReference>
<dbReference type="CCDS" id="CCDS47355.1">
    <molecule id="Q13501-2"/>
</dbReference>
<dbReference type="RefSeq" id="NP_001135770.1">
    <molecule id="Q13501-2"/>
    <property type="nucleotide sequence ID" value="NM_001142298.2"/>
</dbReference>
<dbReference type="RefSeq" id="NP_001135771.1">
    <molecule id="Q13501-2"/>
    <property type="nucleotide sequence ID" value="NM_001142299.2"/>
</dbReference>
<dbReference type="RefSeq" id="NP_003891.1">
    <molecule id="Q13501-1"/>
    <property type="nucleotide sequence ID" value="NM_003900.5"/>
</dbReference>
<dbReference type="RefSeq" id="XP_016865499.1">
    <property type="nucleotide sequence ID" value="XM_017010010.1"/>
</dbReference>
<dbReference type="PDB" id="1Q02">
    <property type="method" value="NMR"/>
    <property type="chains" value="A=387-436"/>
</dbReference>
<dbReference type="PDB" id="2JY7">
    <property type="method" value="NMR"/>
    <property type="chains" value="A=387-436"/>
</dbReference>
<dbReference type="PDB" id="2JY8">
    <property type="method" value="NMR"/>
    <property type="chains" value="A=387-436"/>
</dbReference>
<dbReference type="PDB" id="2K0B">
    <property type="method" value="NMR"/>
    <property type="chains" value="X=387-436"/>
</dbReference>
<dbReference type="PDB" id="2KNV">
    <property type="method" value="NMR"/>
    <property type="chains" value="A/B=387-436"/>
</dbReference>
<dbReference type="PDB" id="4MJS">
    <property type="method" value="X-ray"/>
    <property type="resolution" value="2.50 A"/>
    <property type="chains" value="B/D/F/H/J/L/N/P/R/T/V/X=3-102"/>
</dbReference>
<dbReference type="PDB" id="4UF8">
    <property type="method" value="EM"/>
    <property type="resolution" value="10.90 A"/>
    <property type="chains" value="A/B/C/I=3-102"/>
</dbReference>
<dbReference type="PDB" id="4UF9">
    <property type="method" value="EM"/>
    <property type="resolution" value="10.30 A"/>
    <property type="chains" value="A/B/D=1-122"/>
</dbReference>
<dbReference type="PDB" id="5YP7">
    <property type="method" value="X-ray"/>
    <property type="resolution" value="1.42 A"/>
    <property type="chains" value="A/D=126-180"/>
</dbReference>
<dbReference type="PDB" id="5YP8">
    <property type="method" value="X-ray"/>
    <property type="resolution" value="1.45 A"/>
    <property type="chains" value="A/B=126-180"/>
</dbReference>
<dbReference type="PDB" id="5YPA">
    <property type="method" value="X-ray"/>
    <property type="resolution" value="2.50 A"/>
    <property type="chains" value="A/B=126-180"/>
</dbReference>
<dbReference type="PDB" id="5YPB">
    <property type="method" value="X-ray"/>
    <property type="resolution" value="2.90 A"/>
    <property type="chains" value="A/B/C/D=126-180"/>
</dbReference>
<dbReference type="PDB" id="5YPC">
    <property type="method" value="X-ray"/>
    <property type="resolution" value="1.96 A"/>
    <property type="chains" value="A/B/C/D=126-180"/>
</dbReference>
<dbReference type="PDB" id="5YPE">
    <property type="method" value="X-ray"/>
    <property type="resolution" value="2.85 A"/>
    <property type="chains" value="A/B/C/D=126-180"/>
</dbReference>
<dbReference type="PDB" id="5YPF">
    <property type="method" value="X-ray"/>
    <property type="resolution" value="2.95 A"/>
    <property type="chains" value="A/B/C/D=126-180"/>
</dbReference>
<dbReference type="PDB" id="5YPG">
    <property type="method" value="X-ray"/>
    <property type="resolution" value="2.20 A"/>
    <property type="chains" value="A/B=126-180"/>
</dbReference>
<dbReference type="PDB" id="5YPH">
    <property type="method" value="X-ray"/>
    <property type="resolution" value="1.63 A"/>
    <property type="chains" value="A/B=126-180"/>
</dbReference>
<dbReference type="PDB" id="6JM4">
    <property type="method" value="X-ray"/>
    <property type="resolution" value="3.20 A"/>
    <property type="chains" value="A/B/C/D=1-102"/>
</dbReference>
<dbReference type="PDB" id="6KHZ">
    <property type="method" value="X-ray"/>
    <property type="resolution" value="2.80 A"/>
    <property type="chains" value="A/B/C/D=125-169"/>
</dbReference>
<dbReference type="PDB" id="6MJ7">
    <property type="method" value="X-ray"/>
    <property type="resolution" value="1.41 A"/>
    <property type="chains" value="A=120-171"/>
</dbReference>
<dbReference type="PDB" id="6TGY">
    <property type="method" value="EM"/>
    <property type="resolution" value="3.50 A"/>
    <property type="chains" value="A=1-122"/>
</dbReference>
<dbReference type="PDB" id="6TH3">
    <property type="method" value="EM"/>
    <property type="resolution" value="4.00 A"/>
    <property type="chains" value="A/B/C=1-122"/>
</dbReference>
<dbReference type="PDB" id="7R1O">
    <property type="method" value="X-ray"/>
    <property type="resolution" value="2.20 A"/>
    <property type="chains" value="AAA/BBB/CCC/DDD=120-172"/>
</dbReference>
<dbReference type="PDBsum" id="1Q02"/>
<dbReference type="PDBsum" id="2JY7"/>
<dbReference type="PDBsum" id="2JY8"/>
<dbReference type="PDBsum" id="2K0B"/>
<dbReference type="PDBsum" id="2KNV"/>
<dbReference type="PDBsum" id="4MJS"/>
<dbReference type="PDBsum" id="4UF8"/>
<dbReference type="PDBsum" id="4UF9"/>
<dbReference type="PDBsum" id="5YP7"/>
<dbReference type="PDBsum" id="5YP8"/>
<dbReference type="PDBsum" id="5YPA"/>
<dbReference type="PDBsum" id="5YPB"/>
<dbReference type="PDBsum" id="5YPC"/>
<dbReference type="PDBsum" id="5YPE"/>
<dbReference type="PDBsum" id="5YPF"/>
<dbReference type="PDBsum" id="5YPG"/>
<dbReference type="PDBsum" id="5YPH"/>
<dbReference type="PDBsum" id="6JM4"/>
<dbReference type="PDBsum" id="6KHZ"/>
<dbReference type="PDBsum" id="6MJ7"/>
<dbReference type="PDBsum" id="6TGY"/>
<dbReference type="PDBsum" id="6TH3"/>
<dbReference type="PDBsum" id="7R1O"/>
<dbReference type="BMRB" id="Q13501"/>
<dbReference type="EMDB" id="EMD-10501"/>
<dbReference type="EMDB" id="EMD-10502"/>
<dbReference type="EMDB" id="EMD-2936"/>
<dbReference type="EMDB" id="EMD-2937"/>
<dbReference type="SMR" id="Q13501"/>
<dbReference type="BioGRID" id="114397">
    <property type="interactions" value="1344"/>
</dbReference>
<dbReference type="CORUM" id="Q13501"/>
<dbReference type="DIP" id="DIP-34443N"/>
<dbReference type="ELM" id="Q13501"/>
<dbReference type="FunCoup" id="Q13501">
    <property type="interactions" value="2230"/>
</dbReference>
<dbReference type="IntAct" id="Q13501">
    <property type="interactions" value="297"/>
</dbReference>
<dbReference type="MINT" id="Q13501"/>
<dbReference type="STRING" id="9606.ENSP00000374455"/>
<dbReference type="BindingDB" id="Q13501"/>
<dbReference type="ChEMBL" id="CHEMBL4295816"/>
<dbReference type="GuidetoPHARMACOLOGY" id="3213"/>
<dbReference type="MoonDB" id="Q13501">
    <property type="type" value="Predicted"/>
</dbReference>
<dbReference type="GlyGen" id="Q13501">
    <property type="glycosylation" value="2 sites, 1 O-linked glycan (1 site)"/>
</dbReference>
<dbReference type="iPTMnet" id="Q13501"/>
<dbReference type="PhosphoSitePlus" id="Q13501"/>
<dbReference type="SwissPalm" id="Q13501"/>
<dbReference type="BioMuta" id="SQSTM1"/>
<dbReference type="DMDM" id="74735628"/>
<dbReference type="jPOST" id="Q13501"/>
<dbReference type="MassIVE" id="Q13501"/>
<dbReference type="PaxDb" id="9606-ENSP00000374455"/>
<dbReference type="PeptideAtlas" id="Q13501"/>
<dbReference type="ProteomicsDB" id="59496">
    <molecule id="Q13501-1"/>
</dbReference>
<dbReference type="ProteomicsDB" id="59497">
    <molecule id="Q13501-2"/>
</dbReference>
<dbReference type="Pumba" id="Q13501"/>
<dbReference type="Antibodypedia" id="761">
    <property type="antibodies" value="1359 antibodies from 48 providers"/>
</dbReference>
<dbReference type="DNASU" id="8878"/>
<dbReference type="YCharOS" id="Q13501">
    <property type="antibodies" value="Tested 18 antibodies from 6 manufacturers"/>
</dbReference>
<dbReference type="Ensembl" id="ENST00000360718.5">
    <molecule id="Q13501-2"/>
    <property type="protein sequence ID" value="ENSP00000353944.5"/>
    <property type="gene ID" value="ENSG00000161011.20"/>
</dbReference>
<dbReference type="Ensembl" id="ENST00000389805.9">
    <molecule id="Q13501-1"/>
    <property type="protein sequence ID" value="ENSP00000374455.4"/>
    <property type="gene ID" value="ENSG00000161011.20"/>
</dbReference>
<dbReference type="Ensembl" id="ENST00000640444.2">
    <molecule id="Q13501-1"/>
    <property type="protein sequence ID" value="ENSP00000491834.2"/>
    <property type="gene ID" value="ENSG00000284099.3"/>
</dbReference>
<dbReference type="Ensembl" id="ENST00000643389.2">
    <molecule id="Q13501-1"/>
    <property type="protein sequence ID" value="ENSP00000495843.2"/>
    <property type="gene ID" value="ENSG00000284099.3"/>
</dbReference>
<dbReference type="GeneID" id="8878"/>
<dbReference type="KEGG" id="hsa:8878"/>
<dbReference type="MANE-Select" id="ENST00000389805.9">
    <property type="protein sequence ID" value="ENSP00000374455.4"/>
    <property type="RefSeq nucleotide sequence ID" value="NM_003900.5"/>
    <property type="RefSeq protein sequence ID" value="NP_003891.1"/>
</dbReference>
<dbReference type="UCSC" id="uc003mkw.5">
    <molecule id="Q13501-1"/>
    <property type="organism name" value="human"/>
</dbReference>
<dbReference type="AGR" id="HGNC:11280"/>
<dbReference type="CTD" id="8878"/>
<dbReference type="DisGeNET" id="8878"/>
<dbReference type="GeneCards" id="SQSTM1"/>
<dbReference type="HGNC" id="HGNC:11280">
    <property type="gene designation" value="SQSTM1"/>
</dbReference>
<dbReference type="HPA" id="ENSG00000161011">
    <property type="expression patterns" value="Tissue enhanced (skeletal)"/>
</dbReference>
<dbReference type="MalaCards" id="SQSTM1"/>
<dbReference type="MIM" id="167250">
    <property type="type" value="phenotype"/>
</dbReference>
<dbReference type="MIM" id="601530">
    <property type="type" value="gene"/>
</dbReference>
<dbReference type="MIM" id="616437">
    <property type="type" value="phenotype"/>
</dbReference>
<dbReference type="MIM" id="617145">
    <property type="type" value="phenotype"/>
</dbReference>
<dbReference type="MIM" id="617158">
    <property type="type" value="phenotype"/>
</dbReference>
<dbReference type="neXtProt" id="NX_Q13501"/>
<dbReference type="OpenTargets" id="ENSG00000161011"/>
<dbReference type="Orphanet" id="803">
    <property type="disease" value="Amyotrophic lateral sclerosis"/>
</dbReference>
<dbReference type="Orphanet" id="275864">
    <property type="disease" value="Behavioral variant of frontotemporal dementia"/>
</dbReference>
<dbReference type="Orphanet" id="603">
    <property type="disease" value="Distal myopathy, Welander type"/>
</dbReference>
<dbReference type="Orphanet" id="275872">
    <property type="disease" value="Frontotemporal dementia with motor neuron disease"/>
</dbReference>
<dbReference type="PharmGKB" id="PA36109"/>
<dbReference type="VEuPathDB" id="HostDB:ENSG00000161011"/>
<dbReference type="eggNOG" id="KOG4582">
    <property type="taxonomic scope" value="Eukaryota"/>
</dbReference>
<dbReference type="GeneTree" id="ENSGT00390000002781"/>
<dbReference type="HOGENOM" id="CLU_038011_1_0_1"/>
<dbReference type="InParanoid" id="Q13501"/>
<dbReference type="OMA" id="NCNGWLT"/>
<dbReference type="OrthoDB" id="441278at2759"/>
<dbReference type="PAN-GO" id="Q13501">
    <property type="GO annotations" value="7 GO annotations based on evolutionary models"/>
</dbReference>
<dbReference type="PhylomeDB" id="Q13501"/>
<dbReference type="TreeFam" id="TF328470"/>
<dbReference type="PathwayCommons" id="Q13501"/>
<dbReference type="Reactome" id="R-HSA-205043">
    <property type="pathway name" value="NRIF signals cell death from the nucleus"/>
</dbReference>
<dbReference type="Reactome" id="R-HSA-209543">
    <property type="pathway name" value="p75NTR recruits signalling complexes"/>
</dbReference>
<dbReference type="Reactome" id="R-HSA-209560">
    <property type="pathway name" value="NF-kB is activated and signals survival"/>
</dbReference>
<dbReference type="Reactome" id="R-HSA-5205685">
    <property type="pathway name" value="PINK1-PRKN Mediated Mitophagy"/>
</dbReference>
<dbReference type="Reactome" id="R-HSA-8951664">
    <property type="pathway name" value="Neddylation"/>
</dbReference>
<dbReference type="Reactome" id="R-HSA-9020702">
    <property type="pathway name" value="Interleukin-1 signaling"/>
</dbReference>
<dbReference type="Reactome" id="R-HSA-9664873">
    <property type="pathway name" value="Pexophagy"/>
</dbReference>
<dbReference type="Reactome" id="R-HSA-9725370">
    <property type="pathway name" value="Signaling by ALK fusions and activated point mutants"/>
</dbReference>
<dbReference type="Reactome" id="R-HSA-9755511">
    <property type="pathway name" value="KEAP1-NFE2L2 pathway"/>
</dbReference>
<dbReference type="Reactome" id="R-HSA-9759194">
    <property type="pathway name" value="Nuclear events mediated by NFE2L2"/>
</dbReference>
<dbReference type="SignaLink" id="Q13501"/>
<dbReference type="SIGNOR" id="Q13501"/>
<dbReference type="BioGRID-ORCS" id="8878">
    <property type="hits" value="28 hits in 1166 CRISPR screens"/>
</dbReference>
<dbReference type="CD-CODE" id="1822EB5E">
    <property type="entry name" value="Synthetic Condensate 000092"/>
</dbReference>
<dbReference type="CD-CODE" id="5D6181E1">
    <property type="entry name" value="Synthetic Condensate 000293"/>
</dbReference>
<dbReference type="CD-CODE" id="718A9EC3">
    <property type="entry name" value="P62 body"/>
</dbReference>
<dbReference type="CD-CODE" id="98C8800A">
    <property type="entry name" value="Synthetic Condensate 000338"/>
</dbReference>
<dbReference type="CD-CODE" id="B5B9A610">
    <property type="entry name" value="PML body"/>
</dbReference>
<dbReference type="CD-CODE" id="DEE660B4">
    <property type="entry name" value="Stress granule"/>
</dbReference>
<dbReference type="CD-CODE" id="EF6CBD8C">
    <property type="entry name" value="Synthetic Condensate 000070"/>
</dbReference>
<dbReference type="CD-CODE" id="F17BA747">
    <property type="entry name" value="P62 cluster"/>
</dbReference>
<dbReference type="CD-CODE" id="F5639AB0">
    <property type="entry name" value="Synthetic Condensate 000096"/>
</dbReference>
<dbReference type="ChiTaRS" id="SQSTM1">
    <property type="organism name" value="human"/>
</dbReference>
<dbReference type="EvolutionaryTrace" id="Q13501"/>
<dbReference type="GeneWiki" id="Sequestosome_1"/>
<dbReference type="GenomeRNAi" id="8878"/>
<dbReference type="Pharos" id="Q13501">
    <property type="development level" value="Tbio"/>
</dbReference>
<dbReference type="PRO" id="PR:Q13501"/>
<dbReference type="Proteomes" id="UP000005640">
    <property type="component" value="Chromosome 5"/>
</dbReference>
<dbReference type="RNAct" id="Q13501">
    <property type="molecule type" value="protein"/>
</dbReference>
<dbReference type="Bgee" id="ENSG00000161011">
    <property type="expression patterns" value="Expressed in right adrenal gland cortex and 177 other cell types or tissues"/>
</dbReference>
<dbReference type="ExpressionAtlas" id="Q13501">
    <property type="expression patterns" value="baseline and differential"/>
</dbReference>
<dbReference type="GO" id="GO:0016235">
    <property type="term" value="C:aggresome"/>
    <property type="evidence" value="ECO:0000318"/>
    <property type="project" value="GO_Central"/>
</dbReference>
<dbReference type="GO" id="GO:0044753">
    <property type="term" value="C:amphisome"/>
    <property type="evidence" value="ECO:0000314"/>
    <property type="project" value="ParkinsonsUK-UCL"/>
</dbReference>
<dbReference type="GO" id="GO:0044754">
    <property type="term" value="C:autolysosome"/>
    <property type="evidence" value="ECO:0000314"/>
    <property type="project" value="ParkinsonsUK-UCL"/>
</dbReference>
<dbReference type="GO" id="GO:0005776">
    <property type="term" value="C:autophagosome"/>
    <property type="evidence" value="ECO:0000314"/>
    <property type="project" value="UniProtKB"/>
</dbReference>
<dbReference type="GO" id="GO:0005737">
    <property type="term" value="C:cytoplasm"/>
    <property type="evidence" value="ECO:0000314"/>
    <property type="project" value="UniProtKB"/>
</dbReference>
<dbReference type="GO" id="GO:0005829">
    <property type="term" value="C:cytosol"/>
    <property type="evidence" value="ECO:0000314"/>
    <property type="project" value="HPA"/>
</dbReference>
<dbReference type="GO" id="GO:0005783">
    <property type="term" value="C:endoplasmic reticulum"/>
    <property type="evidence" value="ECO:0007669"/>
    <property type="project" value="UniProtKB-SubCell"/>
</dbReference>
<dbReference type="GO" id="GO:0070062">
    <property type="term" value="C:extracellular exosome"/>
    <property type="evidence" value="ECO:0007005"/>
    <property type="project" value="UniProtKB"/>
</dbReference>
<dbReference type="GO" id="GO:0098978">
    <property type="term" value="C:glutamatergic synapse"/>
    <property type="evidence" value="ECO:0007669"/>
    <property type="project" value="Ensembl"/>
</dbReference>
<dbReference type="GO" id="GO:0016234">
    <property type="term" value="C:inclusion body"/>
    <property type="evidence" value="ECO:0000314"/>
    <property type="project" value="UniProtKB"/>
</dbReference>
<dbReference type="GO" id="GO:0043231">
    <property type="term" value="C:intracellular membrane-bounded organelle"/>
    <property type="evidence" value="ECO:0000314"/>
    <property type="project" value="HPA"/>
</dbReference>
<dbReference type="GO" id="GO:0043232">
    <property type="term" value="C:intracellular membraneless organelle"/>
    <property type="evidence" value="ECO:0000314"/>
    <property type="project" value="UniProtKB"/>
</dbReference>
<dbReference type="GO" id="GO:0005770">
    <property type="term" value="C:late endosome"/>
    <property type="evidence" value="ECO:0007669"/>
    <property type="project" value="UniProtKB-SubCell"/>
</dbReference>
<dbReference type="GO" id="GO:0097413">
    <property type="term" value="C:Lewy body"/>
    <property type="evidence" value="ECO:0007669"/>
    <property type="project" value="Ensembl"/>
</dbReference>
<dbReference type="GO" id="GO:0005739">
    <property type="term" value="C:mitochondrion"/>
    <property type="evidence" value="ECO:0007669"/>
    <property type="project" value="Ensembl"/>
</dbReference>
<dbReference type="GO" id="GO:0005654">
    <property type="term" value="C:nucleoplasm"/>
    <property type="evidence" value="ECO:0000304"/>
    <property type="project" value="Reactome"/>
</dbReference>
<dbReference type="GO" id="GO:0000932">
    <property type="term" value="C:P-body"/>
    <property type="evidence" value="ECO:0000314"/>
    <property type="project" value="UniProtKB"/>
</dbReference>
<dbReference type="GO" id="GO:0000407">
    <property type="term" value="C:phagophore assembly site"/>
    <property type="evidence" value="ECO:0007669"/>
    <property type="project" value="UniProtKB-SubCell"/>
</dbReference>
<dbReference type="GO" id="GO:0016605">
    <property type="term" value="C:PML body"/>
    <property type="evidence" value="ECO:0000314"/>
    <property type="project" value="UniProtKB"/>
</dbReference>
<dbReference type="GO" id="GO:0030017">
    <property type="term" value="C:sarcomere"/>
    <property type="evidence" value="ECO:0007669"/>
    <property type="project" value="UniProtKB-SubCell"/>
</dbReference>
<dbReference type="GO" id="GO:0097225">
    <property type="term" value="C:sperm midpiece"/>
    <property type="evidence" value="ECO:0007669"/>
    <property type="project" value="Ensembl"/>
</dbReference>
<dbReference type="GO" id="GO:0019899">
    <property type="term" value="F:enzyme binding"/>
    <property type="evidence" value="ECO:0000353"/>
    <property type="project" value="UniProtKB"/>
</dbReference>
<dbReference type="GO" id="GO:0042802">
    <property type="term" value="F:identical protein binding"/>
    <property type="evidence" value="ECO:0000353"/>
    <property type="project" value="IntAct"/>
</dbReference>
<dbReference type="GO" id="GO:0035255">
    <property type="term" value="F:ionotropic glutamate receptor binding"/>
    <property type="evidence" value="ECO:0000250"/>
    <property type="project" value="ARUK-UCL"/>
</dbReference>
<dbReference type="GO" id="GO:0070530">
    <property type="term" value="F:K63-linked polyubiquitin modification-dependent protein binding"/>
    <property type="evidence" value="ECO:0000314"/>
    <property type="project" value="UniProtKB"/>
</dbReference>
<dbReference type="GO" id="GO:0140693">
    <property type="term" value="F:molecular condensate scaffold activity"/>
    <property type="evidence" value="ECO:0000314"/>
    <property type="project" value="UniProtKB"/>
</dbReference>
<dbReference type="GO" id="GO:0140313">
    <property type="term" value="F:molecular sequestering activity"/>
    <property type="evidence" value="ECO:0000314"/>
    <property type="project" value="UniProt"/>
</dbReference>
<dbReference type="GO" id="GO:0019901">
    <property type="term" value="F:protein kinase binding"/>
    <property type="evidence" value="ECO:0000314"/>
    <property type="project" value="UniProtKB"/>
</dbReference>
<dbReference type="GO" id="GO:0005080">
    <property type="term" value="F:protein kinase C binding"/>
    <property type="evidence" value="ECO:0000353"/>
    <property type="project" value="UniProtKB"/>
</dbReference>
<dbReference type="GO" id="GO:0140311">
    <property type="term" value="F:protein sequestering activity"/>
    <property type="evidence" value="ECO:0000314"/>
    <property type="project" value="UniProtKB"/>
</dbReference>
<dbReference type="GO" id="GO:0044877">
    <property type="term" value="F:protein-containing complex binding"/>
    <property type="evidence" value="ECO:0007669"/>
    <property type="project" value="Ensembl"/>
</dbReference>
<dbReference type="GO" id="GO:0030674">
    <property type="term" value="F:protein-macromolecule adaptor activity"/>
    <property type="evidence" value="ECO:0000314"/>
    <property type="project" value="UniProtKB"/>
</dbReference>
<dbReference type="GO" id="GO:0030971">
    <property type="term" value="F:receptor tyrosine kinase binding"/>
    <property type="evidence" value="ECO:0000304"/>
    <property type="project" value="ProtInc"/>
</dbReference>
<dbReference type="GO" id="GO:0042169">
    <property type="term" value="F:SH2 domain binding"/>
    <property type="evidence" value="ECO:0000314"/>
    <property type="project" value="UniProtKB"/>
</dbReference>
<dbReference type="GO" id="GO:0035591">
    <property type="term" value="F:signaling adaptor activity"/>
    <property type="evidence" value="ECO:0000314"/>
    <property type="project" value="UniProtKB"/>
</dbReference>
<dbReference type="GO" id="GO:0038023">
    <property type="term" value="F:signaling receptor activity"/>
    <property type="evidence" value="ECO:0000314"/>
    <property type="project" value="UniProt"/>
</dbReference>
<dbReference type="GO" id="GO:0043130">
    <property type="term" value="F:ubiquitin binding"/>
    <property type="evidence" value="ECO:0000314"/>
    <property type="project" value="UniProtKB"/>
</dbReference>
<dbReference type="GO" id="GO:0031625">
    <property type="term" value="F:ubiquitin protein ligase binding"/>
    <property type="evidence" value="ECO:0000314"/>
    <property type="project" value="UniProtKB"/>
</dbReference>
<dbReference type="GO" id="GO:0140036">
    <property type="term" value="F:ubiquitin-modified protein reader activity"/>
    <property type="evidence" value="ECO:0000314"/>
    <property type="project" value="UniProtKB"/>
</dbReference>
<dbReference type="GO" id="GO:0008270">
    <property type="term" value="F:zinc ion binding"/>
    <property type="evidence" value="ECO:0007669"/>
    <property type="project" value="UniProtKB-KW"/>
</dbReference>
<dbReference type="GO" id="GO:0035973">
    <property type="term" value="P:aggrephagy"/>
    <property type="evidence" value="ECO:0000314"/>
    <property type="project" value="UniProtKB"/>
</dbReference>
<dbReference type="GO" id="GO:0006915">
    <property type="term" value="P:apoptotic process"/>
    <property type="evidence" value="ECO:0007669"/>
    <property type="project" value="UniProtKB-KW"/>
</dbReference>
<dbReference type="GO" id="GO:0006914">
    <property type="term" value="P:autophagy"/>
    <property type="evidence" value="ECO:0000314"/>
    <property type="project" value="UniProtKB"/>
</dbReference>
<dbReference type="GO" id="GO:0000422">
    <property type="term" value="P:autophagy of mitochondrion"/>
    <property type="evidence" value="ECO:0000303"/>
    <property type="project" value="ParkinsonsUK-UCL"/>
</dbReference>
<dbReference type="GO" id="GO:0070342">
    <property type="term" value="P:brown fat cell proliferation"/>
    <property type="evidence" value="ECO:0007669"/>
    <property type="project" value="Ensembl"/>
</dbReference>
<dbReference type="GO" id="GO:0030154">
    <property type="term" value="P:cell differentiation"/>
    <property type="evidence" value="ECO:0007669"/>
    <property type="project" value="UniProtKB-KW"/>
</dbReference>
<dbReference type="GO" id="GO:0033554">
    <property type="term" value="P:cellular response to stress"/>
    <property type="evidence" value="ECO:0000314"/>
    <property type="project" value="UniProt"/>
</dbReference>
<dbReference type="GO" id="GO:0016197">
    <property type="term" value="P:endosomal transport"/>
    <property type="evidence" value="ECO:0000304"/>
    <property type="project" value="UniProtKB"/>
</dbReference>
<dbReference type="GO" id="GO:0007032">
    <property type="term" value="P:endosome organization"/>
    <property type="evidence" value="ECO:0000314"/>
    <property type="project" value="UniProtKB"/>
</dbReference>
<dbReference type="GO" id="GO:0097009">
    <property type="term" value="P:energy homeostasis"/>
    <property type="evidence" value="ECO:0007669"/>
    <property type="project" value="Ensembl"/>
</dbReference>
<dbReference type="GO" id="GO:0002376">
    <property type="term" value="P:immune system process"/>
    <property type="evidence" value="ECO:0007669"/>
    <property type="project" value="UniProtKB-KW"/>
</dbReference>
<dbReference type="GO" id="GO:0035556">
    <property type="term" value="P:intracellular signal transduction"/>
    <property type="evidence" value="ECO:0000304"/>
    <property type="project" value="UniProtKB"/>
</dbReference>
<dbReference type="GO" id="GO:0016236">
    <property type="term" value="P:macroautophagy"/>
    <property type="evidence" value="ECO:0000315"/>
    <property type="project" value="GO_Central"/>
</dbReference>
<dbReference type="GO" id="GO:0140694">
    <property type="term" value="P:membraneless organelle assembly"/>
    <property type="evidence" value="ECO:0000314"/>
    <property type="project" value="UniProtKB"/>
</dbReference>
<dbReference type="GO" id="GO:0000423">
    <property type="term" value="P:mitophagy"/>
    <property type="evidence" value="ECO:0000316"/>
    <property type="project" value="ParkinsonsUK-UCL"/>
</dbReference>
<dbReference type="GO" id="GO:0110076">
    <property type="term" value="P:negative regulation of ferroptosis"/>
    <property type="evidence" value="ECO:0000315"/>
    <property type="project" value="UniProtKB"/>
</dbReference>
<dbReference type="GO" id="GO:0031397">
    <property type="term" value="P:negative regulation of protein ubiquitination"/>
    <property type="evidence" value="ECO:0000314"/>
    <property type="project" value="UniProtKB"/>
</dbReference>
<dbReference type="GO" id="GO:0034144">
    <property type="term" value="P:negative regulation of toll-like receptor 4 signaling pathway"/>
    <property type="evidence" value="ECO:0000314"/>
    <property type="project" value="UniProt"/>
</dbReference>
<dbReference type="GO" id="GO:0000122">
    <property type="term" value="P:negative regulation of transcription by RNA polymerase II"/>
    <property type="evidence" value="ECO:0007669"/>
    <property type="project" value="Ensembl"/>
</dbReference>
<dbReference type="GO" id="GO:0000425">
    <property type="term" value="P:pexophagy"/>
    <property type="evidence" value="ECO:0000314"/>
    <property type="project" value="UniProtKB"/>
</dbReference>
<dbReference type="GO" id="GO:0043065">
    <property type="term" value="P:positive regulation of apoptotic process"/>
    <property type="evidence" value="ECO:0000304"/>
    <property type="project" value="Reactome"/>
</dbReference>
<dbReference type="GO" id="GO:0010508">
    <property type="term" value="P:positive regulation of autophagy"/>
    <property type="evidence" value="ECO:0000314"/>
    <property type="project" value="UniProt"/>
</dbReference>
<dbReference type="GO" id="GO:1900273">
    <property type="term" value="P:positive regulation of long-term synaptic potentiation"/>
    <property type="evidence" value="ECO:0000250"/>
    <property type="project" value="ARUK-UCL"/>
</dbReference>
<dbReference type="GO" id="GO:1903078">
    <property type="term" value="P:positive regulation of protein localization to plasma membrane"/>
    <property type="evidence" value="ECO:0000250"/>
    <property type="project" value="ARUK-UCL"/>
</dbReference>
<dbReference type="GO" id="GO:0045944">
    <property type="term" value="P:positive regulation of transcription by RNA polymerase II"/>
    <property type="evidence" value="ECO:0000304"/>
    <property type="project" value="UniProtKB"/>
</dbReference>
<dbReference type="GO" id="GO:0030163">
    <property type="term" value="P:protein catabolic process"/>
    <property type="evidence" value="ECO:0000314"/>
    <property type="project" value="UniProtKB"/>
</dbReference>
<dbReference type="GO" id="GO:0006606">
    <property type="term" value="P:protein import into nucleus"/>
    <property type="evidence" value="ECO:0007669"/>
    <property type="project" value="Ensembl"/>
</dbReference>
<dbReference type="GO" id="GO:0008104">
    <property type="term" value="P:protein localization"/>
    <property type="evidence" value="ECO:0000304"/>
    <property type="project" value="UniProtKB"/>
</dbReference>
<dbReference type="GO" id="GO:1905719">
    <property type="term" value="P:protein localization to perinuclear region of cytoplasm"/>
    <property type="evidence" value="ECO:0000314"/>
    <property type="project" value="UniProtKB"/>
</dbReference>
<dbReference type="GO" id="GO:0071211">
    <property type="term" value="P:protein targeting to vacuole involved in autophagy"/>
    <property type="evidence" value="ECO:0000314"/>
    <property type="project" value="UniProtKB"/>
</dbReference>
<dbReference type="GO" id="GO:0043122">
    <property type="term" value="P:regulation of canonical NF-kappaB signal transduction"/>
    <property type="evidence" value="ECO:0000315"/>
    <property type="project" value="UniProtKB"/>
</dbReference>
<dbReference type="GO" id="GO:0010821">
    <property type="term" value="P:regulation of mitochondrion organization"/>
    <property type="evidence" value="ECO:0000303"/>
    <property type="project" value="ParkinsonsUK-UCL"/>
</dbReference>
<dbReference type="GO" id="GO:0061635">
    <property type="term" value="P:regulation of protein complex stability"/>
    <property type="evidence" value="ECO:0000314"/>
    <property type="project" value="UniProtKB"/>
</dbReference>
<dbReference type="GO" id="GO:0046578">
    <property type="term" value="P:regulation of Ras protein signal transduction"/>
    <property type="evidence" value="ECO:0000303"/>
    <property type="project" value="UniProtKB"/>
</dbReference>
<dbReference type="GO" id="GO:0002931">
    <property type="term" value="P:response to ischemia"/>
    <property type="evidence" value="ECO:0007669"/>
    <property type="project" value="Ensembl"/>
</dbReference>
<dbReference type="GO" id="GO:0098780">
    <property type="term" value="P:response to mitochondrial depolarisation"/>
    <property type="evidence" value="ECO:0000316"/>
    <property type="project" value="ParkinsonsUK-UCL"/>
</dbReference>
<dbReference type="GO" id="GO:0001659">
    <property type="term" value="P:temperature homeostasis"/>
    <property type="evidence" value="ECO:0007669"/>
    <property type="project" value="Ensembl"/>
</dbReference>
<dbReference type="GO" id="GO:0006366">
    <property type="term" value="P:transcription by RNA polymerase II"/>
    <property type="evidence" value="ECO:0007669"/>
    <property type="project" value="Ensembl"/>
</dbReference>
<dbReference type="GO" id="GO:0006511">
    <property type="term" value="P:ubiquitin-dependent protein catabolic process"/>
    <property type="evidence" value="ECO:0000304"/>
    <property type="project" value="ProtInc"/>
</dbReference>
<dbReference type="CDD" id="cd06402">
    <property type="entry name" value="PB1_p62"/>
    <property type="match status" value="1"/>
</dbReference>
<dbReference type="CDD" id="cd14320">
    <property type="entry name" value="UBA_SQSTM"/>
    <property type="match status" value="1"/>
</dbReference>
<dbReference type="CDD" id="cd02340">
    <property type="entry name" value="ZZ_NBR1_like"/>
    <property type="match status" value="1"/>
</dbReference>
<dbReference type="DisProt" id="DP01111"/>
<dbReference type="FunFam" id="1.10.8.10:FF:000034">
    <property type="entry name" value="Sequestosome 1"/>
    <property type="match status" value="1"/>
</dbReference>
<dbReference type="FunFam" id="3.10.20.90:FF:000169">
    <property type="entry name" value="Sequestosome 1"/>
    <property type="match status" value="1"/>
</dbReference>
<dbReference type="FunFam" id="3.30.60.90:FF:000012">
    <property type="entry name" value="Sequestosome 1"/>
    <property type="match status" value="1"/>
</dbReference>
<dbReference type="Gene3D" id="3.30.60.90">
    <property type="match status" value="1"/>
</dbReference>
<dbReference type="Gene3D" id="1.10.8.10">
    <property type="entry name" value="DNA helicase RuvA subunit, C-terminal domain"/>
    <property type="match status" value="1"/>
</dbReference>
<dbReference type="Gene3D" id="3.10.20.90">
    <property type="entry name" value="Phosphatidylinositol 3-kinase Catalytic Subunit, Chain A, domain 1"/>
    <property type="match status" value="1"/>
</dbReference>
<dbReference type="IDEAL" id="IID00383"/>
<dbReference type="InterPro" id="IPR052260">
    <property type="entry name" value="Autophagy_Rcpt_SigReg"/>
</dbReference>
<dbReference type="InterPro" id="IPR053793">
    <property type="entry name" value="PB1-like"/>
</dbReference>
<dbReference type="InterPro" id="IPR000270">
    <property type="entry name" value="PB1_dom"/>
</dbReference>
<dbReference type="InterPro" id="IPR034866">
    <property type="entry name" value="PB1_p62"/>
</dbReference>
<dbReference type="InterPro" id="IPR033741">
    <property type="entry name" value="SQSTM_UBA"/>
</dbReference>
<dbReference type="InterPro" id="IPR015940">
    <property type="entry name" value="UBA"/>
</dbReference>
<dbReference type="InterPro" id="IPR009060">
    <property type="entry name" value="UBA-like_sf"/>
</dbReference>
<dbReference type="InterPro" id="IPR000433">
    <property type="entry name" value="Znf_ZZ"/>
</dbReference>
<dbReference type="InterPro" id="IPR043145">
    <property type="entry name" value="Znf_ZZ_sf"/>
</dbReference>
<dbReference type="PANTHER" id="PTHR15090">
    <property type="entry name" value="SEQUESTOSOME 1-RELATED"/>
    <property type="match status" value="1"/>
</dbReference>
<dbReference type="PANTHER" id="PTHR15090:SF0">
    <property type="entry name" value="SEQUESTOSOME-1"/>
    <property type="match status" value="1"/>
</dbReference>
<dbReference type="Pfam" id="PF00564">
    <property type="entry name" value="PB1"/>
    <property type="match status" value="1"/>
</dbReference>
<dbReference type="Pfam" id="PF16577">
    <property type="entry name" value="UBA_5"/>
    <property type="match status" value="1"/>
</dbReference>
<dbReference type="Pfam" id="PF00569">
    <property type="entry name" value="ZZ"/>
    <property type="match status" value="1"/>
</dbReference>
<dbReference type="SMART" id="SM00666">
    <property type="entry name" value="PB1"/>
    <property type="match status" value="1"/>
</dbReference>
<dbReference type="SMART" id="SM00165">
    <property type="entry name" value="UBA"/>
    <property type="match status" value="1"/>
</dbReference>
<dbReference type="SMART" id="SM00291">
    <property type="entry name" value="ZnF_ZZ"/>
    <property type="match status" value="1"/>
</dbReference>
<dbReference type="SUPFAM" id="SSF54277">
    <property type="entry name" value="CAD &amp; PB1 domains"/>
    <property type="match status" value="1"/>
</dbReference>
<dbReference type="SUPFAM" id="SSF57850">
    <property type="entry name" value="RING/U-box"/>
    <property type="match status" value="1"/>
</dbReference>
<dbReference type="SUPFAM" id="SSF46934">
    <property type="entry name" value="UBA-like"/>
    <property type="match status" value="1"/>
</dbReference>
<dbReference type="PROSITE" id="PS51745">
    <property type="entry name" value="PB1"/>
    <property type="match status" value="1"/>
</dbReference>
<dbReference type="PROSITE" id="PS50030">
    <property type="entry name" value="UBA"/>
    <property type="match status" value="1"/>
</dbReference>
<dbReference type="PROSITE" id="PS01357">
    <property type="entry name" value="ZF_ZZ_1"/>
    <property type="match status" value="1"/>
</dbReference>
<dbReference type="PROSITE" id="PS50135">
    <property type="entry name" value="ZF_ZZ_2"/>
    <property type="match status" value="1"/>
</dbReference>
<proteinExistence type="evidence at protein level"/>
<reference key="1">
    <citation type="journal article" date="1996" name="J. Virol.">
        <title>A novel interleukin-12 p40-related protein induced by latent Epstein-Barr virus infection in B lymphocytes.</title>
        <authorList>
            <person name="Devergne O."/>
            <person name="Hummel M."/>
            <person name="Koeppen H."/>
            <person name="Le Beau M.M."/>
            <person name="Nathanson E.C."/>
            <person name="Kieff E."/>
            <person name="Birkenbach M."/>
        </authorList>
    </citation>
    <scope>NUCLEOTIDE SEQUENCE [MRNA] (ISOFORM 1)</scope>
    <scope>PROTEIN SEQUENCE OF 345-361 AND 394-411</scope>
    <scope>INTERACTION WITH EBI3</scope>
    <source>
        <tissue>B-cell</tissue>
    </source>
</reference>
<reference key="2">
    <citation type="journal article" date="1996" name="Proc. Natl. Acad. Sci. U.S.A.">
        <title>Molecular cloning of a phosphotyrosine-independent ligand of the p56lck SH2 domain.</title>
        <authorList>
            <person name="Joung I."/>
            <person name="Strominger J.L."/>
            <person name="Shin J."/>
        </authorList>
    </citation>
    <scope>NUCLEOTIDE SEQUENCE [MRNA] (ISOFORM 1)</scope>
    <scope>PROTEIN SEQUENCE OF 51-96; 184-187; 213-217; 239-264 AND 268-281</scope>
    <scope>TISSUE SPECIFICITY</scope>
    <scope>INTERACTION WITH LCK</scope>
    <scope>MUTAGENESIS OF TYR-9</scope>
    <source>
        <tissue>Cervix carcinoma</tissue>
    </source>
</reference>
<reference key="3">
    <citation type="journal article" date="2004" name="Nat. Genet.">
        <title>Complete sequencing and characterization of 21,243 full-length human cDNAs.</title>
        <authorList>
            <person name="Ota T."/>
            <person name="Suzuki Y."/>
            <person name="Nishikawa T."/>
            <person name="Otsuki T."/>
            <person name="Sugiyama T."/>
            <person name="Irie R."/>
            <person name="Wakamatsu A."/>
            <person name="Hayashi K."/>
            <person name="Sato H."/>
            <person name="Nagai K."/>
            <person name="Kimura K."/>
            <person name="Makita H."/>
            <person name="Sekine M."/>
            <person name="Obayashi M."/>
            <person name="Nishi T."/>
            <person name="Shibahara T."/>
            <person name="Tanaka T."/>
            <person name="Ishii S."/>
            <person name="Yamamoto J."/>
            <person name="Saito K."/>
            <person name="Kawai Y."/>
            <person name="Isono Y."/>
            <person name="Nakamura Y."/>
            <person name="Nagahari K."/>
            <person name="Murakami K."/>
            <person name="Yasuda T."/>
            <person name="Iwayanagi T."/>
            <person name="Wagatsuma M."/>
            <person name="Shiratori A."/>
            <person name="Sudo H."/>
            <person name="Hosoiri T."/>
            <person name="Kaku Y."/>
            <person name="Kodaira H."/>
            <person name="Kondo H."/>
            <person name="Sugawara M."/>
            <person name="Takahashi M."/>
            <person name="Kanda K."/>
            <person name="Yokoi T."/>
            <person name="Furuya T."/>
            <person name="Kikkawa E."/>
            <person name="Omura Y."/>
            <person name="Abe K."/>
            <person name="Kamihara K."/>
            <person name="Katsuta N."/>
            <person name="Sato K."/>
            <person name="Tanikawa M."/>
            <person name="Yamazaki M."/>
            <person name="Ninomiya K."/>
            <person name="Ishibashi T."/>
            <person name="Yamashita H."/>
            <person name="Murakawa K."/>
            <person name="Fujimori K."/>
            <person name="Tanai H."/>
            <person name="Kimata M."/>
            <person name="Watanabe M."/>
            <person name="Hiraoka S."/>
            <person name="Chiba Y."/>
            <person name="Ishida S."/>
            <person name="Ono Y."/>
            <person name="Takiguchi S."/>
            <person name="Watanabe S."/>
            <person name="Yosida M."/>
            <person name="Hotuta T."/>
            <person name="Kusano J."/>
            <person name="Kanehori K."/>
            <person name="Takahashi-Fujii A."/>
            <person name="Hara H."/>
            <person name="Tanase T.-O."/>
            <person name="Nomura Y."/>
            <person name="Togiya S."/>
            <person name="Komai F."/>
            <person name="Hara R."/>
            <person name="Takeuchi K."/>
            <person name="Arita M."/>
            <person name="Imose N."/>
            <person name="Musashino K."/>
            <person name="Yuuki H."/>
            <person name="Oshima A."/>
            <person name="Sasaki N."/>
            <person name="Aotsuka S."/>
            <person name="Yoshikawa Y."/>
            <person name="Matsunawa H."/>
            <person name="Ichihara T."/>
            <person name="Shiohata N."/>
            <person name="Sano S."/>
            <person name="Moriya S."/>
            <person name="Momiyama H."/>
            <person name="Satoh N."/>
            <person name="Takami S."/>
            <person name="Terashima Y."/>
            <person name="Suzuki O."/>
            <person name="Nakagawa S."/>
            <person name="Senoh A."/>
            <person name="Mizoguchi H."/>
            <person name="Goto Y."/>
            <person name="Shimizu F."/>
            <person name="Wakebe H."/>
            <person name="Hishigaki H."/>
            <person name="Watanabe T."/>
            <person name="Sugiyama A."/>
            <person name="Takemoto M."/>
            <person name="Kawakami B."/>
            <person name="Yamazaki M."/>
            <person name="Watanabe K."/>
            <person name="Kumagai A."/>
            <person name="Itakura S."/>
            <person name="Fukuzumi Y."/>
            <person name="Fujimori Y."/>
            <person name="Komiyama M."/>
            <person name="Tashiro H."/>
            <person name="Tanigami A."/>
            <person name="Fujiwara T."/>
            <person name="Ono T."/>
            <person name="Yamada K."/>
            <person name="Fujii Y."/>
            <person name="Ozaki K."/>
            <person name="Hirao M."/>
            <person name="Ohmori Y."/>
            <person name="Kawabata A."/>
            <person name="Hikiji T."/>
            <person name="Kobatake N."/>
            <person name="Inagaki H."/>
            <person name="Ikema Y."/>
            <person name="Okamoto S."/>
            <person name="Okitani R."/>
            <person name="Kawakami T."/>
            <person name="Noguchi S."/>
            <person name="Itoh T."/>
            <person name="Shigeta K."/>
            <person name="Senba T."/>
            <person name="Matsumura K."/>
            <person name="Nakajima Y."/>
            <person name="Mizuno T."/>
            <person name="Morinaga M."/>
            <person name="Sasaki M."/>
            <person name="Togashi T."/>
            <person name="Oyama M."/>
            <person name="Hata H."/>
            <person name="Watanabe M."/>
            <person name="Komatsu T."/>
            <person name="Mizushima-Sugano J."/>
            <person name="Satoh T."/>
            <person name="Shirai Y."/>
            <person name="Takahashi Y."/>
            <person name="Nakagawa K."/>
            <person name="Okumura K."/>
            <person name="Nagase T."/>
            <person name="Nomura N."/>
            <person name="Kikuchi H."/>
            <person name="Masuho Y."/>
            <person name="Yamashita R."/>
            <person name="Nakai K."/>
            <person name="Yada T."/>
            <person name="Nakamura Y."/>
            <person name="Ohara O."/>
            <person name="Isogai T."/>
            <person name="Sugano S."/>
        </authorList>
    </citation>
    <scope>NUCLEOTIDE SEQUENCE [LARGE SCALE MRNA] (ISOFORMS 1 AND 2)</scope>
    <source>
        <tissue>Caudate nucleus</tissue>
        <tissue>Trachea</tissue>
    </source>
</reference>
<reference key="4">
    <citation type="journal article" date="2004" name="Nature">
        <title>The DNA sequence and comparative analysis of human chromosome 5.</title>
        <authorList>
            <person name="Schmutz J."/>
            <person name="Martin J."/>
            <person name="Terry A."/>
            <person name="Couronne O."/>
            <person name="Grimwood J."/>
            <person name="Lowry S."/>
            <person name="Gordon L.A."/>
            <person name="Scott D."/>
            <person name="Xie G."/>
            <person name="Huang W."/>
            <person name="Hellsten U."/>
            <person name="Tran-Gyamfi M."/>
            <person name="She X."/>
            <person name="Prabhakar S."/>
            <person name="Aerts A."/>
            <person name="Altherr M."/>
            <person name="Bajorek E."/>
            <person name="Black S."/>
            <person name="Branscomb E."/>
            <person name="Caoile C."/>
            <person name="Challacombe J.F."/>
            <person name="Chan Y.M."/>
            <person name="Denys M."/>
            <person name="Detter J.C."/>
            <person name="Escobar J."/>
            <person name="Flowers D."/>
            <person name="Fotopulos D."/>
            <person name="Glavina T."/>
            <person name="Gomez M."/>
            <person name="Gonzales E."/>
            <person name="Goodstein D."/>
            <person name="Grigoriev I."/>
            <person name="Groza M."/>
            <person name="Hammon N."/>
            <person name="Hawkins T."/>
            <person name="Haydu L."/>
            <person name="Israni S."/>
            <person name="Jett J."/>
            <person name="Kadner K."/>
            <person name="Kimball H."/>
            <person name="Kobayashi A."/>
            <person name="Lopez F."/>
            <person name="Lou Y."/>
            <person name="Martinez D."/>
            <person name="Medina C."/>
            <person name="Morgan J."/>
            <person name="Nandkeshwar R."/>
            <person name="Noonan J.P."/>
            <person name="Pitluck S."/>
            <person name="Pollard M."/>
            <person name="Predki P."/>
            <person name="Priest J."/>
            <person name="Ramirez L."/>
            <person name="Retterer J."/>
            <person name="Rodriguez A."/>
            <person name="Rogers S."/>
            <person name="Salamov A."/>
            <person name="Salazar A."/>
            <person name="Thayer N."/>
            <person name="Tice H."/>
            <person name="Tsai M."/>
            <person name="Ustaszewska A."/>
            <person name="Vo N."/>
            <person name="Wheeler J."/>
            <person name="Wu K."/>
            <person name="Yang J."/>
            <person name="Dickson M."/>
            <person name="Cheng J.-F."/>
            <person name="Eichler E.E."/>
            <person name="Olsen A."/>
            <person name="Pennacchio L.A."/>
            <person name="Rokhsar D.S."/>
            <person name="Richardson P."/>
            <person name="Lucas S.M."/>
            <person name="Myers R.M."/>
            <person name="Rubin E.M."/>
        </authorList>
    </citation>
    <scope>NUCLEOTIDE SEQUENCE [LARGE SCALE GENOMIC DNA]</scope>
</reference>
<reference key="5">
    <citation type="journal article" date="2004" name="Genome Res.">
        <title>The status, quality, and expansion of the NIH full-length cDNA project: the Mammalian Gene Collection (MGC).</title>
        <authorList>
            <consortium name="The MGC Project Team"/>
        </authorList>
    </citation>
    <scope>NUCLEOTIDE SEQUENCE [LARGE SCALE MRNA] (ISOFORMS 1 AND 2)</scope>
    <source>
        <tissue>Pancreas</tissue>
        <tissue>Placenta</tissue>
        <tissue>Skin</tissue>
        <tissue>Uterus</tissue>
    </source>
</reference>
<reference key="6">
    <citation type="journal article" date="1998" name="FEBS Lett.">
        <title>Genomic structure and promoter analysis of the p62 gene encoding a non-proteasomal multiubiquitin chain binding protein.</title>
        <authorList>
            <person name="Vadlamudi R.K."/>
            <person name="Shin J."/>
        </authorList>
    </citation>
    <scope>NUCLEOTIDE SEQUENCE [GENOMIC DNA] OF 1-72</scope>
    <scope>INDUCTION</scope>
</reference>
<reference key="7">
    <citation type="journal article" date="1999" name="Am. J. Pathol.">
        <title>Analysis of intracytoplasmic hyaline bodies in a hepatocellular carcinoma. Demonstration of p62 as major constituent.</title>
        <authorList>
            <person name="Stumptner C."/>
            <person name="Heid H."/>
            <person name="Fuchsbichler A."/>
            <person name="Hauser H."/>
            <person name="Mischinger H.-J."/>
            <person name="Zatloukal K."/>
            <person name="Denk H."/>
        </authorList>
    </citation>
    <scope>PROTEIN SEQUENCE OF 51-60; 166-174 AND 379-388</scope>
</reference>
<reference key="8">
    <citation type="journal article" date="1995" name="Proc. Natl. Acad. Sci. U.S.A.">
        <title>Phosphotyrosine-independent binding of a 62-kDa protein to the src homology 2 (SH2) domain of p56lck and its regulation by phosphorylation of Ser-59 in the lck unique N-terminal region.</title>
        <authorList>
            <person name="Park I."/>
            <person name="Chung J."/>
            <person name="Walsh C.T."/>
            <person name="Yun Y."/>
            <person name="Strominger J.L."/>
            <person name="Shin J."/>
        </authorList>
    </citation>
    <scope>INTERACTION WITH LCK AND RASA1</scope>
</reference>
<reference key="9">
    <citation type="journal article" date="1996" name="J. Biol. Chem.">
        <title>p62, a phosphotyrosine-independent ligand of the SH2 domain of p56lck, belongs to a new class of ubiquitin-binding proteins.</title>
        <authorList>
            <person name="Vadlamudi R.K."/>
            <person name="Joung I."/>
            <person name="Strominger J.L."/>
            <person name="Shin J."/>
        </authorList>
    </citation>
    <scope>INTERACTION WITH UBIQUITIN</scope>
</reference>
<reference key="10">
    <citation type="journal article" date="1996" name="J. Biol. Chem.">
        <title>A p56(lck) ligand serves as a coactivator of an orphan nuclear hormone receptor.</title>
        <authorList>
            <person name="Marcus S.L."/>
            <person name="Winrow C.J."/>
            <person name="Capone J.P."/>
            <person name="Rachubinski R.A."/>
        </authorList>
    </citation>
    <scope>INTERACTION WITH NR2F2</scope>
</reference>
<reference key="11">
    <citation type="journal article" date="1998" name="Mol. Cell. Biol.">
        <title>Localization of atypical protein kinase C isoforms into lysosome-targeted endosomes through interaction with p62.</title>
        <authorList>
            <person name="Sanchez P."/>
            <person name="De Carcer G."/>
            <person name="Sandoval I.V."/>
            <person name="Moscat J."/>
            <person name="Diaz-Meco M.T."/>
        </authorList>
    </citation>
    <scope>INTERACTION WITH PRKCI AND PRKCZ</scope>
    <scope>SUBCELLULAR LOCATION</scope>
</reference>
<reference key="12">
    <citation type="journal article" date="1999" name="EMBO J.">
        <title>The interaction of p62 with RIP links the atypical PKCs to NF-kappaB activation.</title>
        <authorList>
            <person name="Sanz L."/>
            <person name="Sanchez P."/>
            <person name="Lallena M.-J."/>
            <person name="Diaz-Meco M.T."/>
            <person name="Moscat J."/>
        </authorList>
    </citation>
    <scope>INTERACTION WITH RIPK1; PRKCZ; PRKCI; IKBKB; TRADD AND TNFRSF1A</scope>
    <scope>FUNCTION</scope>
</reference>
<reference key="13">
    <citation type="journal article" date="2000" name="Biochem. Biophys. Res. Commun.">
        <title>p62 functions as a p38 MAP kinase regulator.</title>
        <authorList>
            <person name="Sudo T."/>
            <person name="Maruyama M."/>
            <person name="Osada H."/>
        </authorList>
    </citation>
    <scope>INTERACTION WITH MAPKAPK5</scope>
    <scope>SUBCELLULAR LOCATION</scope>
</reference>
<reference key="14">
    <citation type="journal article" date="2000" name="EMBO J.">
        <title>The atypical PKC-interacting protein p62 channels NF-kappaB activation by the IL-1-TRAF6 pathway.</title>
        <authorList>
            <person name="Sanz L."/>
            <person name="Diaz-Meco M.T."/>
            <person name="Nakano H."/>
            <person name="Moscat J."/>
        </authorList>
    </citation>
    <scope>INTERACTION WITH TRAF6 AND RIPK1</scope>
    <scope>DOMAIN</scope>
    <scope>FUNCTION</scope>
</reference>
<reference key="15">
    <citation type="journal article" date="2001" name="J. Biol. Chem.">
        <title>The atypical protein kinase C-interacting protein p62 is a scaffold for NF-kappaB activation by nerve growth factor.</title>
        <authorList>
            <person name="Wooten M.W."/>
            <person name="Seibenhener M.L."/>
            <person name="Mamidipudi V."/>
            <person name="Diaz-Meco M.T."/>
            <person name="Barker P.A."/>
            <person name="Moscat J."/>
        </authorList>
    </citation>
    <scope>INTERACTION WITH NTRK1; TRAF6; NGFR AND PRKCZ</scope>
    <scope>FUNCTION</scope>
</reference>
<reference key="16">
    <citation type="journal article" date="2002" name="Am. J. Pathol.">
        <title>p62 Is a common component of cytoplasmic inclusions in protein aggregation diseases.</title>
        <authorList>
            <person name="Zatloukal K."/>
            <person name="Stumptner C."/>
            <person name="Fuchsbichler A."/>
            <person name="Heid H."/>
            <person name="Schnoelzer M."/>
            <person name="Kenner L."/>
            <person name="Kleinert R."/>
            <person name="Prinz M."/>
            <person name="Aguzzi A."/>
            <person name="Denk H."/>
        </authorList>
    </citation>
    <scope>SUBCELLULAR LOCATION</scope>
    <scope>IDENTIFICATION BY MASS SPECTROMETRY</scope>
</reference>
<reference key="17">
    <citation type="journal article" date="2002" name="FEBS Lett.">
        <title>p62 forms a ternary complex with PKCzeta and PAR-4 and antagonizes PAR-4-induced PKCzeta inhibition.</title>
        <authorList>
            <person name="Chang S."/>
            <person name="Kim J.H."/>
            <person name="Shin J."/>
        </authorList>
    </citation>
    <scope>INTERACTION WITH PAWR AND PRKCZ</scope>
</reference>
<reference key="18">
    <citation type="journal article" date="2002" name="Hepatology">
        <title>Mallory body -- a disease-associated type of sequestosome.</title>
        <authorList>
            <person name="Stumptner C."/>
            <person name="Fuchsbichler A."/>
            <person name="Heid H."/>
            <person name="Zatloukal K."/>
            <person name="Denk H."/>
        </authorList>
    </citation>
    <scope>SUBCELLULAR LOCATION</scope>
</reference>
<reference key="19">
    <citation type="journal article" date="2003" name="J. Biol. Chem.">
        <title>Association of the atypical protein kinase C-interacting protein p62/ZIP with nerve growth factor receptor TrkA regulates receptor trafficking and Erk5 signaling.</title>
        <authorList>
            <person name="Geetha T."/>
            <person name="Wooten M.W."/>
        </authorList>
    </citation>
    <scope>INTERACTION WITH NTRK1; NTRK2 AND NTRK3</scope>
    <scope>SUBCELLULAR LOCATION</scope>
    <scope>FUNCTION</scope>
</reference>
<reference key="20">
    <citation type="journal article" date="2003" name="J. Biol. Chem.">
        <title>Interaction codes within the family of mammalian Phox and Bem1p domain-containing proteins.</title>
        <authorList>
            <person name="Lamark T."/>
            <person name="Perander M."/>
            <person name="Outzen H."/>
            <person name="Kristiansen K."/>
            <person name="Oevervatn A."/>
            <person name="Michaelsen E."/>
            <person name="Bjoerkoey G."/>
            <person name="Johansen T."/>
        </authorList>
    </citation>
    <scope>INTERACTION WITH PRKCI; PRKCZ; MAP2K5 AND NBR1</scope>
    <scope>DOMAIN</scope>
    <scope>MUTAGENESIS OF LYS-7; LYS-13; 21-ARG-ARG-22; TYR-67; ASP-69; ASP-71; ASP-73; ASP-80 AND GLU-82</scope>
    <scope>DIMERIZATION</scope>
</reference>
<reference key="21">
    <citation type="journal article" date="2003" name="Mol. Cell">
        <title>PB1 domain-mediated heterodimerization in NADPH oxidase and signaling complexes of atypical protein kinase C with Par6 and p62.</title>
        <authorList>
            <person name="Wilson M.I."/>
            <person name="Gill D.J."/>
            <person name="Perisic O."/>
            <person name="Quinn M.T."/>
            <person name="Williams R.L."/>
        </authorList>
    </citation>
    <scope>INTERACTION WITH PRKCZ</scope>
    <scope>DOMAIN</scope>
    <scope>OLIGOMERIZATION</scope>
    <scope>MUTAGENESIS OF LYS-7; ASP-69 AND ASP-73</scope>
</reference>
<reference key="22">
    <citation type="journal article" date="2003" name="Oncogene">
        <title>p62 overexpression in breast tumors and regulation by prostate-derived Ets factor in breast cancer cells.</title>
        <authorList>
            <person name="Thompson H.G.R."/>
            <person name="Harris J.W."/>
            <person name="Wold B.J."/>
            <person name="Lin F."/>
            <person name="Brody J.P."/>
        </authorList>
    </citation>
    <scope>INDUCTION</scope>
</reference>
<reference key="23">
    <citation type="journal article" date="2004" name="Brain Res.">
        <title>Transcriptional activation of p62/A170/ZIP during the formation of the aggregates: possible mechanisms and the role in Lewy body formation in Parkinson's disease.</title>
        <authorList>
            <person name="Nakaso K."/>
            <person name="Yoshimoto Y."/>
            <person name="Nakano T."/>
            <person name="Takeshima T."/>
            <person name="Fukuhara Y."/>
            <person name="Yasui K."/>
            <person name="Araga S."/>
            <person name="Yanagawa T."/>
            <person name="Ishii T."/>
            <person name="Nakashima K."/>
        </authorList>
    </citation>
    <scope>SUBCELLULAR LOCATION</scope>
</reference>
<reference key="24">
    <citation type="journal article" date="2004" name="Mol. Cell. Biol.">
        <title>Sequestosome 1/p62 is a polyubiquitin chain binding protein involved in ubiquitin proteasome degradation.</title>
        <authorList>
            <person name="Seibenhener M.L."/>
            <person name="Babu J.R."/>
            <person name="Geetha T."/>
            <person name="Wong H.C."/>
            <person name="Krishna N.R."/>
            <person name="Wooten M.W."/>
        </authorList>
    </citation>
    <scope>INTERACTION WITH TRAF6; PSMC2 AND PSMD4</scope>
    <scope>DOMAIN</scope>
    <scope>MUTAGENESIS OF LEU-398; PHE-406; LEU-413; LEU-417 AND ILE-431</scope>
    <scope>FUNCTION</scope>
</reference>
<reference key="25">
    <citation type="journal article" date="2005" name="J. Biol. Chem.">
        <title>The p62 scaffold regulates nerve growth factor-induced NF-kappaB activation by influencing TRAF6 polyubiquitination.</title>
        <authorList>
            <person name="Wooten M.W."/>
            <person name="Geetha T."/>
            <person name="Seibenhener M.L."/>
            <person name="Babu J.R."/>
            <person name="Diaz-Meco M.T."/>
            <person name="Moscat J."/>
        </authorList>
    </citation>
    <scope>FUNCTION</scope>
</reference>
<reference key="26">
    <citation type="journal article" date="2005" name="J. Cell Biol.">
        <title>p62/SQSTM1 forms protein aggregates degraded by autophagy and has a protective effect on huntingtin-induced cell death.</title>
        <authorList>
            <person name="Bjorkoy G."/>
            <person name="Lamark T."/>
            <person name="Brech A."/>
            <person name="Outzen H."/>
            <person name="Perander M."/>
            <person name="Overvatn A."/>
            <person name="Stenmark H."/>
            <person name="Johansen T."/>
        </authorList>
    </citation>
    <scope>FUNCTION</scope>
    <scope>SUBCELLULAR LOCATION</scope>
    <scope>HOMOOLIGOMERIZATION</scope>
    <scope>INTERACTION WITH MAP1LC3B</scope>
    <scope>POSSIBLE PROTECTIVE ROLE IN HD</scope>
    <scope>MUTAGENESIS OF ASP-69 AND ILE-431</scope>
</reference>
<reference key="27">
    <citation type="journal article" date="2005" name="J. Neurochem.">
        <title>Sequestosome 1/p62 shuttles polyubiquitinated tau for proteasomal degradation.</title>
        <authorList>
            <person name="Babu J.R."/>
            <person name="Geetha T."/>
            <person name="Wooten M.W."/>
        </authorList>
    </citation>
    <scope>INTERACTION WITH MAPT</scope>
    <scope>DOMAIN</scope>
    <scope>SUBCELLULAR LOCATION</scope>
    <scope>FUNCTION</scope>
</reference>
<reference key="28">
    <citation type="journal article" date="2005" name="Mol. Cell. Biol.">
        <title>The LIM protein Ajuba influences interleukin-1-induced NF-kappaB activation by affecting the assembly and activity of the protein kinase Czeta/p62/TRAF6 signaling complex.</title>
        <authorList>
            <person name="Feng Y."/>
            <person name="Longmore G.D."/>
        </authorList>
    </citation>
    <scope>INTERACTION WITH AJUBA AND LIMD1</scope>
</reference>
<reference key="29">
    <citation type="journal article" date="2005" name="Mol. Cell. Neurosci.">
        <title>Inhibition of sequestosome 1/p62 up-regulation prevents aggregation of ubiquitinated proteins induced by prostaglandin J2 without reducing its neurotoxicity.</title>
        <authorList>
            <person name="Wang Z."/>
            <person name="Figueiredo-Pereira M.E."/>
        </authorList>
    </citation>
    <scope>INDUCTION</scope>
    <scope>FUNCTION</scope>
</reference>
<reference key="30">
    <citation type="journal article" date="2005" name="Nat. Biotechnol.">
        <title>Immunoaffinity profiling of tyrosine phosphorylation in cancer cells.</title>
        <authorList>
            <person name="Rush J."/>
            <person name="Moritz A."/>
            <person name="Lee K.A."/>
            <person name="Guo A."/>
            <person name="Goss V.L."/>
            <person name="Spek E.J."/>
            <person name="Zhang H."/>
            <person name="Zha X.-M."/>
            <person name="Polakiewicz R.D."/>
            <person name="Comb M.J."/>
        </authorList>
    </citation>
    <scope>PHOSPHORYLATION [LARGE SCALE ANALYSIS] AT TYR-148</scope>
    <scope>IDENTIFICATION BY MASS SPECTROMETRY [LARGE SCALE ANALYSIS]</scope>
</reference>
<reference key="31">
    <citation type="journal article" date="2005" name="Science">
        <title>The kinase domain of titin controls muscle gene expression and protein turnover.</title>
        <authorList>
            <person name="Lange S."/>
            <person name="Xiang F."/>
            <person name="Yakovenko A."/>
            <person name="Vihola A."/>
            <person name="Hackman P."/>
            <person name="Rostkova E."/>
            <person name="Kristensen J."/>
            <person name="Brandmeier B."/>
            <person name="Franzen G."/>
            <person name="Hedberg B."/>
            <person name="Gunnarsson L.G."/>
            <person name="Hughes S.M."/>
            <person name="Marchand S."/>
            <person name="Sejersen T."/>
            <person name="Richard I."/>
            <person name="Edstroem L."/>
            <person name="Ehler E."/>
            <person name="Udd B."/>
            <person name="Gautel M."/>
        </authorList>
    </citation>
    <scope>INTERACTION WITH NBR1 AND TRIM55</scope>
    <scope>PHOSPHORYLATION</scope>
    <scope>DOMAIN</scope>
    <scope>FUNCTION</scope>
</reference>
<reference key="32">
    <citation type="journal article" date="2006" name="Cell">
        <title>Global, in vivo, and site-specific phosphorylation dynamics in signaling networks.</title>
        <authorList>
            <person name="Olsen J.V."/>
            <person name="Blagoev B."/>
            <person name="Gnad F."/>
            <person name="Macek B."/>
            <person name="Kumar C."/>
            <person name="Mortensen P."/>
            <person name="Mann M."/>
        </authorList>
    </citation>
    <scope>PHOSPHORYLATION [LARGE SCALE ANALYSIS] AT SER-332</scope>
    <scope>IDENTIFICATION BY MASS SPECTROMETRY [LARGE SCALE ANALYSIS]</scope>
    <source>
        <tissue>Cervix carcinoma</tissue>
    </source>
</reference>
<reference key="33">
    <citation type="journal article" date="2006" name="Nat. Biotechnol.">
        <title>A probability-based approach for high-throughput protein phosphorylation analysis and site localization.</title>
        <authorList>
            <person name="Beausoleil S.A."/>
            <person name="Villen J."/>
            <person name="Gerber S.A."/>
            <person name="Rush J."/>
            <person name="Gygi S.P."/>
        </authorList>
    </citation>
    <scope>PHOSPHORYLATION [LARGE SCALE ANALYSIS] AT THR-269 AND SER-272</scope>
    <scope>IDENTIFICATION BY MASS SPECTROMETRY [LARGE SCALE ANALYSIS]</scope>
    <source>
        <tissue>Cervix carcinoma</tissue>
    </source>
</reference>
<reference key="34">
    <citation type="journal article" date="2007" name="J. Biol. Chem.">
        <title>p62/SQSTM1 binds directly to Atg8/LC3 to facilitate degradation of ubiquitinated protein aggregates by autophagy.</title>
        <authorList>
            <person name="Pankiv S."/>
            <person name="Clausen T.H."/>
            <person name="Lamark T."/>
            <person name="Brech A."/>
            <person name="Bruun J.A."/>
            <person name="Outzen H."/>
            <person name="Overvatn A."/>
            <person name="Bjorkoy G."/>
            <person name="Johansen T."/>
        </authorList>
    </citation>
    <scope>FUNCTION</scope>
    <scope>INTERACTION WITH GABARAP; GABARAPL1; GABARAPL2; MAP1LC3A AND MAP1LC3B</scope>
    <scope>MUTAGENESIS OF 323-GLU-GLU-324; SER-332; 335-ASP--ASP-337; TRP-338 AND SER-342</scope>
</reference>
<reference key="35">
    <citation type="journal article" date="2013" name="Cell Host Microbe">
        <title>The globally disseminated M1T1 clone of group A Streptococcus evades autophagy for intracellular replication.</title>
        <authorList>
            <person name="Barnett T.C."/>
            <person name="Liebl D."/>
            <person name="Seymour L.M."/>
            <person name="Gillen C.M."/>
            <person name="Lim J.Y."/>
            <person name="Larock C.N."/>
            <person name="Davies M.R."/>
            <person name="Schulz B.L."/>
            <person name="Nizet V."/>
            <person name="Teasdale R.D."/>
            <person name="Walker M.J."/>
        </authorList>
    </citation>
    <scope>PROTEOLYTIC CLEAVAGE (MICROBIAL INFECTION)</scope>
</reference>
<reference key="36">
    <citation type="journal article" date="2008" name="Mol. Cell">
        <title>Kinase-selective enrichment enables quantitative phosphoproteomics of the kinome across the cell cycle.</title>
        <authorList>
            <person name="Daub H."/>
            <person name="Olsen J.V."/>
            <person name="Bairlein M."/>
            <person name="Gnad F."/>
            <person name="Oppermann F.S."/>
            <person name="Korner R."/>
            <person name="Greff Z."/>
            <person name="Keri G."/>
            <person name="Stemmann O."/>
            <person name="Mann M."/>
        </authorList>
    </citation>
    <scope>PHOSPHORYLATION [LARGE SCALE ANALYSIS] AT THR-269 AND SER-272</scope>
    <scope>IDENTIFICATION BY MASS SPECTROMETRY [LARGE SCALE ANALYSIS]</scope>
    <source>
        <tissue>Cervix carcinoma</tissue>
    </source>
</reference>
<reference key="37">
    <citation type="journal article" date="2008" name="Proc. Natl. Acad. Sci. U.S.A.">
        <title>A quantitative atlas of mitotic phosphorylation.</title>
        <authorList>
            <person name="Dephoure N."/>
            <person name="Zhou C."/>
            <person name="Villen J."/>
            <person name="Beausoleil S.A."/>
            <person name="Bakalarski C.E."/>
            <person name="Elledge S.J."/>
            <person name="Gygi S.P."/>
        </authorList>
    </citation>
    <scope>PHOSPHORYLATION [LARGE SCALE ANALYSIS] AT SER-170; THR-269; SER-272; SER-328; SER-332 AND SER-366</scope>
    <scope>IDENTIFICATION BY MASS SPECTROMETRY [LARGE SCALE ANALYSIS]</scope>
    <source>
        <tissue>Cervix carcinoma</tissue>
    </source>
</reference>
<reference key="38">
    <citation type="journal article" date="2009" name="Anal. Chem.">
        <title>Lys-N and trypsin cover complementary parts of the phosphoproteome in a refined SCX-based approach.</title>
        <authorList>
            <person name="Gauci S."/>
            <person name="Helbig A.O."/>
            <person name="Slijper M."/>
            <person name="Krijgsveld J."/>
            <person name="Heck A.J."/>
            <person name="Mohammed S."/>
        </authorList>
    </citation>
    <scope>IDENTIFICATION BY MASS SPECTROMETRY [LARGE SCALE ANALYSIS]</scope>
</reference>
<reference key="39">
    <citation type="journal article" date="2009" name="Mol. Cell. Proteomics">
        <title>Large-scale proteomics analysis of the human kinome.</title>
        <authorList>
            <person name="Oppermann F.S."/>
            <person name="Gnad F."/>
            <person name="Olsen J.V."/>
            <person name="Hornberger R."/>
            <person name="Greff Z."/>
            <person name="Keri G."/>
            <person name="Mann M."/>
            <person name="Daub H."/>
        </authorList>
    </citation>
    <scope>IDENTIFICATION BY MASS SPECTROMETRY [LARGE SCALE ANALYSIS]</scope>
</reference>
<reference key="40">
    <citation type="journal article" date="2009" name="Sci. Signal.">
        <title>Quantitative phosphoproteomic analysis of T cell receptor signaling reveals system-wide modulation of protein-protein interactions.</title>
        <authorList>
            <person name="Mayya V."/>
            <person name="Lundgren D.H."/>
            <person name="Hwang S.-I."/>
            <person name="Rezaul K."/>
            <person name="Wu L."/>
            <person name="Eng J.K."/>
            <person name="Rodionov V."/>
            <person name="Han D.K."/>
        </authorList>
    </citation>
    <scope>PHOSPHORYLATION [LARGE SCALE ANALYSIS] AT SER-355 AND SER-361</scope>
    <scope>IDENTIFICATION BY MASS SPECTROMETRY [LARGE SCALE ANALYSIS]</scope>
    <source>
        <tissue>Leukemic T-cell</tissue>
    </source>
</reference>
<reference key="41">
    <citation type="journal article" date="2010" name="Autophagy">
        <title>p62/SQSTM1 and ALFY interact to facilitate the formation of p62 bodies/ALIS and their degradation by autophagy.</title>
        <authorList>
            <person name="Clausen T.H."/>
            <person name="Lamark T."/>
            <person name="Isakson P."/>
            <person name="Finley K."/>
            <person name="Larsen K.B."/>
            <person name="Brech A."/>
            <person name="Overvatn A."/>
            <person name="Stenmark H."/>
            <person name="Bjorkoy G."/>
            <person name="Simonsen A."/>
            <person name="Johansen T."/>
        </authorList>
    </citation>
    <scope>FUNCTION</scope>
    <scope>INTERACTION WITH WDFY3</scope>
    <scope>SUBCELLULAR LOCATION</scope>
</reference>
<reference key="42">
    <citation type="journal article" date="2010" name="Autophagy">
        <title>Keap1 facilitates p62-mediated ubiquitin aggregate clearance via autophagy.</title>
        <authorList>
            <person name="Fan W."/>
            <person name="Tang Z."/>
            <person name="Chen D."/>
            <person name="Moughon D."/>
            <person name="Ding X."/>
            <person name="Chen S."/>
            <person name="Zhu M."/>
            <person name="Zhong Q."/>
        </authorList>
    </citation>
    <scope>INTERACTION WITH KEAP1</scope>
</reference>
<reference key="43">
    <citation type="journal article" date="2010" name="J. Biol. Chem.">
        <title>p62/SQSTM1 is a target gene for transcription factor NRF2 and creates a positive feedback loop by inducing antioxidant response element-driven gene transcription.</title>
        <authorList>
            <person name="Jain A."/>
            <person name="Lamark T."/>
            <person name="Sjoettem E."/>
            <person name="Larsen K.B."/>
            <person name="Awuh J.A."/>
            <person name="Oevervatn A."/>
            <person name="McMahon M."/>
            <person name="Hayes J.D."/>
            <person name="Johansen T."/>
        </authorList>
    </citation>
    <scope>FUNCTION</scope>
    <scope>INTERACTION WITH KEAP1</scope>
    <scope>INDUCTION</scope>
    <scope>MUTAGENESIS OF ASP-347; THR-350; GLY-351 AND GLU-352</scope>
</reference>
<reference key="44">
    <citation type="journal article" date="2010" name="J. Cell Biol.">
        <title>Formin follows function: a muscle-specific isoform of FHOD3 is regulated by CK2 phosphorylation and promotes myofibril maintenance.</title>
        <authorList>
            <person name="Iskratsch T."/>
            <person name="Lange S."/>
            <person name="Dwyer J."/>
            <person name="Kho A.L."/>
            <person name="dos Remedios C."/>
            <person name="Ehler E."/>
        </authorList>
    </citation>
    <scope>INTERACTION WITH FHOD3</scope>
</reference>
<reference key="45">
    <citation type="journal article" date="2010" name="J. Virol.">
        <title>p62/sequestosome-1 associates with and sustains the expression of retroviral restriction factor TRIM5alpha.</title>
        <authorList>
            <person name="O'Connor C."/>
            <person name="Pertel T."/>
            <person name="Gray S."/>
            <person name="Robia S.L."/>
            <person name="Bakowska J.C."/>
            <person name="Luban J."/>
            <person name="Campbell E.M."/>
        </authorList>
    </citation>
    <scope>INTERACTION WITH TRIM5</scope>
    <scope>SUBCELLULAR LOCATION</scope>
</reference>
<reference key="46">
    <citation type="journal article" date="2010" name="Sci. Signal.">
        <title>Quantitative phosphoproteomics reveals widespread full phosphorylation site occupancy during mitosis.</title>
        <authorList>
            <person name="Olsen J.V."/>
            <person name="Vermeulen M."/>
            <person name="Santamaria A."/>
            <person name="Kumar C."/>
            <person name="Miller M.L."/>
            <person name="Jensen L.J."/>
            <person name="Gnad F."/>
            <person name="Cox J."/>
            <person name="Jensen T.S."/>
            <person name="Nigg E.A."/>
            <person name="Brunak S."/>
            <person name="Mann M."/>
        </authorList>
    </citation>
    <scope>PHOSPHORYLATION [LARGE SCALE ANALYSIS] AT SER-170; SER-207; SER-249; SER-266; SER-272 AND SER-332</scope>
    <scope>IDENTIFICATION BY MASS SPECTROMETRY [LARGE SCALE ANALYSIS]</scope>
    <source>
        <tissue>Cervix carcinoma</tissue>
    </source>
</reference>
<reference key="47">
    <citation type="journal article" date="2011" name="Arch. Neurol.">
        <title>SQSTM1 mutations in familial and sporadic amyotrophic lateral sclerosis.</title>
        <authorList>
            <person name="Fecto F."/>
            <person name="Yan J."/>
            <person name="Vemula S.P."/>
            <person name="Liu E."/>
            <person name="Yang Y."/>
            <person name="Chen W."/>
            <person name="Zheng J.G."/>
            <person name="Shi Y."/>
            <person name="Siddique N."/>
            <person name="Arrat H."/>
            <person name="Donkervoort S."/>
            <person name="Ajroud-Driss S."/>
            <person name="Sufit R.L."/>
            <person name="Heller S.L."/>
            <person name="Deng H.X."/>
            <person name="Siddique T."/>
        </authorList>
    </citation>
    <scope>INVOLVEMENT IN FTDALS3</scope>
    <scope>VARIANTS FTDALS3 VAL-33; ILE-153; LEU-228; LYS-238 DEL; PRO-318; CYS-321; PRO-370; LEU-392; SER-411 AND ARG-425</scope>
</reference>
<reference key="48">
    <citation type="journal article" date="2011" name="BMC Syst. Biol.">
        <title>Initial characterization of the human central proteome.</title>
        <authorList>
            <person name="Burkard T.R."/>
            <person name="Planyavsky M."/>
            <person name="Kaupe I."/>
            <person name="Breitwieser F.P."/>
            <person name="Buerckstuemmer T."/>
            <person name="Bennett K.L."/>
            <person name="Superti-Furga G."/>
            <person name="Colinge J."/>
        </authorList>
    </citation>
    <scope>IDENTIFICATION BY MASS SPECTROMETRY [LARGE SCALE ANALYSIS]</scope>
</reference>
<reference key="49">
    <citation type="journal article" date="2011" name="Biochemistry">
        <title>Independent interactions of ubiquitin-binding domains in a ubiquitin-mediated ternary complex.</title>
        <authorList>
            <person name="Garner T.P."/>
            <person name="Strachan J."/>
            <person name="Shedden E.C."/>
            <person name="Long J.E."/>
            <person name="Cavey J.R."/>
            <person name="Shaw B."/>
            <person name="Layfield R."/>
            <person name="Searle M.S."/>
        </authorList>
    </citation>
    <scope>IDENTIFICATION IN A COMPLEX WITH ZFAND5 AND UBIQUITIN</scope>
    <scope>SUBCELLULAR LOCATION</scope>
</reference>
<reference key="50">
    <citation type="journal article" date="2011" name="Mol. Cell">
        <title>Serine 403 phosphorylation of p62/SQSTM1 regulates selective autophagic clearance of ubiquitinated proteins.</title>
        <authorList>
            <person name="Matsumoto G."/>
            <person name="Wada K."/>
            <person name="Okuno M."/>
            <person name="Kurosawa M."/>
            <person name="Nukina N."/>
        </authorList>
    </citation>
    <scope>FUNCTION</scope>
    <scope>SUBCELLULAR LOCATION</scope>
    <scope>PHOSPHORYLATION AT SER-24; SER-207; THR-269; SER-272; SER-282; SER-332; SER-366 AND SER-403</scope>
    <scope>MUTAGENESIS OF SER-403</scope>
</reference>
<reference key="51">
    <citation type="journal article" date="2011" name="Sci. Signal.">
        <title>System-wide temporal characterization of the proteome and phosphoproteome of human embryonic stem cell differentiation.</title>
        <authorList>
            <person name="Rigbolt K.T."/>
            <person name="Prokhorova T.A."/>
            <person name="Akimov V."/>
            <person name="Henningsen J."/>
            <person name="Johansen P.T."/>
            <person name="Kratchmarova I."/>
            <person name="Kassem M."/>
            <person name="Mann M."/>
            <person name="Olsen J.V."/>
            <person name="Blagoev B."/>
        </authorList>
    </citation>
    <scope>PHOSPHORYLATION [LARGE SCALE ANALYSIS] AT SER-272</scope>
    <scope>IDENTIFICATION BY MASS SPECTROMETRY [LARGE SCALE ANALYSIS]</scope>
</reference>
<reference key="52">
    <citation type="journal article" date="2012" name="Autophagy">
        <title>The deubiquitinating enzyme USP36 controls selective autophagy activation by ubiquitinated proteins.</title>
        <authorList>
            <person name="Taillebourg E."/>
            <person name="Gregoire I."/>
            <person name="Viargues P."/>
            <person name="Jacomin A.C."/>
            <person name="Thevenon D."/>
            <person name="Faure M."/>
            <person name="Fauvarque M.O."/>
        </authorList>
    </citation>
    <scope>FUNCTION</scope>
</reference>
<reference key="53">
    <citation type="journal article" date="2012" name="Biochim. Biophys. Acta">
        <title>TRIM13 regulates ER stress induced autophagy and clonogenic ability of the cells.</title>
        <authorList>
            <person name="Tomar D."/>
            <person name="Singh R."/>
            <person name="Singh A.K."/>
            <person name="Pandya C.D."/>
            <person name="Singh R."/>
        </authorList>
    </citation>
    <scope>INTERACTION WITH TRIM13</scope>
    <scope>SUBCELLULAR LOCATION</scope>
</reference>
<reference key="54">
    <citation type="journal article" date="2012" name="Cell Death Differ.">
        <title>TP53INP1, a tumor suppressor, interacts with LC3 and ATG8-family proteins through the LC3-interacting region (LIR) and promotes autophagy-dependent cell death.</title>
        <authorList>
            <person name="Seillier M."/>
            <person name="Peuget S."/>
            <person name="Gayet O."/>
            <person name="Gauthier C."/>
            <person name="N'guessan P."/>
            <person name="Monte M."/>
            <person name="Carrier A."/>
            <person name="Iovanna J.L."/>
            <person name="Dusetti N.J."/>
        </authorList>
    </citation>
    <scope>INTERACTION WITH MAP1LC3A</scope>
</reference>
<reference key="55">
    <citation type="journal article" date="2012" name="PLoS ONE">
        <title>The E3-ubiquitin ligase TRIM50 interacts with HDAC6 and p62, and promotes the sequestration and clearance of ubiquitinated proteins into the aggresome.</title>
        <authorList>
            <person name="Fusco C."/>
            <person name="Micale L."/>
            <person name="Egorov M."/>
            <person name="Monti M."/>
            <person name="D'Addetta E.V."/>
            <person name="Augello B."/>
            <person name="Cozzolino F."/>
            <person name="Calcagni A."/>
            <person name="Fontana A."/>
            <person name="Polishchuk R.S."/>
            <person name="Didelot G."/>
            <person name="Reymond A."/>
            <person name="Pucci P."/>
            <person name="Merla G."/>
        </authorList>
    </citation>
    <scope>INTERACTION WITH TRIM50</scope>
    <scope>SUBCELLULAR LOCATION</scope>
</reference>
<reference key="56">
    <citation type="journal article" date="2012" name="Proc. Natl. Acad. Sci. U.S.A.">
        <title>N-terminal acetylome analyses and functional insights of the N-terminal acetyltransferase NatB.</title>
        <authorList>
            <person name="Van Damme P."/>
            <person name="Lasa M."/>
            <person name="Polevoda B."/>
            <person name="Gazquez C."/>
            <person name="Elosegui-Artola A."/>
            <person name="Kim D.S."/>
            <person name="De Juan-Pardo E."/>
            <person name="Demeyer K."/>
            <person name="Hole K."/>
            <person name="Larrea E."/>
            <person name="Timmerman E."/>
            <person name="Prieto J."/>
            <person name="Arnesen T."/>
            <person name="Sherman F."/>
            <person name="Gevaert K."/>
            <person name="Aldabe R."/>
        </authorList>
    </citation>
    <scope>ACETYLATION [LARGE SCALE ANALYSIS] AT ALA-2</scope>
    <scope>ACETYLATION [LARGE SCALE ANALYSIS] AT ALA-2 (ISOFORM 2)</scope>
    <scope>CLEAVAGE OF INITIATOR METHIONINE [LARGE SCALE ANALYSIS]</scope>
    <scope>CLEAVAGE OF INITIATOR METHIONINE [LARGE SCALE ANALYSIS] (ISOFORM 2)</scope>
    <scope>IDENTIFICATION BY MASS SPECTROMETRY [LARGE SCALE ANALYSIS]</scope>
</reference>
<reference key="57">
    <citation type="journal article" date="2013" name="Autophagy">
        <title>TRAF6 mediates ubiquitination of KIF23/MKLP1 and is required for midbody ring degradation by selective autophagy.</title>
        <authorList>
            <person name="Isakson P."/>
            <person name="Lystad A.H."/>
            <person name="Breen K."/>
            <person name="Koster G."/>
            <person name="Stenmark H."/>
            <person name="Simonsen A."/>
        </authorList>
    </citation>
    <scope>FUNCTION</scope>
</reference>
<reference key="58">
    <citation type="journal article" date="2013" name="Cell Metab.">
        <title>Sestrins activate Nrf2 by promoting p62-dependent autophagic degradation of Keap1 and prevent oxidative liver damage.</title>
        <authorList>
            <person name="Bae S.H."/>
            <person name="Sung S.H."/>
            <person name="Oh S.Y."/>
            <person name="Lim J.M."/>
            <person name="Lee S.K."/>
            <person name="Park Y.N."/>
            <person name="Lee H.E."/>
            <person name="Kang D."/>
            <person name="Rhee S.G."/>
        </authorList>
    </citation>
    <scope>INTERACTION WITH SESN1 AND SESN2</scope>
</reference>
<reference key="59">
    <citation type="journal article" date="2013" name="J. Proteome Res.">
        <title>Toward a comprehensive characterization of a human cancer cell phosphoproteome.</title>
        <authorList>
            <person name="Zhou H."/>
            <person name="Di Palma S."/>
            <person name="Preisinger C."/>
            <person name="Peng M."/>
            <person name="Polat A.N."/>
            <person name="Heck A.J."/>
            <person name="Mohammed S."/>
        </authorList>
    </citation>
    <scope>PHOSPHORYLATION [LARGE SCALE ANALYSIS] AT SER-170; THR-269; SER-272; SER-332 AND SER-366</scope>
    <scope>IDENTIFICATION BY MASS SPECTROMETRY [LARGE SCALE ANALYSIS]</scope>
    <source>
        <tissue>Cervix carcinoma</tissue>
        <tissue>Erythroleukemia</tissue>
    </source>
</reference>
<reference key="60">
    <citation type="journal article" date="2013" name="JAMA Neurol.">
        <title>SQSTM1 mutations in French patients with frontotemporal dementia or frontotemporal dementia with amyotrophic lateral sclerosis.</title>
        <authorList>
            <consortium name="French Clinical and Genetic Research Network on FTD/FTD-ALS"/>
            <person name="Le Ber I."/>
            <person name="Camuzat A."/>
            <person name="Guerreiro R."/>
            <person name="Bouya-Ahmed K."/>
            <person name="Bras J."/>
            <person name="Nicolas G."/>
            <person name="Gabelle A."/>
            <person name="Didic M."/>
            <person name="De Septenville A."/>
            <person name="Millecamps S."/>
            <person name="Lenglet T."/>
            <person name="Latouche M."/>
            <person name="Kabashi E."/>
            <person name="Campion D."/>
            <person name="Hannequin D."/>
            <person name="Hardy J."/>
            <person name="Brice A."/>
        </authorList>
    </citation>
    <scope>INVOLVEMENT IN FTDALS3</scope>
    <scope>VARIANTS FTDALS3 VAL-33; VAL-381; LEU-387 AND LEU-392</scope>
</reference>
<reference key="61">
    <citation type="journal article" date="2013" name="J. Cell Sci.">
        <title>The LIR motif - crucial for selective autophagy.</title>
        <authorList>
            <person name="Birgisdottir A.B."/>
            <person name="Lamark T."/>
            <person name="Johansen T."/>
        </authorList>
    </citation>
    <scope>LIR MOTIF</scope>
</reference>
<reference key="62">
    <citation type="journal article" date="2013" name="Nature">
        <title>Autophagy promotes primary ciliogenesis by removing OFD1 from centriolar satellites.</title>
        <authorList>
            <person name="Tang Z."/>
            <person name="Lin M.G."/>
            <person name="Stowe T.R."/>
            <person name="Chen S."/>
            <person name="Zhu M."/>
            <person name="Stearns T."/>
            <person name="Franco B."/>
            <person name="Zhong Q."/>
        </authorList>
    </citation>
    <scope>INTERACTION WITH MAP1LC3B</scope>
</reference>
<reference key="63">
    <citation type="journal article" date="2014" name="Cell. Signal.">
        <title>Regulation of C1-Ten protein tyrosine phosphatase by p62/SQSTM1-mediated sequestration and degradation.</title>
        <authorList>
            <person name="Koh A."/>
            <person name="Park D."/>
            <person name="Jeong H."/>
            <person name="Lee J."/>
            <person name="Lee M.N."/>
            <person name="Suh P.G."/>
            <person name="Ryu S.H."/>
        </authorList>
    </citation>
    <scope>FUNCTION</scope>
    <scope>INTERACTION WITH TNS2 AND IRS1</scope>
    <scope>DEVELOPMENTAL STAGE</scope>
</reference>
<reference key="64">
    <citation type="journal article" date="2014" name="Dev. Cell">
        <title>TRIM proteins regulate autophagy and can target autophagic substrates by direct recognition.</title>
        <authorList>
            <person name="Mandell M.A."/>
            <person name="Jain A."/>
            <person name="Arko-Mensah J."/>
            <person name="Chauhan S."/>
            <person name="Kimura T."/>
            <person name="Dinkins C."/>
            <person name="Silvestri G."/>
            <person name="Munch J."/>
            <person name="Kirchhoff F."/>
            <person name="Simonsen A."/>
            <person name="Wei Y."/>
            <person name="Levine B."/>
            <person name="Johansen T."/>
            <person name="Deretic V."/>
        </authorList>
    </citation>
    <scope>INTERACTION WITH TRIM5</scope>
</reference>
<reference key="65">
    <citation type="journal article" date="2014" name="FEBS J.">
        <title>Sestrin2 promotes Unc-51-like kinase 1 mediated phosphorylation of p62/sequestosome-1.</title>
        <authorList>
            <person name="Ro S.H."/>
            <person name="Semple I.A."/>
            <person name="Park H."/>
            <person name="Park H."/>
            <person name="Park H.W."/>
            <person name="Kim M."/>
            <person name="Kim J.S."/>
            <person name="Lee J.H."/>
        </authorList>
    </citation>
    <scope>INTERACTION WITH SESN2 AND ULK1</scope>
    <scope>PHOSPHORYLATION AT SER-403 BY ULK1</scope>
</reference>
<reference key="66">
    <citation type="journal article" date="2014" name="EMBO Rep.">
        <title>Structural determinants in GABARAP required for the selective binding and recruitment of ALFY to LC3B-positive structures.</title>
        <authorList>
            <person name="Lystad A.H."/>
            <person name="Ichimura Y."/>
            <person name="Takagi K."/>
            <person name="Yang Y."/>
            <person name="Pankiv S."/>
            <person name="Kanegae Y."/>
            <person name="Kageyama S."/>
            <person name="Suzuki M."/>
            <person name="Saito I."/>
            <person name="Mizushima T."/>
            <person name="Komatsu M."/>
            <person name="Simonsen A."/>
        </authorList>
    </citation>
    <scope>INTERACTION WITH GABARAP</scope>
    <scope>MUTAGENESIS OF TRP-338</scope>
</reference>
<reference key="67">
    <citation type="journal article" date="2014" name="J. Proteomics">
        <title>An enzyme assisted RP-RPLC approach for in-depth analysis of human liver phosphoproteome.</title>
        <authorList>
            <person name="Bian Y."/>
            <person name="Song C."/>
            <person name="Cheng K."/>
            <person name="Dong M."/>
            <person name="Wang F."/>
            <person name="Huang J."/>
            <person name="Sun D."/>
            <person name="Wang L."/>
            <person name="Ye M."/>
            <person name="Zou H."/>
        </authorList>
    </citation>
    <scope>PHOSPHORYLATION [LARGE SCALE ANALYSIS] AT SER-24; SER-176; SER-233; SER-306 AND SER-366</scope>
    <scope>IDENTIFICATION BY MASS SPECTROMETRY [LARGE SCALE ANALYSIS]</scope>
    <source>
        <tissue>Liver</tissue>
    </source>
</reference>
<reference key="68">
    <citation type="journal article" date="2014" name="Proc. Natl. Acad. Sci. U.S.A.">
        <title>Disruption of FAT10-MAD2 binding inhibits tumor progression.</title>
        <authorList>
            <person name="Theng S.S."/>
            <person name="Wang W."/>
            <person name="Mah W.C."/>
            <person name="Chan C."/>
            <person name="Zhuo J."/>
            <person name="Gao Y."/>
            <person name="Qin H."/>
            <person name="Lim L."/>
            <person name="Chong S.S."/>
            <person name="Song J."/>
            <person name="Lee C.G."/>
        </authorList>
    </citation>
    <scope>INTERACTION WITH UBD</scope>
</reference>
<reference key="69">
    <citation type="journal article" date="2010" name="Haematologica">
        <title>SQSTM1-NUP214: a new gene fusion in adult T-cell acute lymphoblastic leukemia.</title>
        <authorList>
            <person name="Gorello P."/>
            <person name="La Starza R."/>
            <person name="Di Giacomo D."/>
            <person name="Messina M."/>
            <person name="Puzzolo M.C."/>
            <person name="Crescenzi B."/>
            <person name="Santoro A."/>
            <person name="Chiaretti S."/>
            <person name="Mecucci C."/>
        </authorList>
    </citation>
    <scope>DISEASE</scope>
    <scope>CHROMOSOMAL TRANSLOCATION WITH NU214</scope>
</reference>
<reference key="70">
    <citation type="journal article" date="2015" name="J. Alzheimers Dis.">
        <title>A phenotype of atypical apraxia of speech in a family carrying SQSTM1 mutation.</title>
        <authorList>
            <person name="Boutoleau-Bretonniere C."/>
            <person name="Camuzat A."/>
            <person name="Le Ber I."/>
            <person name="Bouya-Ahmed K."/>
            <person name="Guerreiro R."/>
            <person name="Deruet A.L."/>
            <person name="Evrard C."/>
            <person name="Bras J."/>
            <person name="Lamy E."/>
            <person name="Auffray-Calvier E."/>
            <person name="Pallardy A."/>
            <person name="Hardy J."/>
            <person name="Brice A."/>
            <person name="Derkinderen P."/>
            <person name="Vercelletto M."/>
        </authorList>
    </citation>
    <scope>INVOLVEMENT IN FTDALS3</scope>
    <scope>VARIANT FTDALS3 LYS-238 DEL</scope>
</reference>
<reference key="71">
    <citation type="journal article" date="2015" name="Nat. Cell Biol.">
        <title>ATM functions at the peroxisome to induce pexophagy in response to ROS.</title>
        <authorList>
            <person name="Zhang J."/>
            <person name="Tripathi D.N."/>
            <person name="Jing J."/>
            <person name="Alexander A."/>
            <person name="Kim J."/>
            <person name="Powell R.T."/>
            <person name="Dere R."/>
            <person name="Tait-Mulder J."/>
            <person name="Lee J.H."/>
            <person name="Paull T.T."/>
            <person name="Pandita R.K."/>
            <person name="Charaka V.K."/>
            <person name="Pandita T.K."/>
            <person name="Kastan M.B."/>
            <person name="Walker C.L."/>
        </authorList>
    </citation>
    <scope>FUNCTION</scope>
    <scope>INTERACTION WITH PEX5</scope>
</reference>
<reference key="72">
    <citation type="journal article" date="2015" name="Neurology">
        <title>SQSTM1 splice site mutation in distal myopathy with rimmed vacuoles.</title>
        <authorList>
            <person name="Bucelli R.C."/>
            <person name="Arhzaouy K."/>
            <person name="Pestronk A."/>
            <person name="Pittman S.K."/>
            <person name="Rojas L."/>
            <person name="Sue C.M."/>
            <person name="Evilae A."/>
            <person name="Hackman P."/>
            <person name="Udd B."/>
            <person name="Harms M.B."/>
            <person name="Weihl C.C."/>
        </authorList>
    </citation>
    <scope>INVOLVEMENT IN DMRV</scope>
</reference>
<reference key="73">
    <citation type="journal article" date="2016" name="Am. J. Hum. Genet.">
        <title>Absence of the autophagy adaptor SQSTM1/p62 causes childhood-onset neurodegeneration with ataxia, dystonia, and gaze palsy.</title>
        <authorList>
            <person name="Haack T.B."/>
            <person name="Ignatius E."/>
            <person name="Calvo-Garrido J."/>
            <person name="Iuso A."/>
            <person name="Isohanni P."/>
            <person name="Maffezzini C."/>
            <person name="Loennqvist T."/>
            <person name="Suomalainen A."/>
            <person name="Gorza M."/>
            <person name="Kremer L.S."/>
            <person name="Graf E."/>
            <person name="Hartig M."/>
            <person name="Berutti R."/>
            <person name="Paucar M."/>
            <person name="Svenningsson P."/>
            <person name="Stranneheim H."/>
            <person name="Brandberg G."/>
            <person name="Wedell A."/>
            <person name="Kurian M.A."/>
            <person name="Hayflick S.A."/>
            <person name="Venco P."/>
            <person name="Tiranti V."/>
            <person name="Strom T.M."/>
            <person name="Dichgans M."/>
            <person name="Horvath R."/>
            <person name="Holinski-Feder E."/>
            <person name="Freyer C."/>
            <person name="Meitinger T."/>
            <person name="Prokisch H."/>
            <person name="Senderek J."/>
            <person name="Wredenberg A."/>
            <person name="Carroll C.J."/>
            <person name="Klopstock T."/>
        </authorList>
    </citation>
    <scope>INVOLVEMENT IN NADGP</scope>
</reference>
<reference key="74">
    <citation type="journal article" date="2016" name="Cell">
        <title>An ER-associated pathway defines endosomal architecture for controlled cargo transport.</title>
        <authorList>
            <person name="Jongsma M.L."/>
            <person name="Berlin I."/>
            <person name="Wijdeven R.H."/>
            <person name="Janssen L."/>
            <person name="Janssen G.M."/>
            <person name="Garstka M.A."/>
            <person name="Janssen H."/>
            <person name="Mensink M."/>
            <person name="van Veelen P.A."/>
            <person name="Spaapen R.M."/>
            <person name="Neefjes J."/>
        </authorList>
    </citation>
    <scope>FUNCTION</scope>
    <scope>UBIQUITINATION</scope>
</reference>
<reference key="75">
    <citation type="journal article" date="2016" name="Cell Rep.">
        <title>TRIM11 suppresses AIM2 inflammasome by degrading AIM2 via p62-dependent selective autophagy.</title>
        <authorList>
            <person name="Liu T."/>
            <person name="Tang Q."/>
            <person name="Liu K."/>
            <person name="Xie W."/>
            <person name="Liu X."/>
            <person name="Wang H."/>
            <person name="Wang R.F."/>
            <person name="Cui J."/>
        </authorList>
    </citation>
    <scope>INTERACTION WITH TRIM11</scope>
</reference>
<reference key="76">
    <citation type="journal article" date="2016" name="Cell Rep.">
        <title>RNF166 Determines Recruitment of Adaptor Proteins during Antibacterial Autophagy.</title>
        <authorList>
            <person name="Heath R.J."/>
            <person name="Goel G."/>
            <person name="Baxt L.A."/>
            <person name="Rush J.S."/>
            <person name="Mohanan V."/>
            <person name="Paulus G.L.C."/>
            <person name="Jani V."/>
            <person name="Lassen K.G."/>
            <person name="Xavier R.J."/>
        </authorList>
    </citation>
    <scope>UBIQUITINATION</scope>
    <scope>FUNCTION</scope>
</reference>
<reference key="77">
    <citation type="journal article" date="2017" name="Cell Rep.">
        <title>Keap1/cullin3 modulates p62/SQSTM1 activity via UBA domain ubiquitination.</title>
        <authorList>
            <person name="Lee Y."/>
            <person name="Chou T.F."/>
            <person name="Pittman S.K."/>
            <person name="Keith A.L."/>
            <person name="Razani B."/>
            <person name="Weihl C.C."/>
        </authorList>
    </citation>
    <scope>FUNCTION</scope>
    <scope>UBIQUITINATION AT LYS-420</scope>
    <scope>MUTAGENESIS OF LYS-420</scope>
</reference>
<reference key="78">
    <citation type="journal article" date="2017" name="Cell Res.">
        <title>Ubiquitylation of p62/sequestosome1 activates its autophagy receptor function and controls selective autophagy upon ubiquitin stress.</title>
        <authorList>
            <person name="Peng H."/>
            <person name="Yang J."/>
            <person name="Li G."/>
            <person name="You Q."/>
            <person name="Han W."/>
            <person name="Li T."/>
            <person name="Gao D."/>
            <person name="Xie X."/>
            <person name="Lee B.H."/>
            <person name="Du J."/>
            <person name="Hou J."/>
            <person name="Zhang T."/>
            <person name="Rao H."/>
            <person name="Huang Y."/>
            <person name="Li Q."/>
            <person name="Zeng R."/>
            <person name="Hui L."/>
            <person name="Wang H."/>
            <person name="Xia Q."/>
            <person name="Zhang X."/>
            <person name="He Y."/>
            <person name="Komatsu M."/>
            <person name="Dikic I."/>
            <person name="Finley D."/>
            <person name="Hu R."/>
        </authorList>
    </citation>
    <scope>DOMAIN</scope>
    <scope>UBIQUITINATION</scope>
</reference>
<reference key="79">
    <citation type="journal article" date="2017" name="Nat. Struct. Mol. Biol.">
        <title>Site-specific mapping of the human SUMO proteome reveals co-modification with phosphorylation.</title>
        <authorList>
            <person name="Hendriks I.A."/>
            <person name="Lyon D."/>
            <person name="Young C."/>
            <person name="Jensen L.J."/>
            <person name="Vertegaal A.C."/>
            <person name="Nielsen M.L."/>
        </authorList>
    </citation>
    <scope>SUMOYLATION [LARGE SCALE ANALYSIS] AT LYS-435</scope>
    <scope>IDENTIFICATION BY MASS SPECTROMETRY [LARGE SCALE ANALYSIS]</scope>
</reference>
<reference key="80">
    <citation type="journal article" date="2018" name="Cell Res.">
        <title>Polyubiquitin chain-induced p62 phase separation drives autophagic cargo segregation.</title>
        <authorList>
            <person name="Sun D."/>
            <person name="Wu R."/>
            <person name="Zheng J."/>
            <person name="Li P."/>
            <person name="Yu L."/>
        </authorList>
    </citation>
    <scope>FUNCTION</scope>
    <scope>SUBCELLULAR LOCATION</scope>
    <scope>PHOSPHORYLATION AT SER-403</scope>
    <scope>MUTAGENESIS OF SER-403</scope>
    <scope>CHARACTERIZATION OF VARIANTS PDB3 THR-404 AND SER-411</scope>
</reference>
<reference key="81">
    <citation type="journal article" date="2018" name="EMBO J.">
        <title>p62 filaments capture and present ubiquitinated cargos for autophagy.</title>
        <authorList>
            <person name="Zaffagnini G."/>
            <person name="Savova A."/>
            <person name="Danieli A."/>
            <person name="Romanov J."/>
            <person name="Tremel S."/>
            <person name="Ebner M."/>
            <person name="Peterbauer T."/>
            <person name="Sztacho M."/>
            <person name="Trapannone R."/>
            <person name="Tarafder A.K."/>
            <person name="Sachse C."/>
            <person name="Martens S."/>
        </authorList>
    </citation>
    <scope>FUNCTION</scope>
    <scope>SUBCELLULAR LOCATION</scope>
</reference>
<reference key="82">
    <citation type="journal article" date="2018" name="EMBO J.">
        <title>TRIM16 controls assembly and degradation of protein aggregates by modulating the p62-NRF2 axis and autophagy.</title>
        <authorList>
            <person name="Jena K.K."/>
            <person name="Kolapalli S.P."/>
            <person name="Mehto S."/>
            <person name="Nath P."/>
            <person name="Das B."/>
            <person name="Sahoo P.K."/>
            <person name="Ahad A."/>
            <person name="Syed G.H."/>
            <person name="Raghav S.K."/>
            <person name="Senapati S."/>
            <person name="Chauhan S."/>
            <person name="Chauhan S."/>
        </authorList>
    </citation>
    <scope>INTERACTION WITH TRIM16</scope>
</reference>
<reference key="83">
    <citation type="journal article" date="2018" name="EMBO J.">
        <title>LRRC25 inhibits type I IFN signaling by targeting ISG15-associated RIG-I for autophagic degradation.</title>
        <authorList>
            <person name="Du Y."/>
            <person name="Duan T."/>
            <person name="Feng Y."/>
            <person name="Liu Q."/>
            <person name="Lin M."/>
            <person name="Cui J."/>
            <person name="Wang R.F."/>
        </authorList>
    </citation>
    <scope>INTERACTION WITH LRRC25</scope>
</reference>
<reference key="84">
    <citation type="journal article" date="2017" name="J. Cell Biol.">
        <title>The BEACH-containing protein WDR81 coordinates p62 and LC3C to promote aggrephagy.</title>
        <authorList>
            <person name="Liu X."/>
            <person name="Li Y."/>
            <person name="Wang X."/>
            <person name="Xing R."/>
            <person name="Liu K."/>
            <person name="Gan Q."/>
            <person name="Tang C."/>
            <person name="Gao Z."/>
            <person name="Jian Y."/>
            <person name="Luo S."/>
            <person name="Guo W."/>
            <person name="Yang C."/>
        </authorList>
    </citation>
    <scope>FUNCTION</scope>
    <scope>INTERACTION WITH WDR81</scope>
    <scope>DOMAIN</scope>
</reference>
<reference key="85">
    <citation type="journal article" date="2017" name="Nat. Microbiol.">
        <title>TRIM23 mediates virus-induced autophagy via activation of TBK1.</title>
        <authorList>
            <person name="Sparrer K.M.J."/>
            <person name="Gableske S."/>
            <person name="Zurenski M.A."/>
            <person name="Parker Z.M."/>
            <person name="Full F."/>
            <person name="Baumgart G.J."/>
            <person name="Kato J."/>
            <person name="Pacheco-Rodriguez G."/>
            <person name="Liang C."/>
            <person name="Pornillos O."/>
            <person name="Moss J."/>
            <person name="Vaughan M."/>
            <person name="Gack M.U."/>
        </authorList>
    </citation>
    <scope>INTERACTION WITH TRIM23</scope>
</reference>
<reference key="86">
    <citation type="journal article" date="2018" name="EMBO J.">
        <title>Attenuation of cGAS-STING signaling is mediated by a p62/SQSTM1-dependent autophagy pathway activated by TBK1.</title>
        <authorList>
            <person name="Prabakaran T."/>
            <person name="Bodda C."/>
            <person name="Krapp C."/>
            <person name="Zhang B.C."/>
            <person name="Christensen M.H."/>
            <person name="Sun C."/>
            <person name="Reinert L."/>
            <person name="Cai Y."/>
            <person name="Jensen S.B."/>
            <person name="Skouboe M.K."/>
            <person name="Nyengaard J.R."/>
            <person name="Thompson C.B."/>
            <person name="Lebbink R.J."/>
            <person name="Sen G.C."/>
            <person name="van Loo G."/>
            <person name="Nielsen R."/>
            <person name="Komatsu M."/>
            <person name="Nejsum L.N."/>
            <person name="Jakobsen M.R."/>
            <person name="Gyrd-Hansen M."/>
            <person name="Paludan S.R."/>
        </authorList>
    </citation>
    <scope>FUNCTION</scope>
    <scope>PHOSPHORYLATION AT SER-403</scope>
    <scope>MUTAGENESIS OF SER-403</scope>
</reference>
<reference key="87">
    <citation type="journal article" date="2018" name="Nat. Commun.">
        <title>Deubiquitinase Usp12 functions noncatalytically to induce autophagy and confer neuroprotection in models of Huntington's disease.</title>
        <authorList>
            <person name="Aron R."/>
            <person name="Pellegrini P."/>
            <person name="Green E.W."/>
            <person name="Maddison D.C."/>
            <person name="Opoku-Nsiah K."/>
            <person name="Oliveira A.O."/>
            <person name="Wong J.S."/>
            <person name="Daub A.C."/>
            <person name="Giorgini F."/>
            <person name="Muchowski P."/>
            <person name="Finkbeiner S."/>
        </authorList>
    </citation>
    <scope>INTERACTION WITH USP12</scope>
</reference>
<reference key="88">
    <citation type="journal article" date="2019" name="Nat. Commun.">
        <title>Requirement for p62 acetylation in the aggregation of ubiquitylated proteins under nutrient stress.</title>
        <authorList>
            <person name="You Z."/>
            <person name="Jiang W.X."/>
            <person name="Qin L.Y."/>
            <person name="Gong Z."/>
            <person name="Wan W."/>
            <person name="Li J."/>
            <person name="Wang Y."/>
            <person name="Zhang H."/>
            <person name="Peng C."/>
            <person name="Zhou T."/>
            <person name="Tang C."/>
            <person name="Liu W."/>
        </authorList>
    </citation>
    <scope>FUNCTION</scope>
    <scope>SUBCELLULAR LOCATION</scope>
    <scope>DOMAIN</scope>
    <scope>ACETYLATION AT LYS-420 AND LYS-435</scope>
    <scope>MUTAGENESIS OF LYS-420 AND LYS-435</scope>
</reference>
<reference key="89">
    <citation type="journal article" date="2019" name="Immune Netw.">
        <title>p62 Negatively Regulates TLR4 Signaling via Functional Regulation of the TRAF6-ECSIT Complex.</title>
        <authorList>
            <person name="Kim M.J."/>
            <person name="Min Y."/>
            <person name="Kwon J."/>
            <person name="Son J."/>
            <person name="Im J.S."/>
            <person name="Shin J."/>
            <person name="Lee K.Y."/>
        </authorList>
    </citation>
    <scope>INTERACTION WITH ECSIT</scope>
</reference>
<reference key="90">
    <citation type="journal article" date="2020" name="Brain">
        <title>CYLD is a causative gene for frontotemporal dementia - amyotrophic lateral sclerosis.</title>
        <authorList>
            <person name="Dobson-Stone C."/>
            <person name="Hallupp M."/>
            <person name="Shahheydari H."/>
            <person name="Ragagnin A.M.G."/>
            <person name="Chatterton Z."/>
            <person name="Carew-Jones F."/>
            <person name="Shepherd C.E."/>
            <person name="Stefen H."/>
            <person name="Paric E."/>
            <person name="Fath T."/>
            <person name="Thompson E.M."/>
            <person name="Blumbergs P."/>
            <person name="Short C.L."/>
            <person name="Field C.D."/>
            <person name="Panegyres P.K."/>
            <person name="Hecker J."/>
            <person name="Nicholson G."/>
            <person name="Shaw A.D."/>
            <person name="Fullerton J.M."/>
            <person name="Luty A.A."/>
            <person name="Schofield P.R."/>
            <person name="Brooks W.S."/>
            <person name="Rajan N."/>
            <person name="Bennett M.F."/>
            <person name="Bahlo M."/>
            <person name="Landers J.E."/>
            <person name="Piguet O."/>
            <person name="Hodges J.R."/>
            <person name="Halliday G.M."/>
            <person name="Topp S.D."/>
            <person name="Smith B.N."/>
            <person name="Shaw C.E."/>
            <person name="McCann E."/>
            <person name="Fifita J.A."/>
            <person name="Williams K.L."/>
            <person name="Atkin J.D."/>
            <person name="Blair I.P."/>
            <person name="Kwok J.B."/>
        </authorList>
    </citation>
    <scope>INTERACTION WITH CYLD</scope>
</reference>
<reference key="91">
    <citation type="journal article" date="2021" name="EMBO Rep.">
        <title>MOAP-1-mediated dissociation of p62/SQSTM1 bodies releases Keap1 and suppresses Nrf2 signaling.</title>
        <authorList>
            <person name="Tan C.T."/>
            <person name="Chang H.C."/>
            <person name="Zhou Q."/>
            <person name="Yu C."/>
            <person name="Fu N.Y."/>
            <person name="Sabapathy K."/>
            <person name="Yu V.C."/>
        </authorList>
    </citation>
    <scope>FUNCTION</scope>
    <scope>INTERACTION WITH MOAP1</scope>
</reference>
<reference key="92">
    <citation type="journal article" date="2021" name="Cell Rep.">
        <title>The ER-embedded UBE2J1/RNF26 ubiquitylation complex exerts spatiotemporal control over the endolysosomal pathway.</title>
        <authorList>
            <person name="Cremer T."/>
            <person name="Jongsma M.L.M."/>
            <person name="Trulsson F."/>
            <person name="Vertegaal A.C.O."/>
            <person name="Neefjes J."/>
            <person name="Berlin I."/>
        </authorList>
    </citation>
    <scope>FUNCTION</scope>
    <scope>UBIQUITINATION AT LYS-435</scope>
</reference>
<reference key="93">
    <citation type="journal article" date="2021" name="Autophagy">
        <title>The Epstein-Barr virus deubiquitinase BPLF1 targets SQSTM1/p62 to inhibit selective autophagy.</title>
        <authorList>
            <person name="Ylae-Anttila P."/>
            <person name="Gupta S."/>
            <person name="Masucci M.G."/>
        </authorList>
    </citation>
    <scope>FUNCTION</scope>
    <scope>DEUBIQUITINATION BY EPSTEIN-BARR VIRUS PROTEIN BPLF1 (MICROBIAL INFECTION)</scope>
</reference>
<reference key="94">
    <citation type="journal article" date="2021" name="Nat. Commun.">
        <title>Reconstitution defines the roles of p62, NBR1 and TAX1BP1 in ubiquitin condensate formation and autophagy initiation.</title>
        <authorList>
            <person name="Turco E."/>
            <person name="Savova A."/>
            <person name="Gere F."/>
            <person name="Ferrari L."/>
            <person name="Romanov J."/>
            <person name="Schuschnig M."/>
            <person name="Martens S."/>
        </authorList>
    </citation>
    <scope>SUBCELLULAR LOCATION</scope>
    <scope>INTERACTION WITH TAX1BP1</scope>
    <scope>FUNCTION</scope>
</reference>
<reference key="95">
    <citation type="journal article" date="2021" name="Front. Cell Dev. Biol.">
        <title>CUL5-ASB6 Complex Promotes p62/SQSTM1 Ubiquitination and Degradation to Regulate Cell Proliferation and Autophagy.</title>
        <authorList>
            <person name="Gong L."/>
            <person name="Wang K."/>
            <person name="Wang M."/>
            <person name="Hu R."/>
            <person name="Li H."/>
            <person name="Gao D."/>
            <person name="Lin M."/>
        </authorList>
    </citation>
    <scope>INTERACTION WITH ASB6</scope>
</reference>
<reference key="96">
    <citation type="journal article" date="2021" name="Proc. Natl. Acad. Sci. U.S.A.">
        <title>The N-terminal cysteine is a dual sensor of oxygen and oxidative stress.</title>
        <authorList>
            <person name="Heo A.J."/>
            <person name="Kim S.B."/>
            <person name="Ji C.H."/>
            <person name="Han D."/>
            <person name="Lee S.J."/>
            <person name="Lee S.H."/>
            <person name="Lee M.J."/>
            <person name="Lee J.S."/>
            <person name="Ciechanover A."/>
            <person name="Kim B.Y."/>
            <person name="Kwon Y.T."/>
        </authorList>
    </citation>
    <scope>FUNCTION</scope>
</reference>
<reference key="97">
    <citation type="journal article" date="2022" name="Cell. Death. Discov.">
        <title>Grb2 interacts with necrosome components and is involved in rasfonin-induced necroptosis.</title>
        <authorList>
            <person name="Hou B."/>
            <person name="Huang H."/>
            <person name="Li Y."/>
            <person name="Liang J."/>
            <person name="Xi Z."/>
            <person name="Jiang X."/>
            <person name="Liu L."/>
            <person name="Li E."/>
        </authorList>
    </citation>
    <scope>FUNCTION</scope>
    <scope>INTERACTION WITH GRB2</scope>
</reference>
<reference key="98">
    <citation type="journal article" date="2023" name="EMBO J.">
        <title>Phosphorylation of phase-separated p62 bodies by ULK1 activates a redox-independent stress response.</title>
        <authorList>
            <person name="Ikeda R."/>
            <person name="Noshiro D."/>
            <person name="Morishita H."/>
            <person name="Takada S."/>
            <person name="Kageyama S."/>
            <person name="Fujioka Y."/>
            <person name="Funakoshi T."/>
            <person name="Komatsu-Hirota S."/>
            <person name="Arai R."/>
            <person name="Ryzhii E."/>
            <person name="Abe M."/>
            <person name="Koga T."/>
            <person name="Motohashi H."/>
            <person name="Nakao M."/>
            <person name="Sakimura K."/>
            <person name="Horii A."/>
            <person name="Waguri S."/>
            <person name="Ichimura Y."/>
            <person name="Noda N.N."/>
            <person name="Komatsu M."/>
        </authorList>
    </citation>
    <scope>FUNCTION</scope>
    <scope>SUBCELLULAR LOCATION</scope>
    <scope>PHOSPHORYLATION AT SER-349; SER-403 AND SER-407</scope>
    <scope>MUTAGENESIS OF SER-349; THR-350 AND 403-SER--SER-407</scope>
</reference>
<reference key="99">
    <citation type="journal article" date="2023" name="Mol. Cell">
        <title>S-acylation of p62 promotes p62 droplet recruitment into autophagosomes in mammalian autophagy.</title>
        <authorList>
            <person name="Huang X."/>
            <person name="Yao J."/>
            <person name="Liu L."/>
            <person name="Chen J."/>
            <person name="Mei L."/>
            <person name="Huangfu J."/>
            <person name="Luo D."/>
            <person name="Wang X."/>
            <person name="Lin C."/>
            <person name="Chen X."/>
            <person name="Yang Y."/>
            <person name="Ouyang S."/>
            <person name="Wei F."/>
            <person name="Wang Z."/>
            <person name="Zhang S."/>
            <person name="Xiang T."/>
            <person name="Neculai D."/>
            <person name="Sun Q."/>
            <person name="Kong E."/>
            <person name="Tate E.W."/>
            <person name="Yang A."/>
        </authorList>
    </citation>
    <scope>FUNCTION</scope>
    <scope>SUBCELLULAR LOCATION</scope>
    <scope>PALMITOYLATION AT CYS-289 AND CYS-290</scope>
    <scope>MUTAGENESIS OF 289-CYS-CYS-290</scope>
</reference>
<reference key="100">
    <citation type="journal article" date="2023" name="Mol. Cell">
        <title>MORG1 limits mTORC1 signaling by inhibiting Rag GTPases.</title>
        <authorList>
            <person name="Abudu Y.P."/>
            <person name="Kournoutis A."/>
            <person name="Brenne H.B."/>
            <person name="Lamark T."/>
            <person name="Johansen T."/>
        </authorList>
    </citation>
    <scope>INTERACTION WITH WDR83</scope>
</reference>
<reference key="101">
    <citation type="journal article" date="2003" name="J. Biol. Chem.">
        <title>Structure of the ubiquitin-associated domain of p62 (SQSTM1) and implications for mutations that cause Paget's disease of bone.</title>
        <authorList>
            <person name="Ciani B."/>
            <person name="Layfield R."/>
            <person name="Cavey J.R."/>
            <person name="Sheppard P.W."/>
            <person name="Searle M.S."/>
        </authorList>
    </citation>
    <scope>STRUCTURE BY NMR OF 387-436</scope>
    <scope>CHARACTERIZATION OF VARIANT LEU-392</scope>
    <scope>DOMAIN</scope>
</reference>
<reference key="102">
    <citation type="journal article" date="2008" name="J. Biol. Chem.">
        <title>Ubiquitin recognition by the ubiquitin-associated domain of p62 involves a novel conformational switch.</title>
        <authorList>
            <person name="Long J."/>
            <person name="Gallagher T.R."/>
            <person name="Cavey J.R."/>
            <person name="Sheppard P.W."/>
            <person name="Ralston S.H."/>
            <person name="Layfield R."/>
            <person name="Searle M.S."/>
        </authorList>
    </citation>
    <scope>STRUCTURE BY NMR OF 387-436</scope>
    <scope>INTERACTION WITH UBIQUITIN</scope>
</reference>
<reference key="103">
    <citation type="journal article" date="2008" name="Proteins">
        <title>Conformation and dynamics of the three-helix bundle UBA domain of p62 from experiment and simulation.</title>
        <authorList>
            <person name="Evans C.L."/>
            <person name="Long J.E."/>
            <person name="Gallagher T.R."/>
            <person name="Hirst J.D."/>
            <person name="Searle M.S."/>
        </authorList>
    </citation>
    <scope>STRUCTURE BY NMR OF 387-436</scope>
</reference>
<reference key="104">
    <citation type="journal article" date="2010" name="J. Mol. Biol.">
        <title>Dimerisation of the UBA domain of p62 inhibits ubiquitin binding and regulates NF-kappaB signalling.</title>
        <authorList>
            <person name="Long J."/>
            <person name="Garner T.P."/>
            <person name="Pandya M.J."/>
            <person name="Craven C.J."/>
            <person name="Chen P."/>
            <person name="Shaw B."/>
            <person name="Williamson M.P."/>
            <person name="Layfield R."/>
            <person name="Searle M.S."/>
        </authorList>
    </citation>
    <scope>STRUCTURE BY NMR OF 387-436</scope>
    <scope>SUBUNIT</scope>
    <scope>FUNCTION</scope>
    <scope>MUTAGENESIS OF GLU-409 AND GLY-410</scope>
    <scope>CHARACTERIZATION OF VARIANT PDB3 ARG-425</scope>
</reference>
<reference key="105">
    <citation type="journal article" date="2002" name="Am. J. Hum. Genet.">
        <title>Recurrent mutation of the gene encoding sequestosome 1 (SQSTM1/p62) in Paget disease of bone.</title>
        <authorList>
            <person name="Laurin N."/>
            <person name="Brown J.P."/>
            <person name="Morissette J."/>
            <person name="Raymond V."/>
        </authorList>
    </citation>
    <scope>VARIANT PDB3 LEU-392</scope>
    <scope>VARIANTS VAL-117 AND GLN-274</scope>
</reference>
<reference key="106">
    <citation type="journal article" date="2002" name="Hum. Mol. Genet.">
        <title>Domain-specific mutations in sequestosome 1 (SQSTM1) cause familial and sporadic Paget's disease.</title>
        <authorList>
            <person name="Hocking L.J."/>
            <person name="Lucas G.J.A."/>
            <person name="Daroszewska A."/>
            <person name="Mangion J."/>
            <person name="Olavesen M."/>
            <person name="Cundy T."/>
            <person name="Nicholson G.C."/>
            <person name="Ward L."/>
            <person name="Bennett S.T."/>
            <person name="Wuyts W."/>
            <person name="Van Hul W."/>
            <person name="Ralston S.H."/>
        </authorList>
    </citation>
    <scope>VARIANT PDB3 LEU-392</scope>
</reference>
<reference key="107">
    <citation type="journal article" date="2003" name="J. Bone Miner. Res.">
        <title>Three novel mutations in SQSTM1 identified in familial Paget's disease of bone.</title>
        <authorList>
            <person name="Johnson-Pais T.L."/>
            <person name="Wisdom J.H."/>
            <person name="Weldon K.S."/>
            <person name="Cody J.D."/>
            <person name="Hansen M.F."/>
            <person name="Singer F.R."/>
            <person name="Leach R.J."/>
        </authorList>
    </citation>
    <scope>VARIANT PDB3 LEU-387</scope>
</reference>
<reference key="108">
    <citation type="journal article" date="2004" name="Arthritis Rheum.">
        <title>Familial Paget's disease in The Netherlands: occurrence, identification of new mutations in the sequestosome 1 gene, and their clinical associations.</title>
        <authorList>
            <person name="Eekhoff E.W.M."/>
            <person name="Karperien M."/>
            <person name="Houtsma D."/>
            <person name="Zwinderman A.H."/>
            <person name="Dragoiescu C."/>
            <person name="Kneppers A.L.J."/>
            <person name="Papapoulos S.E."/>
        </authorList>
    </citation>
    <scope>VARIANTS PDB3 LEU-392; PRO-399; THR-404 AND ARG-425</scope>
</reference>
<reference key="109">
    <citation type="journal article" date="2004" name="Bone">
        <title>Identification of SQSTM1 mutations in familial Paget's disease in Australian pedigrees.</title>
        <authorList>
            <person name="Good D.A."/>
            <person name="Busfield F."/>
            <person name="Fletcher B.H."/>
            <person name="Lovelock P.K."/>
            <person name="Duffy D.L."/>
            <person name="Kesting J.B."/>
            <person name="Andersen J."/>
            <person name="Shaw J.T.E."/>
        </authorList>
    </citation>
    <scope>VARIANT PDB3 LEU-392</scope>
</reference>
<reference key="110">
    <citation type="journal article" date="2004" name="J. Bone Miner. Res.">
        <title>Two novel mutations at exon 8 of the Sequestosome 1 (SQSTM1) gene in an Italian series of patients affected by Paget's disease of bone (PDB).</title>
        <authorList>
            <person name="Falchetti A."/>
            <person name="Di Stefano M."/>
            <person name="Marini F."/>
            <person name="Del Monte F."/>
            <person name="Mavilia C."/>
            <person name="Strigoli D."/>
            <person name="De Feo M.L."/>
            <person name="Isaia G."/>
            <person name="Masi L."/>
            <person name="Amedei A."/>
            <person name="Cioppi F."/>
            <person name="Ghinoi V."/>
            <person name="Maddali Bongi S."/>
            <person name="Di Fede G."/>
            <person name="Sferrazza C."/>
            <person name="Rini G.B."/>
            <person name="Melchiorre D."/>
            <person name="Matucci-Cerinic M."/>
            <person name="Brandi M.L."/>
        </authorList>
    </citation>
    <scope>VARIANTS PDB3 LEU-392; VAL-404 AND ARG-425</scope>
</reference>
<reference key="111">
    <citation type="journal article" date="2004" name="J. Bone Miner. Res.">
        <title>Novel UBA domain mutations of SQSTM1 in Paget's disease of bone: genotype phenotype correlation, functional analysis, and structural consequences.</title>
        <authorList>
            <person name="Hocking L.J."/>
            <person name="Lucas G.J.A."/>
            <person name="Daroszewska A."/>
            <person name="Cundy T."/>
            <person name="Nicholson G.C."/>
            <person name="Donath J."/>
            <person name="Walsh J.P."/>
            <person name="Finlayson C."/>
            <person name="Cavey J.R."/>
            <person name="Ciani B."/>
            <person name="Sheppard P.W."/>
            <person name="Searle M.S."/>
            <person name="Layfield R."/>
            <person name="Ralston S.H."/>
        </authorList>
    </citation>
    <scope>VARIANTS PDB3 VAL-404; SER-411 AND ARG-425</scope>
    <scope>CHARACTERIZATION OF VARIANTS VAL-404; SER-411 AND ARG-425</scope>
</reference>
<reference key="112">
    <citation type="journal article" date="2007" name="J. Proteome Res.">
        <title>Detection and validation of non-synonymous coding SNPs from orthogonal analysis of shotgun proteomics data.</title>
        <authorList>
            <person name="Bunger M.K."/>
            <person name="Cargile B.J."/>
            <person name="Sevinsky J.R."/>
            <person name="Deyanova E."/>
            <person name="Yates N.A."/>
            <person name="Hendrickson R.C."/>
            <person name="Stephenson J.L. Jr."/>
        </authorList>
    </citation>
    <scope>VARIANT GLU-238</scope>
    <scope>IDENTIFICATION BY MASS SPECTROMETRY</scope>
</reference>
<reference key="113">
    <citation type="journal article" date="2014" name="Acta Neuropathol.">
        <title>Rare mutations in SQSTM1 modify susceptibility to frontotemporal lobar degeneration.</title>
        <authorList>
            <person name="van der Zee J."/>
            <person name="Van Langenhove T."/>
            <person name="Kovacs G.G."/>
            <person name="Dillen L."/>
            <person name="Deschamps W."/>
            <person name="Engelborghs S."/>
            <person name="Matej R."/>
            <person name="Vandenbulcke M."/>
            <person name="Sieben A."/>
            <person name="Dermaut B."/>
            <person name="Smets K."/>
            <person name="Van Damme P."/>
            <person name="Merlin C."/>
            <person name="Laureys A."/>
            <person name="Van Den Broeck M."/>
            <person name="Mattheijssens M."/>
            <person name="Peeters K."/>
            <person name="Benussi L."/>
            <person name="Binetti G."/>
            <person name="Ghidoni R."/>
            <person name="Borroni B."/>
            <person name="Padovani A."/>
            <person name="Archetti S."/>
            <person name="Pastor P."/>
            <person name="Razquin C."/>
            <person name="Ortega-Cubero S."/>
            <person name="Hernandez I."/>
            <person name="Boada M."/>
            <person name="Ruiz A."/>
            <person name="de Mendonca A."/>
            <person name="Miltenberger-Miltenyi G."/>
            <person name="do Couto F.S."/>
            <person name="Sorbi S."/>
            <person name="Nacmias B."/>
            <person name="Bagnoli S."/>
            <person name="Graff C."/>
            <person name="Chiang H.H."/>
            <person name="Thonberg H."/>
            <person name="Perneczky R."/>
            <person name="Diehl-Schmid J."/>
            <person name="Alexopoulos P."/>
            <person name="Frisoni G.B."/>
            <person name="Bonvicini C."/>
            <person name="Synofzik M."/>
            <person name="Maetzler W."/>
            <person name="vom Hagen J.M."/>
            <person name="Schoels L."/>
            <person name="Haack T.B."/>
            <person name="Strom T.M."/>
            <person name="Prokisch H."/>
            <person name="Dols-Icardo O."/>
            <person name="Clarimon J."/>
            <person name="Lleo A."/>
            <person name="Santana I."/>
            <person name="Almeida M.R."/>
            <person name="Santiago B."/>
            <person name="Heneka M.T."/>
            <person name="Jessen F."/>
            <person name="Ramirez A."/>
            <person name="Sanchez-Valle R."/>
            <person name="Llado A."/>
            <person name="Gelpi E."/>
            <person name="Sarafov S."/>
            <person name="Tournev I."/>
            <person name="Jordanova A."/>
            <person name="Parobkova E."/>
            <person name="Fabrizi G.M."/>
            <person name="Testi S."/>
            <person name="Salmon E."/>
            <person name="Stroebel T."/>
            <person name="Santens P."/>
            <person name="Robberecht W."/>
            <person name="De Jonghe P."/>
            <person name="Martin J.J."/>
            <person name="Cras P."/>
            <person name="Vandenberghe R."/>
            <person name="De Deyn P.P."/>
            <person name="Cruts M."/>
            <person name="Sleegers K."/>
            <person name="Van Broeckhoven C."/>
        </authorList>
    </citation>
    <scope>INVOLVEMENT IN FTDALS3</scope>
    <scope>VARIANTS FTDALS3 VAL-16; VAL-33; GLU-80; MET-90; TRP-107; ASN-129; CYS-212; VAL-219; PRO-226; LEU-228; THR-232; LYS-238 DEL; ASN-258; CYS-321; GLY-329; LEU-348; LEU-387; LEU-392 AND PRO-430</scope>
    <scope>VARIANTS VAL-17; ARG-103; GLN-107; TYR-108; HIS-110; VAL-117; SER-118; GLY-119; SER-125; CYS-139; ILE-153; LEU-180; HIS-217; GLU-238; 265-SER-ARG-266 DELINS SER-ARG; ASP-274; ILE-278; VAL-308; LYS-319; GLY-334 DEL; THR-349 AND LEU-439</scope>
</reference>
<accession>Q13501</accession>
<accession>A6NFN7</accession>
<accession>B2R661</accession>
<accession>B3KUW5</accession>
<accession>Q13446</accession>
<accession>Q9BUV7</accession>
<accession>Q9BVS6</accession>
<accession>Q9UEU1</accession>
<evidence type="ECO:0000250" key="1">
    <source>
        <dbReference type="UniProtKB" id="O08623"/>
    </source>
</evidence>
<evidence type="ECO:0000250" key="2">
    <source>
        <dbReference type="UniProtKB" id="Q64337"/>
    </source>
</evidence>
<evidence type="ECO:0000255" key="3">
    <source>
        <dbReference type="PROSITE-ProRule" id="PRU00212"/>
    </source>
</evidence>
<evidence type="ECO:0000255" key="4">
    <source>
        <dbReference type="PROSITE-ProRule" id="PRU00228"/>
    </source>
</evidence>
<evidence type="ECO:0000255" key="5">
    <source>
        <dbReference type="PROSITE-ProRule" id="PRU01081"/>
    </source>
</evidence>
<evidence type="ECO:0000256" key="6">
    <source>
        <dbReference type="SAM" id="MobiDB-lite"/>
    </source>
</evidence>
<evidence type="ECO:0000269" key="7">
    <source>
    </source>
</evidence>
<evidence type="ECO:0000269" key="8">
    <source>
    </source>
</evidence>
<evidence type="ECO:0000269" key="9">
    <source>
    </source>
</evidence>
<evidence type="ECO:0000269" key="10">
    <source>
    </source>
</evidence>
<evidence type="ECO:0000269" key="11">
    <source>
    </source>
</evidence>
<evidence type="ECO:0000269" key="12">
    <source>
    </source>
</evidence>
<evidence type="ECO:0000269" key="13">
    <source>
    </source>
</evidence>
<evidence type="ECO:0000269" key="14">
    <source>
    </source>
</evidence>
<evidence type="ECO:0000269" key="15">
    <source>
    </source>
</evidence>
<evidence type="ECO:0000269" key="16">
    <source>
    </source>
</evidence>
<evidence type="ECO:0000269" key="17">
    <source>
    </source>
</evidence>
<evidence type="ECO:0000269" key="18">
    <source>
    </source>
</evidence>
<evidence type="ECO:0000269" key="19">
    <source>
    </source>
</evidence>
<evidence type="ECO:0000269" key="20">
    <source>
    </source>
</evidence>
<evidence type="ECO:0000269" key="21">
    <source>
    </source>
</evidence>
<evidence type="ECO:0000269" key="22">
    <source>
    </source>
</evidence>
<evidence type="ECO:0000269" key="23">
    <source>
    </source>
</evidence>
<evidence type="ECO:0000269" key="24">
    <source>
    </source>
</evidence>
<evidence type="ECO:0000269" key="25">
    <source>
    </source>
</evidence>
<evidence type="ECO:0000269" key="26">
    <source>
    </source>
</evidence>
<evidence type="ECO:0000269" key="27">
    <source>
    </source>
</evidence>
<evidence type="ECO:0000269" key="28">
    <source>
    </source>
</evidence>
<evidence type="ECO:0000269" key="29">
    <source>
    </source>
</evidence>
<evidence type="ECO:0000269" key="30">
    <source>
    </source>
</evidence>
<evidence type="ECO:0000269" key="31">
    <source>
    </source>
</evidence>
<evidence type="ECO:0000269" key="32">
    <source>
    </source>
</evidence>
<evidence type="ECO:0000269" key="33">
    <source>
    </source>
</evidence>
<evidence type="ECO:0000269" key="34">
    <source>
    </source>
</evidence>
<evidence type="ECO:0000269" key="35">
    <source>
    </source>
</evidence>
<evidence type="ECO:0000269" key="36">
    <source>
    </source>
</evidence>
<evidence type="ECO:0000269" key="37">
    <source>
    </source>
</evidence>
<evidence type="ECO:0000269" key="38">
    <source>
    </source>
</evidence>
<evidence type="ECO:0000269" key="39">
    <source>
    </source>
</evidence>
<evidence type="ECO:0000269" key="40">
    <source>
    </source>
</evidence>
<evidence type="ECO:0000269" key="41">
    <source>
    </source>
</evidence>
<evidence type="ECO:0000269" key="42">
    <source>
    </source>
</evidence>
<evidence type="ECO:0000269" key="43">
    <source>
    </source>
</evidence>
<evidence type="ECO:0000269" key="44">
    <source>
    </source>
</evidence>
<evidence type="ECO:0000269" key="45">
    <source>
    </source>
</evidence>
<evidence type="ECO:0000269" key="46">
    <source>
    </source>
</evidence>
<evidence type="ECO:0000269" key="47">
    <source>
    </source>
</evidence>
<evidence type="ECO:0000269" key="48">
    <source>
    </source>
</evidence>
<evidence type="ECO:0000269" key="49">
    <source>
    </source>
</evidence>
<evidence type="ECO:0000269" key="50">
    <source>
    </source>
</evidence>
<evidence type="ECO:0000269" key="51">
    <source>
    </source>
</evidence>
<evidence type="ECO:0000269" key="52">
    <source>
    </source>
</evidence>
<evidence type="ECO:0000269" key="53">
    <source>
    </source>
</evidence>
<evidence type="ECO:0000269" key="54">
    <source>
    </source>
</evidence>
<evidence type="ECO:0000269" key="55">
    <source>
    </source>
</evidence>
<evidence type="ECO:0000269" key="56">
    <source>
    </source>
</evidence>
<evidence type="ECO:0000269" key="57">
    <source>
    </source>
</evidence>
<evidence type="ECO:0000269" key="58">
    <source>
    </source>
</evidence>
<evidence type="ECO:0000269" key="59">
    <source>
    </source>
</evidence>
<evidence type="ECO:0000269" key="60">
    <source>
    </source>
</evidence>
<evidence type="ECO:0000269" key="61">
    <source>
    </source>
</evidence>
<evidence type="ECO:0000269" key="62">
    <source>
    </source>
</evidence>
<evidence type="ECO:0000269" key="63">
    <source>
    </source>
</evidence>
<evidence type="ECO:0000269" key="64">
    <source>
    </source>
</evidence>
<evidence type="ECO:0000269" key="65">
    <source>
    </source>
</evidence>
<evidence type="ECO:0000269" key="66">
    <source>
    </source>
</evidence>
<evidence type="ECO:0000269" key="67">
    <source>
    </source>
</evidence>
<evidence type="ECO:0000269" key="68">
    <source>
    </source>
</evidence>
<evidence type="ECO:0000269" key="69">
    <source>
    </source>
</evidence>
<evidence type="ECO:0000269" key="70">
    <source>
    </source>
</evidence>
<evidence type="ECO:0000269" key="71">
    <source>
    </source>
</evidence>
<evidence type="ECO:0000269" key="72">
    <source>
    </source>
</evidence>
<evidence type="ECO:0000269" key="73">
    <source>
    </source>
</evidence>
<evidence type="ECO:0000269" key="74">
    <source>
    </source>
</evidence>
<evidence type="ECO:0000269" key="75">
    <source>
    </source>
</evidence>
<evidence type="ECO:0000269" key="76">
    <source>
    </source>
</evidence>
<evidence type="ECO:0000269" key="77">
    <source>
    </source>
</evidence>
<evidence type="ECO:0000269" key="78">
    <source>
    </source>
</evidence>
<evidence type="ECO:0000269" key="79">
    <source>
    </source>
</evidence>
<evidence type="ECO:0000269" key="80">
    <source>
    </source>
</evidence>
<evidence type="ECO:0000269" key="81">
    <source>
    </source>
</evidence>
<evidence type="ECO:0000269" key="82">
    <source>
    </source>
</evidence>
<evidence type="ECO:0000269" key="83">
    <source>
    </source>
</evidence>
<evidence type="ECO:0000269" key="84">
    <source>
    </source>
</evidence>
<evidence type="ECO:0000269" key="85">
    <source>
    </source>
</evidence>
<evidence type="ECO:0000269" key="86">
    <source>
    </source>
</evidence>
<evidence type="ECO:0000269" key="87">
    <source>
    </source>
</evidence>
<evidence type="ECO:0000269" key="88">
    <source>
    </source>
</evidence>
<evidence type="ECO:0000269" key="89">
    <source>
    </source>
</evidence>
<evidence type="ECO:0000269" key="90">
    <source>
    </source>
</evidence>
<evidence type="ECO:0000269" key="91">
    <source>
    </source>
</evidence>
<evidence type="ECO:0000269" key="92">
    <source>
    </source>
</evidence>
<evidence type="ECO:0000269" key="93">
    <source>
    </source>
</evidence>
<evidence type="ECO:0000269" key="94">
    <source>
    </source>
</evidence>
<evidence type="ECO:0000269" key="95">
    <source>
    </source>
</evidence>
<evidence type="ECO:0000269" key="96">
    <source>
    </source>
</evidence>
<evidence type="ECO:0000269" key="97">
    <source>
    </source>
</evidence>
<evidence type="ECO:0000303" key="98">
    <source>
    </source>
</evidence>
<evidence type="ECO:0000303" key="99">
    <source>
    </source>
</evidence>
<evidence type="ECO:0000303" key="100">
    <source>
    </source>
</evidence>
<evidence type="ECO:0000303" key="101">
    <source>
    </source>
</evidence>
<evidence type="ECO:0000303" key="102">
    <source>
    </source>
</evidence>
<evidence type="ECO:0000303" key="103">
    <source>
    </source>
</evidence>
<evidence type="ECO:0000305" key="104"/>
<evidence type="ECO:0000312" key="105">
    <source>
        <dbReference type="HGNC" id="HGNC:11280"/>
    </source>
</evidence>
<evidence type="ECO:0000312" key="106">
    <source>
        <dbReference type="Proteomes" id="UP000005640"/>
    </source>
</evidence>
<evidence type="ECO:0007744" key="107">
    <source>
    </source>
</evidence>
<evidence type="ECO:0007744" key="108">
    <source>
    </source>
</evidence>
<evidence type="ECO:0007744" key="109">
    <source>
    </source>
</evidence>
<evidence type="ECO:0007744" key="110">
    <source>
    </source>
</evidence>
<evidence type="ECO:0007744" key="111">
    <source>
    </source>
</evidence>
<evidence type="ECO:0007744" key="112">
    <source>
    </source>
</evidence>
<evidence type="ECO:0007744" key="113">
    <source>
    </source>
</evidence>
<evidence type="ECO:0007744" key="114">
    <source>
    </source>
</evidence>
<evidence type="ECO:0007744" key="115">
    <source>
    </source>
</evidence>
<evidence type="ECO:0007744" key="116">
    <source>
    </source>
</evidence>
<evidence type="ECO:0007744" key="117">
    <source>
    </source>
</evidence>
<evidence type="ECO:0007744" key="118">
    <source>
    </source>
</evidence>
<evidence type="ECO:0007829" key="119">
    <source>
        <dbReference type="PDB" id="1Q02"/>
    </source>
</evidence>
<evidence type="ECO:0007829" key="120">
    <source>
        <dbReference type="PDB" id="2JY7"/>
    </source>
</evidence>
<evidence type="ECO:0007829" key="121">
    <source>
        <dbReference type="PDB" id="2JY8"/>
    </source>
</evidence>
<evidence type="ECO:0007829" key="122">
    <source>
        <dbReference type="PDB" id="4MJS"/>
    </source>
</evidence>
<evidence type="ECO:0007829" key="123">
    <source>
        <dbReference type="PDB" id="6KHZ"/>
    </source>
</evidence>
<evidence type="ECO:0007829" key="124">
    <source>
        <dbReference type="PDB" id="6MJ7"/>
    </source>
</evidence>
<evidence type="ECO:0007829" key="125">
    <source>
        <dbReference type="PDB" id="6TGY"/>
    </source>
</evidence>